<accession>A2ASS6</accession>
<accession>A2ASS5</accession>
<accession>A2ASS7</accession>
<dbReference type="EC" id="2.7.11.1"/>
<dbReference type="EMBL" id="AL928681">
    <property type="protein sequence ID" value="CAM27058.1"/>
    <property type="molecule type" value="Genomic_DNA"/>
</dbReference>
<dbReference type="EMBL" id="AL928721">
    <property type="protein sequence ID" value="CAM27058.1"/>
    <property type="status" value="JOINED"/>
    <property type="molecule type" value="Genomic_DNA"/>
</dbReference>
<dbReference type="EMBL" id="AL928789">
    <property type="protein sequence ID" value="CAM27058.1"/>
    <property type="status" value="JOINED"/>
    <property type="molecule type" value="Genomic_DNA"/>
</dbReference>
<dbReference type="EMBL" id="AL928681">
    <property type="protein sequence ID" value="CAM27059.1"/>
    <property type="molecule type" value="Genomic_DNA"/>
</dbReference>
<dbReference type="EMBL" id="AL928721">
    <property type="protein sequence ID" value="CAM27059.1"/>
    <property type="status" value="JOINED"/>
    <property type="molecule type" value="Genomic_DNA"/>
</dbReference>
<dbReference type="EMBL" id="AL928789">
    <property type="protein sequence ID" value="CAM27059.1"/>
    <property type="status" value="JOINED"/>
    <property type="molecule type" value="Genomic_DNA"/>
</dbReference>
<dbReference type="EMBL" id="AL928681">
    <property type="protein sequence ID" value="CAM27060.1"/>
    <property type="molecule type" value="Genomic_DNA"/>
</dbReference>
<dbReference type="EMBL" id="AL928721">
    <property type="protein sequence ID" value="CAM27060.1"/>
    <property type="status" value="JOINED"/>
    <property type="molecule type" value="Genomic_DNA"/>
</dbReference>
<dbReference type="EMBL" id="AL928721">
    <property type="protein sequence ID" value="CAM23448.1"/>
    <property type="molecule type" value="Genomic_DNA"/>
</dbReference>
<dbReference type="EMBL" id="AL928681">
    <property type="protein sequence ID" value="CAM23448.1"/>
    <property type="status" value="JOINED"/>
    <property type="molecule type" value="Genomic_DNA"/>
</dbReference>
<dbReference type="EMBL" id="AL928789">
    <property type="protein sequence ID" value="CAM23448.1"/>
    <property type="status" value="JOINED"/>
    <property type="molecule type" value="Genomic_DNA"/>
</dbReference>
<dbReference type="EMBL" id="AL928721">
    <property type="protein sequence ID" value="CAM23449.1"/>
    <property type="molecule type" value="Genomic_DNA"/>
</dbReference>
<dbReference type="EMBL" id="AL928681">
    <property type="protein sequence ID" value="CAM23449.1"/>
    <property type="status" value="JOINED"/>
    <property type="molecule type" value="Genomic_DNA"/>
</dbReference>
<dbReference type="EMBL" id="AL928789">
    <property type="protein sequence ID" value="CAM23449.1"/>
    <property type="status" value="JOINED"/>
    <property type="molecule type" value="Genomic_DNA"/>
</dbReference>
<dbReference type="EMBL" id="AL928721">
    <property type="protein sequence ID" value="CAM23450.1"/>
    <property type="molecule type" value="Genomic_DNA"/>
</dbReference>
<dbReference type="EMBL" id="AL928681">
    <property type="protein sequence ID" value="CAM23450.1"/>
    <property type="status" value="JOINED"/>
    <property type="molecule type" value="Genomic_DNA"/>
</dbReference>
<dbReference type="EMBL" id="AL928789">
    <property type="protein sequence ID" value="CAM24262.1"/>
    <property type="molecule type" value="Genomic_DNA"/>
</dbReference>
<dbReference type="EMBL" id="AL928681">
    <property type="protein sequence ID" value="CAM24262.1"/>
    <property type="status" value="JOINED"/>
    <property type="molecule type" value="Genomic_DNA"/>
</dbReference>
<dbReference type="EMBL" id="AL928721">
    <property type="protein sequence ID" value="CAM24262.1"/>
    <property type="status" value="JOINED"/>
    <property type="molecule type" value="Genomic_DNA"/>
</dbReference>
<dbReference type="EMBL" id="AL928789">
    <property type="protein sequence ID" value="CAM24263.1"/>
    <property type="molecule type" value="Genomic_DNA"/>
</dbReference>
<dbReference type="EMBL" id="AL928681">
    <property type="protein sequence ID" value="CAM24263.1"/>
    <property type="status" value="JOINED"/>
    <property type="molecule type" value="Genomic_DNA"/>
</dbReference>
<dbReference type="EMBL" id="AL928721">
    <property type="protein sequence ID" value="CAM24263.1"/>
    <property type="status" value="JOINED"/>
    <property type="molecule type" value="Genomic_DNA"/>
</dbReference>
<dbReference type="PDB" id="6YJ0">
    <property type="method" value="NMR"/>
    <property type="chains" value="A=9719-9809"/>
</dbReference>
<dbReference type="PDB" id="8Q6T">
    <property type="method" value="EM"/>
    <property type="resolution" value="18.00 A"/>
    <property type="chains" value="I/P=26390-27468"/>
</dbReference>
<dbReference type="PDBsum" id="6YJ0"/>
<dbReference type="PDBsum" id="8Q6T"/>
<dbReference type="EMDB" id="EMD-18198"/>
<dbReference type="SMR" id="A2ASS6"/>
<dbReference type="ComplexPortal" id="CPX-127">
    <property type="entry name" value="Titin-Telethonin complex"/>
</dbReference>
<dbReference type="CORUM" id="A2ASS6"/>
<dbReference type="FunCoup" id="A2ASS6">
    <property type="interactions" value="230"/>
</dbReference>
<dbReference type="IntAct" id="A2ASS6">
    <property type="interactions" value="5"/>
</dbReference>
<dbReference type="MINT" id="A2ASS6"/>
<dbReference type="STRING" id="10090.ENSMUSP00000107477"/>
<dbReference type="CarbonylDB" id="A2ASS6"/>
<dbReference type="GlyGen" id="A2ASS6">
    <property type="glycosylation" value="43 sites, 14 N-linked glycans (20 sites), 1 O-linked glycan (5 sites)"/>
</dbReference>
<dbReference type="iPTMnet" id="A2ASS6"/>
<dbReference type="PhosphoSitePlus" id="A2ASS6"/>
<dbReference type="SwissPalm" id="A2ASS6"/>
<dbReference type="jPOST" id="A2ASS6"/>
<dbReference type="PaxDb" id="10090-ENSMUSP00000097561"/>
<dbReference type="PeptideAtlas" id="A2ASS6"/>
<dbReference type="ProteomicsDB" id="259027">
    <molecule id="A2ASS6-1"/>
</dbReference>
<dbReference type="ProteomicsDB" id="259028">
    <molecule id="A2ASS6-2"/>
</dbReference>
<dbReference type="ProteomicsDB" id="259029">
    <molecule id="A2ASS6-3"/>
</dbReference>
<dbReference type="Antibodypedia" id="2056">
    <property type="antibodies" value="211 antibodies from 28 providers"/>
</dbReference>
<dbReference type="Ensembl" id="ENSMUST00000099980.10">
    <molecule id="A2ASS6-3"/>
    <property type="protein sequence ID" value="ENSMUSP00000097560.4"/>
    <property type="gene ID" value="ENSMUSG00000051747.17"/>
</dbReference>
<dbReference type="UCSC" id="uc008kfo.1">
    <molecule id="A2ASS6-2"/>
    <property type="organism name" value="mouse"/>
</dbReference>
<dbReference type="AGR" id="MGI:98864"/>
<dbReference type="MGI" id="MGI:98864">
    <property type="gene designation" value="Ttn"/>
</dbReference>
<dbReference type="VEuPathDB" id="HostDB:ENSMUSG00000051747"/>
<dbReference type="eggNOG" id="KOG0613">
    <property type="taxonomic scope" value="Eukaryota"/>
</dbReference>
<dbReference type="eggNOG" id="KOG4475">
    <property type="taxonomic scope" value="Eukaryota"/>
</dbReference>
<dbReference type="GeneTree" id="ENSGT01110000267173"/>
<dbReference type="HOGENOM" id="CLU_000001_0_2_1"/>
<dbReference type="InParanoid" id="A2ASS6"/>
<dbReference type="OMA" id="TSSWPEY"/>
<dbReference type="OrthoDB" id="6510948at2759"/>
<dbReference type="PhylomeDB" id="A2ASS6"/>
<dbReference type="TreeFam" id="TF316477"/>
<dbReference type="ChiTaRS" id="Ttn">
    <property type="organism name" value="mouse"/>
</dbReference>
<dbReference type="PRO" id="PR:A2ASS6"/>
<dbReference type="Proteomes" id="UP000000589">
    <property type="component" value="Chromosome 2"/>
</dbReference>
<dbReference type="Bgee" id="ENSMUSG00000051747">
    <property type="expression patterns" value="Expressed in vastus lateralis and 168 other cell types or tissues"/>
</dbReference>
<dbReference type="ExpressionAtlas" id="A2ASS6">
    <property type="expression patterns" value="baseline and differential"/>
</dbReference>
<dbReference type="GO" id="GO:0031672">
    <property type="term" value="C:A band"/>
    <property type="evidence" value="ECO:0000314"/>
    <property type="project" value="MGI"/>
</dbReference>
<dbReference type="GO" id="GO:0031674">
    <property type="term" value="C:I band"/>
    <property type="evidence" value="ECO:0000314"/>
    <property type="project" value="MGI"/>
</dbReference>
<dbReference type="GO" id="GO:0031430">
    <property type="term" value="C:M band"/>
    <property type="evidence" value="ECO:0000314"/>
    <property type="project" value="MGI"/>
</dbReference>
<dbReference type="GO" id="GO:0005859">
    <property type="term" value="C:muscle myosin complex"/>
    <property type="evidence" value="ECO:0000304"/>
    <property type="project" value="MGI"/>
</dbReference>
<dbReference type="GO" id="GO:0005634">
    <property type="term" value="C:nucleus"/>
    <property type="evidence" value="ECO:0007669"/>
    <property type="project" value="UniProtKB-SubCell"/>
</dbReference>
<dbReference type="GO" id="GO:0030017">
    <property type="term" value="C:sarcomere"/>
    <property type="evidence" value="ECO:0000314"/>
    <property type="project" value="MGI"/>
</dbReference>
<dbReference type="GO" id="GO:0030018">
    <property type="term" value="C:Z disc"/>
    <property type="evidence" value="ECO:0000314"/>
    <property type="project" value="MGI"/>
</dbReference>
<dbReference type="GO" id="GO:0030506">
    <property type="term" value="F:ankyrin binding"/>
    <property type="evidence" value="ECO:0000353"/>
    <property type="project" value="UniProtKB"/>
</dbReference>
<dbReference type="GO" id="GO:0005524">
    <property type="term" value="F:ATP binding"/>
    <property type="evidence" value="ECO:0007669"/>
    <property type="project" value="UniProtKB-KW"/>
</dbReference>
<dbReference type="GO" id="GO:0005516">
    <property type="term" value="F:calmodulin binding"/>
    <property type="evidence" value="ECO:0007669"/>
    <property type="project" value="UniProtKB-KW"/>
</dbReference>
<dbReference type="GO" id="GO:0046872">
    <property type="term" value="F:metal ion binding"/>
    <property type="evidence" value="ECO:0007669"/>
    <property type="project" value="UniProtKB-KW"/>
</dbReference>
<dbReference type="GO" id="GO:0106310">
    <property type="term" value="F:protein serine kinase activity"/>
    <property type="evidence" value="ECO:0007669"/>
    <property type="project" value="RHEA"/>
</dbReference>
<dbReference type="GO" id="GO:0004674">
    <property type="term" value="F:protein serine/threonine kinase activity"/>
    <property type="evidence" value="ECO:0007669"/>
    <property type="project" value="UniProtKB-KW"/>
</dbReference>
<dbReference type="GO" id="GO:0004713">
    <property type="term" value="F:protein tyrosine kinase activity"/>
    <property type="evidence" value="ECO:0000266"/>
    <property type="project" value="MGI"/>
</dbReference>
<dbReference type="GO" id="GO:0005200">
    <property type="term" value="F:structural constituent of cytoskeleton"/>
    <property type="evidence" value="ECO:0000304"/>
    <property type="project" value="MGI"/>
</dbReference>
<dbReference type="GO" id="GO:0007512">
    <property type="term" value="P:adult heart development"/>
    <property type="evidence" value="ECO:0000315"/>
    <property type="project" value="MGI"/>
</dbReference>
<dbReference type="GO" id="GO:0055008">
    <property type="term" value="P:cardiac muscle tissue morphogenesis"/>
    <property type="evidence" value="ECO:0000315"/>
    <property type="project" value="MGI"/>
</dbReference>
<dbReference type="GO" id="GO:0055003">
    <property type="term" value="P:cardiac myofibril assembly"/>
    <property type="evidence" value="ECO:0000315"/>
    <property type="project" value="MGI"/>
</dbReference>
<dbReference type="GO" id="GO:0035995">
    <property type="term" value="P:detection of muscle stretch"/>
    <property type="evidence" value="ECO:0000266"/>
    <property type="project" value="MGI"/>
</dbReference>
<dbReference type="GO" id="GO:0043056">
    <property type="term" value="P:forward locomotion"/>
    <property type="evidence" value="ECO:0000315"/>
    <property type="project" value="MGI"/>
</dbReference>
<dbReference type="GO" id="GO:0007507">
    <property type="term" value="P:heart development"/>
    <property type="evidence" value="ECO:0000270"/>
    <property type="project" value="BHF-UCL"/>
</dbReference>
<dbReference type="GO" id="GO:0060419">
    <property type="term" value="P:heart growth"/>
    <property type="evidence" value="ECO:0000315"/>
    <property type="project" value="MGI"/>
</dbReference>
<dbReference type="GO" id="GO:0003007">
    <property type="term" value="P:heart morphogenesis"/>
    <property type="evidence" value="ECO:0000315"/>
    <property type="project" value="MGI"/>
</dbReference>
<dbReference type="GO" id="GO:0001701">
    <property type="term" value="P:in utero embryonic development"/>
    <property type="evidence" value="ECO:0000315"/>
    <property type="project" value="MGI"/>
</dbReference>
<dbReference type="GO" id="GO:0006936">
    <property type="term" value="P:muscle contraction"/>
    <property type="evidence" value="ECO:0000315"/>
    <property type="project" value="MGI"/>
</dbReference>
<dbReference type="GO" id="GO:1901897">
    <property type="term" value="P:regulation of relaxation of cardiac muscle"/>
    <property type="evidence" value="ECO:0000315"/>
    <property type="project" value="BHF-UCL"/>
</dbReference>
<dbReference type="GO" id="GO:0045214">
    <property type="term" value="P:sarcomere organization"/>
    <property type="evidence" value="ECO:0000315"/>
    <property type="project" value="MGI"/>
</dbReference>
<dbReference type="GO" id="GO:0001756">
    <property type="term" value="P:somitogenesis"/>
    <property type="evidence" value="ECO:0000270"/>
    <property type="project" value="BHF-UCL"/>
</dbReference>
<dbReference type="GO" id="GO:0055002">
    <property type="term" value="P:striated muscle cell development"/>
    <property type="evidence" value="ECO:0000315"/>
    <property type="project" value="MGI"/>
</dbReference>
<dbReference type="GO" id="GO:0021591">
    <property type="term" value="P:ventricular system development"/>
    <property type="evidence" value="ECO:0000315"/>
    <property type="project" value="MGI"/>
</dbReference>
<dbReference type="CDD" id="cd00063">
    <property type="entry name" value="FN3"/>
    <property type="match status" value="132"/>
</dbReference>
<dbReference type="CDD" id="cd00096">
    <property type="entry name" value="Ig"/>
    <property type="match status" value="28"/>
</dbReference>
<dbReference type="CDD" id="cd05748">
    <property type="entry name" value="Ig_Titin_like"/>
    <property type="match status" value="26"/>
</dbReference>
<dbReference type="CDD" id="cd20974">
    <property type="entry name" value="IgI_1_Titin_Z1z2-like"/>
    <property type="match status" value="1"/>
</dbReference>
<dbReference type="CDD" id="cd20972">
    <property type="entry name" value="IgI_2_Titin_Z1z2-like"/>
    <property type="match status" value="1"/>
</dbReference>
<dbReference type="CDD" id="cd20951">
    <property type="entry name" value="IgI_titin_I1-like"/>
    <property type="match status" value="1"/>
</dbReference>
<dbReference type="CDD" id="cd05747">
    <property type="entry name" value="IgI_Titin_like"/>
    <property type="match status" value="1"/>
</dbReference>
<dbReference type="CDD" id="cd20927">
    <property type="entry name" value="IgI_Titin_M1-like"/>
    <property type="match status" value="1"/>
</dbReference>
<dbReference type="CDD" id="cd14104">
    <property type="entry name" value="STKc_Titin"/>
    <property type="match status" value="1"/>
</dbReference>
<dbReference type="FunFam" id="2.60.40.10:FF:000022">
    <property type="entry name" value="Cardiac titin"/>
    <property type="match status" value="47"/>
</dbReference>
<dbReference type="FunFam" id="2.60.40.10:FF:000800">
    <property type="entry name" value="Cardiac titin"/>
    <property type="match status" value="1"/>
</dbReference>
<dbReference type="FunFam" id="2.60.40.10:FF:000345">
    <property type="entry name" value="Muscle M-line assembly protein unc-89"/>
    <property type="match status" value="1"/>
</dbReference>
<dbReference type="FunFam" id="2.60.40.10:FF:001284">
    <property type="entry name" value="Myomesin 2"/>
    <property type="match status" value="1"/>
</dbReference>
<dbReference type="FunFam" id="2.60.40.10:FF:000147">
    <property type="entry name" value="Myosin light chain kinase"/>
    <property type="match status" value="2"/>
</dbReference>
<dbReference type="FunFam" id="2.60.40.10:FF:000107">
    <property type="entry name" value="Myosin, light chain kinase a"/>
    <property type="match status" value="3"/>
</dbReference>
<dbReference type="FunFam" id="2.60.40.10:FF:000031">
    <property type="entry name" value="Myosin-binding protein C, slow type"/>
    <property type="match status" value="7"/>
</dbReference>
<dbReference type="FunFam" id="1.10.510.10:FF:000329">
    <property type="entry name" value="Titin a"/>
    <property type="match status" value="1"/>
</dbReference>
<dbReference type="FunFam" id="2.60.40.10:FF:000002">
    <property type="entry name" value="Titin a"/>
    <property type="match status" value="32"/>
</dbReference>
<dbReference type="FunFam" id="2.60.40.10:FF:000112">
    <property type="entry name" value="Titin a"/>
    <property type="match status" value="8"/>
</dbReference>
<dbReference type="FunFam" id="2.60.40.10:FF:000135">
    <property type="entry name" value="Titin a"/>
    <property type="match status" value="6"/>
</dbReference>
<dbReference type="FunFam" id="2.60.40.10:FF:000160">
    <property type="entry name" value="Titin a"/>
    <property type="match status" value="1"/>
</dbReference>
<dbReference type="FunFam" id="2.60.40.10:FF:000547">
    <property type="entry name" value="Titin a"/>
    <property type="match status" value="2"/>
</dbReference>
<dbReference type="FunFam" id="2.60.40.10:FF:000672">
    <property type="entry name" value="Titin a"/>
    <property type="match status" value="1"/>
</dbReference>
<dbReference type="FunFam" id="2.60.40.10:FF:000673">
    <property type="entry name" value="Titin a"/>
    <property type="match status" value="1"/>
</dbReference>
<dbReference type="FunFam" id="2.60.40.10:FF:000811">
    <property type="entry name" value="Titin a"/>
    <property type="match status" value="1"/>
</dbReference>
<dbReference type="FunFam" id="2.60.40.10:FF:000867">
    <property type="entry name" value="Titin a"/>
    <property type="match status" value="1"/>
</dbReference>
<dbReference type="FunFam" id="2.60.40.10:FF:000891">
    <property type="entry name" value="Titin a"/>
    <property type="match status" value="1"/>
</dbReference>
<dbReference type="FunFam" id="2.60.40.10:FF:000900">
    <property type="entry name" value="Titin a"/>
    <property type="match status" value="1"/>
</dbReference>
<dbReference type="FunFam" id="2.60.40.10:FF:000981">
    <property type="entry name" value="Titin a"/>
    <property type="match status" value="1"/>
</dbReference>
<dbReference type="FunFam" id="2.60.40.10:FF:001200">
    <property type="entry name" value="Titin a"/>
    <property type="match status" value="1"/>
</dbReference>
<dbReference type="FunFam" id="2.60.40.10:FF:001399">
    <property type="entry name" value="Titin a"/>
    <property type="match status" value="1"/>
</dbReference>
<dbReference type="FunFam" id="2.60.40.10:FF:001400">
    <property type="entry name" value="Titin a"/>
    <property type="match status" value="1"/>
</dbReference>
<dbReference type="FunFam" id="2.60.40.10:FF:001459">
    <property type="entry name" value="Titin a"/>
    <property type="match status" value="1"/>
</dbReference>
<dbReference type="FunFam" id="2.60.40.10:FF:001500">
    <property type="entry name" value="Titin a"/>
    <property type="match status" value="1"/>
</dbReference>
<dbReference type="FunFam" id="2.60.40.10:FF:001579">
    <property type="entry name" value="Titin a"/>
    <property type="match status" value="1"/>
</dbReference>
<dbReference type="FunFam" id="2.60.40.10:FF:001697">
    <property type="entry name" value="Titin a"/>
    <property type="match status" value="1"/>
</dbReference>
<dbReference type="FunFam" id="3.30.200.20:FF:000286">
    <property type="entry name" value="Titin a"/>
    <property type="match status" value="1"/>
</dbReference>
<dbReference type="FunFam" id="2.60.40.10:FF:000011">
    <property type="entry name" value="Titin b"/>
    <property type="match status" value="11"/>
</dbReference>
<dbReference type="FunFam" id="2.60.40.10:FF:000629">
    <property type="entry name" value="Titin b"/>
    <property type="match status" value="1"/>
</dbReference>
<dbReference type="FunFam" id="2.60.40.10:FF:000635">
    <property type="entry name" value="Titin b"/>
    <property type="match status" value="1"/>
</dbReference>
<dbReference type="FunFam" id="2.60.40.10:FF:000779">
    <property type="entry name" value="Titin b"/>
    <property type="match status" value="1"/>
</dbReference>
<dbReference type="FunFam" id="2.60.40.10:FF:000833">
    <property type="entry name" value="Titin b"/>
    <property type="match status" value="1"/>
</dbReference>
<dbReference type="FunFam" id="2.60.40.10:FF:000859">
    <property type="entry name" value="Titin b"/>
    <property type="match status" value="1"/>
</dbReference>
<dbReference type="FunFam" id="2.60.40.10:FF:000864">
    <property type="entry name" value="Titin b"/>
    <property type="match status" value="1"/>
</dbReference>
<dbReference type="FunFam" id="2.60.40.10:FF:000901">
    <property type="entry name" value="Titin b"/>
    <property type="match status" value="1"/>
</dbReference>
<dbReference type="FunFam" id="2.60.40.10:FF:000980">
    <property type="entry name" value="Titin b"/>
    <property type="match status" value="2"/>
</dbReference>
<dbReference type="FunFam" id="2.60.40.10:FF:000986">
    <property type="entry name" value="Titin b"/>
    <property type="match status" value="1"/>
</dbReference>
<dbReference type="FunFam" id="2.60.40.10:FF:001115">
    <property type="entry name" value="Titin b"/>
    <property type="match status" value="1"/>
</dbReference>
<dbReference type="FunFam" id="2.60.40.10:FF:001190">
    <property type="entry name" value="Titin b"/>
    <property type="match status" value="1"/>
</dbReference>
<dbReference type="FunFam" id="2.60.40.10:FF:001477">
    <property type="entry name" value="Titin b"/>
    <property type="match status" value="1"/>
</dbReference>
<dbReference type="FunFam" id="2.60.40.10:FF:000034">
    <property type="entry name" value="Titin isoform A"/>
    <property type="match status" value="26"/>
</dbReference>
<dbReference type="FunFam" id="2.60.40.10:FF:000050">
    <property type="entry name" value="Titin isoform B"/>
    <property type="match status" value="8"/>
</dbReference>
<dbReference type="FunFam" id="2.60.40.10:FF:000003">
    <property type="entry name" value="Titin isoform E"/>
    <property type="match status" value="21"/>
</dbReference>
<dbReference type="FunFam" id="2.60.40.10:FF:000012">
    <property type="entry name" value="titin isoform X1"/>
    <property type="match status" value="27"/>
</dbReference>
<dbReference type="FunFam" id="2.60.40.10:FF:000073">
    <property type="entry name" value="titin isoform X1"/>
    <property type="match status" value="5"/>
</dbReference>
<dbReference type="FunFam" id="2.60.40.10:FF:000127">
    <property type="entry name" value="titin isoform X1"/>
    <property type="match status" value="4"/>
</dbReference>
<dbReference type="FunFam" id="2.60.40.10:FF:000148">
    <property type="entry name" value="titin isoform X1"/>
    <property type="match status" value="4"/>
</dbReference>
<dbReference type="FunFam" id="2.60.40.10:FF:000214">
    <property type="entry name" value="titin isoform X1"/>
    <property type="match status" value="8"/>
</dbReference>
<dbReference type="FunFam" id="2.60.40.10:FF:000218">
    <property type="entry name" value="titin isoform X1"/>
    <property type="match status" value="3"/>
</dbReference>
<dbReference type="FunFam" id="2.60.40.10:FF:000659">
    <property type="entry name" value="titin isoform X1"/>
    <property type="match status" value="1"/>
</dbReference>
<dbReference type="FunFam" id="2.60.40.10:FF:000697">
    <property type="entry name" value="titin isoform X1"/>
    <property type="match status" value="1"/>
</dbReference>
<dbReference type="FunFam" id="2.60.40.10:FF:000770">
    <property type="entry name" value="titin isoform X1"/>
    <property type="match status" value="1"/>
</dbReference>
<dbReference type="FunFam" id="2.60.40.10:FF:000792">
    <property type="entry name" value="titin isoform X1"/>
    <property type="match status" value="2"/>
</dbReference>
<dbReference type="FunFam" id="2.60.40.10:FF:000983">
    <property type="entry name" value="titin isoform X1"/>
    <property type="match status" value="1"/>
</dbReference>
<dbReference type="FunFam" id="2.60.40.10:FF:001003">
    <property type="entry name" value="titin isoform X1"/>
    <property type="match status" value="1"/>
</dbReference>
<dbReference type="FunFam" id="2.60.40.10:FF:001213">
    <property type="entry name" value="titin isoform X1"/>
    <property type="match status" value="1"/>
</dbReference>
<dbReference type="FunFam" id="2.60.40.10:FF:001229">
    <property type="entry name" value="titin isoform X1"/>
    <property type="match status" value="1"/>
</dbReference>
<dbReference type="FunFam" id="2.60.40.10:FF:001272">
    <property type="entry name" value="titin isoform X1"/>
    <property type="match status" value="1"/>
</dbReference>
<dbReference type="FunFam" id="2.60.40.10:FF:001327">
    <property type="entry name" value="titin isoform X1"/>
    <property type="match status" value="1"/>
</dbReference>
<dbReference type="FunFam" id="2.60.40.10:FF:001328">
    <property type="entry name" value="titin isoform X1"/>
    <property type="match status" value="1"/>
</dbReference>
<dbReference type="FunFam" id="2.60.40.10:FF:001342">
    <property type="entry name" value="titin isoform X1"/>
    <property type="match status" value="1"/>
</dbReference>
<dbReference type="FunFam" id="2.60.40.10:FF:001343">
    <property type="entry name" value="titin isoform X1"/>
    <property type="match status" value="1"/>
</dbReference>
<dbReference type="FunFam" id="2.60.40.10:FF:001344">
    <property type="entry name" value="titin isoform X1"/>
    <property type="match status" value="1"/>
</dbReference>
<dbReference type="FunFam" id="2.60.40.10:FF:001345">
    <property type="entry name" value="titin isoform X1"/>
    <property type="match status" value="1"/>
</dbReference>
<dbReference type="FunFam" id="2.60.40.10:FF:001350">
    <property type="entry name" value="titin isoform X1"/>
    <property type="match status" value="1"/>
</dbReference>
<dbReference type="FunFam" id="2.60.40.10:FF:001365">
    <property type="entry name" value="titin isoform X1"/>
    <property type="match status" value="1"/>
</dbReference>
<dbReference type="FunFam" id="2.60.40.10:FF:001367">
    <property type="entry name" value="titin isoform X1"/>
    <property type="match status" value="1"/>
</dbReference>
<dbReference type="FunFam" id="2.60.40.10:FF:001382">
    <property type="entry name" value="titin isoform X1"/>
    <property type="match status" value="1"/>
</dbReference>
<dbReference type="FunFam" id="2.60.40.10:FF:001385">
    <property type="entry name" value="titin isoform X1"/>
    <property type="match status" value="1"/>
</dbReference>
<dbReference type="FunFam" id="2.60.40.10:FF:001408">
    <property type="entry name" value="titin isoform X1"/>
    <property type="match status" value="1"/>
</dbReference>
<dbReference type="FunFam" id="2.60.40.10:FF:001430">
    <property type="entry name" value="titin isoform X1"/>
    <property type="match status" value="1"/>
</dbReference>
<dbReference type="FunFam" id="2.60.40.10:FF:001434">
    <property type="entry name" value="titin isoform X1"/>
    <property type="match status" value="1"/>
</dbReference>
<dbReference type="FunFam" id="2.60.40.10:FF:001454">
    <property type="entry name" value="titin isoform X1"/>
    <property type="match status" value="1"/>
</dbReference>
<dbReference type="FunFam" id="2.60.40.10:FF:001476">
    <property type="entry name" value="titin isoform X1"/>
    <property type="match status" value="1"/>
</dbReference>
<dbReference type="FunFam" id="2.60.40.10:FF:001544">
    <property type="entry name" value="titin isoform X1"/>
    <property type="match status" value="1"/>
</dbReference>
<dbReference type="FunFam" id="2.60.40.10:FF:001581">
    <property type="entry name" value="titin isoform X1"/>
    <property type="match status" value="1"/>
</dbReference>
<dbReference type="FunFam" id="2.60.40.10:FF:001610">
    <property type="entry name" value="titin isoform X1"/>
    <property type="match status" value="1"/>
</dbReference>
<dbReference type="FunFam" id="2.60.40.10:FF:001612">
    <property type="entry name" value="titin isoform X1"/>
    <property type="match status" value="1"/>
</dbReference>
<dbReference type="FunFam" id="2.60.40.10:FF:001663">
    <property type="entry name" value="titin isoform X1"/>
    <property type="match status" value="1"/>
</dbReference>
<dbReference type="FunFam" id="2.60.40.10:FF:000714">
    <property type="entry name" value="Titin novex-3"/>
    <property type="match status" value="3"/>
</dbReference>
<dbReference type="FunFam" id="2.60.40.10:FF:001082">
    <property type="entry name" value="Titin novex-3"/>
    <property type="match status" value="1"/>
</dbReference>
<dbReference type="FunFam" id="2.60.40.10:FF:001089">
    <property type="entry name" value="Titin novex-3"/>
    <property type="match status" value="1"/>
</dbReference>
<dbReference type="FunFam" id="2.60.40.10:FF:001098">
    <property type="entry name" value="Titin novex-3"/>
    <property type="match status" value="1"/>
</dbReference>
<dbReference type="FunFam" id="2.60.40.10:FF:001804">
    <property type="entry name" value="Titin, isoform CRA_a"/>
    <property type="match status" value="1"/>
</dbReference>
<dbReference type="FunFam" id="2.60.40.10:FF:001844">
    <property type="entry name" value="Titin, isoform CRA_a"/>
    <property type="match status" value="1"/>
</dbReference>
<dbReference type="FunFam" id="2.60.40.10:FF:002231">
    <property type="entry name" value="Titin, isoform CRA_a"/>
    <property type="match status" value="1"/>
</dbReference>
<dbReference type="FunFam" id="2.60.40.10:FF:002123">
    <property type="entry name" value="Titin, tandem duplicate 1"/>
    <property type="match status" value="1"/>
</dbReference>
<dbReference type="Gene3D" id="2.60.40.10">
    <property type="entry name" value="Immunoglobulins"/>
    <property type="match status" value="299"/>
</dbReference>
<dbReference type="Gene3D" id="3.30.200.20">
    <property type="entry name" value="Phosphorylase Kinase, domain 1"/>
    <property type="match status" value="1"/>
</dbReference>
<dbReference type="Gene3D" id="1.10.510.10">
    <property type="entry name" value="Transferase(Phosphotransferase) domain 1"/>
    <property type="match status" value="1"/>
</dbReference>
<dbReference type="InterPro" id="IPR003961">
    <property type="entry name" value="FN3_dom"/>
</dbReference>
<dbReference type="InterPro" id="IPR036116">
    <property type="entry name" value="FN3_sf"/>
</dbReference>
<dbReference type="InterPro" id="IPR007110">
    <property type="entry name" value="Ig-like_dom"/>
</dbReference>
<dbReference type="InterPro" id="IPR036179">
    <property type="entry name" value="Ig-like_dom_sf"/>
</dbReference>
<dbReference type="InterPro" id="IPR013783">
    <property type="entry name" value="Ig-like_fold"/>
</dbReference>
<dbReference type="InterPro" id="IPR013098">
    <property type="entry name" value="Ig_I-set"/>
</dbReference>
<dbReference type="InterPro" id="IPR003599">
    <property type="entry name" value="Ig_sub"/>
</dbReference>
<dbReference type="InterPro" id="IPR003598">
    <property type="entry name" value="Ig_sub2"/>
</dbReference>
<dbReference type="InterPro" id="IPR013106">
    <property type="entry name" value="Ig_V-set"/>
</dbReference>
<dbReference type="InterPro" id="IPR011009">
    <property type="entry name" value="Kinase-like_dom_sf"/>
</dbReference>
<dbReference type="InterPro" id="IPR040849">
    <property type="entry name" value="MyBP-C_THB"/>
</dbReference>
<dbReference type="InterPro" id="IPR004168">
    <property type="entry name" value="PPAK_motif"/>
</dbReference>
<dbReference type="InterPro" id="IPR000719">
    <property type="entry name" value="Prot_kinase_dom"/>
</dbReference>
<dbReference type="InterPro" id="IPR015129">
    <property type="entry name" value="Titin_Z_rpt"/>
</dbReference>
<dbReference type="InterPro" id="IPR008266">
    <property type="entry name" value="Tyr_kinase_AS"/>
</dbReference>
<dbReference type="PANTHER" id="PTHR14340">
    <property type="entry name" value="MICROFIBRIL-ASSOCIATED GLYCOPROTEIN 3"/>
    <property type="match status" value="1"/>
</dbReference>
<dbReference type="PANTHER" id="PTHR14340:SF13">
    <property type="entry name" value="TITIN"/>
    <property type="match status" value="1"/>
</dbReference>
<dbReference type="Pfam" id="PF00041">
    <property type="entry name" value="fn3"/>
    <property type="match status" value="132"/>
</dbReference>
<dbReference type="Pfam" id="PF07679">
    <property type="entry name" value="I-set"/>
    <property type="match status" value="162"/>
</dbReference>
<dbReference type="Pfam" id="PF00069">
    <property type="entry name" value="Pkinase"/>
    <property type="match status" value="1"/>
</dbReference>
<dbReference type="Pfam" id="PF02818">
    <property type="entry name" value="PPAK"/>
    <property type="match status" value="10"/>
</dbReference>
<dbReference type="Pfam" id="PF18362">
    <property type="entry name" value="THB"/>
    <property type="match status" value="1"/>
</dbReference>
<dbReference type="Pfam" id="PF09042">
    <property type="entry name" value="Titin_Z"/>
    <property type="match status" value="2"/>
</dbReference>
<dbReference type="SMART" id="SM00060">
    <property type="entry name" value="FN3"/>
    <property type="match status" value="132"/>
</dbReference>
<dbReference type="SMART" id="SM00409">
    <property type="entry name" value="IG"/>
    <property type="match status" value="167"/>
</dbReference>
<dbReference type="SMART" id="SM00408">
    <property type="entry name" value="IGc2"/>
    <property type="match status" value="149"/>
</dbReference>
<dbReference type="SMART" id="SM00406">
    <property type="entry name" value="IGv"/>
    <property type="match status" value="23"/>
</dbReference>
<dbReference type="SUPFAM" id="SSF49265">
    <property type="entry name" value="Fibronectin type III"/>
    <property type="match status" value="74"/>
</dbReference>
<dbReference type="SUPFAM" id="SSF48726">
    <property type="entry name" value="Immunoglobulin"/>
    <property type="match status" value="167"/>
</dbReference>
<dbReference type="SUPFAM" id="SSF56112">
    <property type="entry name" value="Protein kinase-like (PK-like)"/>
    <property type="match status" value="1"/>
</dbReference>
<dbReference type="PROSITE" id="PS50853">
    <property type="entry name" value="FN3"/>
    <property type="match status" value="132"/>
</dbReference>
<dbReference type="PROSITE" id="PS50835">
    <property type="entry name" value="IG_LIKE"/>
    <property type="match status" value="144"/>
</dbReference>
<dbReference type="PROSITE" id="PS50011">
    <property type="entry name" value="PROTEIN_KINASE_DOM"/>
    <property type="match status" value="1"/>
</dbReference>
<name>TITIN_MOUSE</name>
<sequence>MTTQAPMFTQPLQSVVVLEGSTATFEAHVSGSPVPEVSWFRDGQVISTSTLPGVQISFSDGRARLMIPAVTKANSGRYSLRATNGSGQATSTAELLVTAETAPPNFSQRLQSMTVRQGSQVRLQVRVTGIPTPVVKFYRDGAEIQSSLDFQISQEGDLYSLLIAEAYPEDSGTYSVNATNSVGRATSTAELVVQGEEVVPAKKTKTIVSTAQISETRQTRIEKKIEAHFDARSIATVEMVIDGATGQLPHKTPPRIPPKPKSRSPTPPSIAAKAQLARQQSPSPIRHSPSPVRHVRAPTPSPVRSVSPAGRISTSPIRSVKSPLLIRKTQTTTMATGPEVPPPWKQEGYVASSTEAEMRETTMTSSTQIRREERWEGRYGVQEQVTISGAAAAAASASVSSSFTAGAITTGTKEVKQETDKSAAVATVVAAVDMARVREPAISAVEQTAQRTTTTAVHIQPAQEQARKEAEKTAVTKVVVAADKAKEQELKSRTREVMVTTQEQTHISHEQIRKETEKAFVPKVVISATKAKEQETRITGEITTKQEQKRITQETIRQETEEIAASMVVVATAKSTKLEAAVGVQEETAIQQDQMHLTHEQMMKETRKTVVPKVIVATPKIKEQDLVSRSREAITTKRDQVQITQEKKRKEVETTALSTIAVATAKAKEQETVLRSREAMATRQEHIQVTHGQVGVGKKAEAVATVVAAVDQARVREPREPTHVEESHSQQTTLEYGYKEHISTTKVPEQPRRPASEPHVVPQAVKPAVIQAPSETHIKTTDQMGMHISSQVKKTTDISTERLVHVDKRPRTASPHFTVSKISVPKTEHGYEASIAGSAIATLQKELSATSSTQKITKSVKAPTVKPGETRVRAEPTPSPQFPFADMPPPDTYKSQAGIEVKKEVGVSISGSTVREEHFEVLRGREAKVTETARVPAPAEVPVTPPTLVSGLKNVTVIEGESVTLECHISGYPSPKVTWYREDYQIESSIDFQITFQGGIARLMIREAFAEDSGRFTCSAVNEAGTVSTSCYLAVQVSEEFDKETTLTEKFATEEKRFVESRDVVMTDTSITEEQAGPGEPAAPFFISKPVVQKLVEGGSVVFECQIGGNPKPHVYWKKSGVPLTTGYRYKVSYNKQTGECRLVISMTFADDAGEYTIVIRNKHGETSASASLLEEADYEALVKTQQEMLYQTQMSTFIQEPKVGEIAPGFAYSEYEKEYEKEQALIRKKMAKDTVMVRTFVEDQEFHISSFEERLIKEIEYRIIKTTLEELLEEDGEEKMAVDISESEAIESGFDIRIKNYRILEGMGVTFHCKMSGYPLPKIAWYKDGKRIRHGERYQMDFLQDGRASLRIPVVLPEDEGIYTAFASNIKGNAICSGKLYVEPAAPFSAPTYMPTPEAVSRIRSVSPRSLSRSPIRMSPAMSPARMSPARMSPARMSPARMSPGRRLEETDESQLERLYKPVFVLKPASFKCLEGQTARFDLKVVGRPMPETFWFHNGQQIVNDYTHKVVIKEDGTQSLIIVPASPSDSGEWTVVAQNRAGKSTISVTLTVEAVEHQIKPAFVEKLKNVNIKEGSRLEMKVRATGNPNPDIVWLKNSDIIVPHKYPRIRIEGTRGEAALKIDSIISQDSAWYTATAINKAGRDTTRCKVNVEVEFAEPEPERKLIIPRGTYRAKEIAAPELEPLHLRYGQEQWEEGDLYDKEKQQKPFFKKKLTSLRLKRFGPAHFECRLTPIGDPTMVVEWLHDGKPLEAANRLRMINEFGYCSLDYGAAYSRDSGVITCRATNKYGTDHTSATLIVKDEKSLVEESQLPDGKKGLQRIEELERMAHEGALTGVTTDQKEKQKPDIVLFPEPVRVLEGETARFRCRVTGYPQPKVNWYLNGQLIRKSKRFRVRYDGIHYLDIVDCKSYDTGEVKVTAENPEGVTEHKVKLEIQQREDFRSVLRRAPEPKPEFHVHEPGKLQFEVQKVDRPVDTSETKEVVKLKRAERITHEKVSEESEELRSKFKRRTEEGYYEAITAVELKSRKKDESYEELLKKTKDELLHWTKELTEEEKKALAEEGKITIPTFKPERIELSPSMEAPKIFERIQSQTVGQGSDAHFRVRVVGKPDPECEWYKNGVKIERSDRIYWYWPEDNVCELVIRDVTAEDSASIMVKAINIAGETSSHAFLLVQAKQLITFTQELQDVVAKEKDTMATFECETSEPFIKVKWYKDGIEVHAGDKYRMHSDRKVHFLSVLTIDTSDAEDYSCVLVEDENIKTTAKLIVEGAVVEFVKELQDIEVPESYSGELECIISPENIEGKWYHNDVELKSNGKYSITSRRGRQNLTVKDVTKEDQGEYSFVVDGKKTTCKLKMKPRPIAILQGLSDQKVCEGDIVQLEVKVSLENVEGVWMKDGQEVQHSDRVHIVIDKQSHMLLIEDMTKEDAGNYSFTIPALGLSTSGNVSVYSVDVITPLKDVNVIEGTKAVLECKVSVPDVTSVKWYLNDEQIKPDDRVQSIVKGTKQRLVINRTHASDEGPYKLMVGRVETSCNLSVEKIKIIRGLRDLTCTETQNVVFEVELSHSGIDVVWNFKGKEIKPSSKYKIEAHGKIYKLTVLNMMKDDEGEYAFYAGENTTSGKLTVAGGAISTPLTDQTVAESQEAVFECEVANPESEGEWLKDGKHLALSNNFRGESDGHKRRLVIAAAKLDDAGEYTYKVATSKTSAKLKVEAVKIKKTLRNLTVTETQDAVFSVELTHPDVKGVQWIKNGVVLDSNDKYEISVKGTLYSLKIKNCAMADESVYGFKLGRLGASARLHVETVKIIKKPKDVTALENATVTFEVSVSHDTVPVKWFHKNVEIKPSDKHRLVSERKVHKLMLQSISPSDAGEYTAMVGQLECKAKLFVETLHITKTMKSIEVPETKAASFECEVSHFNVPSMWLKNGVEIEMSEKFKIVVQGKLHQLIIMNTSTEDSAEYTFVCGNDQVSATLTVTPIMITSMLKDINAEEKDTITFEVTVNYEGISYKWLKNGVEIKSTDRCQMRTKKLTHSLNIRNVHFGDAADYTFVAGKATSTATLYVEARHIEFRKHIKDIKVLEKKRAMFECEVSEPDITVQWMKDGQELQIADRIKIQKEKYVHRLLIPSTRMSDAGKYTVVAGGNMSTANLFVEGRDVRIRSIKKEVQVIEKQRAVVEFEVNEDDVDAHWYKDGIEINFQVQERHQYVVERRIHRMFISETRHSDAGEYTFVAGRNRSSVTLYVNAPEPPQVLQELQPVTVQSGKPARFCAVISGRPQPKISWYKEEQLLSTGFKCKFLHDGQEYTLLLIEAFPEDAAVYTCEAKNDYGVATTSASLSVEVPEVVSPDQEMPVYPPAIVTPLQDTVTSEGRPARFQCQVSGTDLKVSWYCKDKKIKPSRFFRMTQFEDTYQLEIAEAYPEDEGTYAFVANNAVGQVSSTATLRLEAPESILHERIGQQIEMEMKEIASLLSAEEDFQTYSSDLRLPNANETLELLSEPPARSTQFDSRQEGAAPVFIREISDVEISVEDVAKLSVTVTGCPKPKIQWFFNGMLLTPSADYKFVFDGDTHSLIILFTRFQDEGEYTCLASNEYGKAVCSAHLRISPRGERSTEMESGEKKALEKPKGPCPPYFFKELKPVHCGPGIPAVFEYSVHGEPAPTVLWFKEDMPLYTSVCYTIIHSPDGSGTFIVNDPQRGDSGLYLCKAQNLWGESTCAAELLVLPEDTDVPDASCKEESTLGVPGDFLETSARGPLVQGVDSRQEITAFAEGTISKAALIAEETLQLSYERSVDDSEVGTGVTIGAQKLPPVVLSTPQGTGELPSIDGAVHTQPGRGPPPTLNLQAVQAQTTLPKEATLQFEEPEGVFPGASSAAQVSPVTIKPLITLTAEPKGNYPQSSTAAPDHALLSSVAAETLQLGEKKIPEVDKAQRALLLSQSLAEGCVESLEVPDVAVSNMRSEPQVPFQHTCTEGKILMASADTLKSTGQDVALRTEEGKSLSFPLALEEKQVLLKEEQSEVVAVPTSQTSKSEKEPEAIKGVKEVREQELLSKETLFPSMPEEQRLHLKTQVRRALQAAVAREQANLFSEWLRNIDKVEVTAVNFTQEPKRILCTYLITSVSSLTEELTVTIEDIDPQMANLETGLKDALCSIVCEERNILMAEDPRIHEEDKIDVQGGRDHLSDAQKVETVIEAEADSKYLVSKEEVSWSKVESQLKDGDTNEVPQAETLKLAEESGTQKTSTEMSQEEAEGTLADLCPAVLKHLVDTISEEGDTVHLTSSISNAKEVHWYFKGNLVPSDGKFKCLKEQNAYTLVIEAVKTEDEGEYVCEASNDSGKAKTSAKLTVGERAAPVIKRRIEPLEVALGHLAKFTCEIQGAPNVRFQWFKAGREIYESDKCSIRSSNYVSSLEILRTQVVDCGEYTCKASNEYGSVSCTATLTVTEAYPPTFLSRPKALTTFVGKAAKFLCTVSGTPVIEIIWQKDGAALSPSPDCRVTDADNKHSLELSNLTVQDRGIYSCKASNKFGADICQAELTIIDKPHFIKELEAVQSAINKKIHLECQVDEDRKVTITWSKDGQKLPAGKDYKIYFEDKIASLEIPLAKLKDSGTYTCTASNEAGSSSSSAAVAVREPPSFVKKVDPSYLMLPGESARLHCKLKGSPVIQVTWFKNNKELSESNTVRMSFVNSEAILDITDVKVDDSGTYSCEATNDVGSDSCSTEVVIKEPPSFIKTLEPADIVRGANALLQCEIAGTGPFEVNWFKDKKQIRSSKKYRLFTQKTFVYLEISSFNSADVGDYECVVANEVGKCGCVATHLLKEPPTFVKKVDDFTALAGQTVTLQAAVRGSEPISVMWMKGQEVIKEDGKIKMSFSNGVAVLTIPDVQISLGGKYTCLAENEAGSQTSVGELIVKEPAKIIERAELIQVTAGDPATLEYTVSGTPELKPKWYKDGRPLVASKKYRISFKNNIAQLKFYSAELHDSGQYTFEISNEVGSSSCETTFTVLDRDIAPLFTKPLRNVDSVVGGACRLDCKIAGSLPMRVSWFKDGKELTASDRYQIAFVEGTASLEISRVDMNDAGNFTCRATNSVGSKDSSGALIVQEPPSFVTKPGSRDVLPGSAVCLKSAFQGSAPLTIKWFKGDKELVSGGSCYITKETSESSLELYAVKTSDSGTYTCKVSNVAGSVECSADLFVKEPATFIEKLEPSQLLKKGDGTQLACKVTGTPPIKITWFANDRELRESSKHKMSFAESTAVLRLTDVAIEDSGEYMCEAQNEAGSDHCTGIVIVKESPYFTKEFKSIEVLKEYDVMLLAEVAGTPPFEITWFKDNTTLRSGRKYKTFLQDQLVSLQVLKFVAADAGEYQCRVTNEVGSSTCSARVTLREPPSFIKKIEATSSLRGGTAAFQATLKGSLPITVTWLKDNDEITEDDNIRMTFENNVASLYLSGIEVKHDGKYVCQAKNDAGIQRCSALLSVKEPATIMEEAVSIDVTQGDPATLQVKFSGTKEISAKWFKDGQELTLGPKYKISVTDTVSILKIISTEKKDSGEYTFEVQNDVGRSSCKASINVLDLIIPPSFTKKLRKMDSIKGSFIDLECIVAGSHPISIQWFKDDQEISASDKHKFSFHDNTAFLEISQLEGTDSGTYTCSATNKAGHSQCSGHLTVKEPPYFVEKPQSQDVNPGTRVQLKALVGGTAPMTIKWFKDNKELHPGAARSVWKDDTSTILELFSAKAADSGTYICQLSNDVGTTSSKATIFVKEPPQFIKKPSPVLVLRNGQSTTFECQVTGTPEIRVSWYLDGNEITDLRKYGISFVDGLATFQISNARVENSGTYVCEARNDAGTASCSIELKVKEPPIFIRELEPVEVVKDSDVELECEVMGTTPFEVTWLKNNKEIRSGKKYTMSEKMSVFYLHITKCDPSDVGEYQCIIANEGGSCACSARVALKEPPSFIKKIENVTTVLKSSATFQSTVAGSPPISITWLKDDQILEENDNVHISFEDSVATLQVRSVDNGHSGRYTCQAKNESGIERCYAFLLVQEPAQIIEKAKSVDVTEKDPVTLECVVAGTPELKVKWLKDGKQIVPSRYFSMSFENNVASFRIQSVMKQDSGQYTFKVENDFGSSSCDAYLRVLDQDIPPSFTKKLTKMDKVLGSSIHMECKVSGSLPISAQWFKDGKEISTSAKYRLVCHENTVSLEVSNLELEDTANYTCKVSNVAGDNACSGILTVKEPPSFLVKPERQQAIPDSTVEFKAVLKGTPPFKIKWLKDDVELVSGPKCFIGLEGSTSFLNLYSVDSSKTGQYTCQVTNDVGSDSCTTMLLVTEPPKFVKKLEASKIIKAGDSARLECKITGSPEIQVVWYRNEHELTASDKYQMTFIDSVAVIQMNSLGTEDSGDFICEAQNPAGSTSCSTKVIVKEPPVFSSFPPIVETLKNTEVSLECELSGTPPFEVVWYKDKRQLRSSKKYKVASKNFHASIHILNVESTDIGEYHCKAQNEVGSDACVCAVKLKEPPKFISKLNSLTVVAGEPAELQASIEGAQPISVQWLKEKEEVIRESENIRISFVNNVATLQFAKVEPANAGKYICQVKNDGGVRENMATLTVLEPAVIIEKAGSMTVTVGETCALECKVAGTPELSVEWYKDGKLLTSSQKHKFSFYNKISSLKILSVEKEDAGTYTFQVQNNVGKSSCTAVVDVSDRMVPPSFTRRLKDTGGVLGTSCILECKVAGSSPISIAWFHEKTKIVSGAKYQTTFSDNVCTLQLNSLDSSDMGSYTCVAANVAGSDECRALLTVQEPPSFVKEPEPLEVLPGKNITFTSVIRGTPPFKVGWFRGARELVKGNRCNIYFEDTVAELELFNIDISQSGEYTCVVSNNAGQASCTTRLFVKEPATFVKKLSDHSVEPGKSIILEGTYTGTLPISVTWKKDGVSITPSERCNIVTTEKTCILEILSSTKGDAGHYSCEIENEAGRDACDALVSTLEPPYFVTELEPLEASVGDSVSLQCQVAGTPEITVSWFKGDTKLRSTPEYRTYFTNNVATLVFNKVSINDSGEYTCMAENSIGTAASKTIFRIQERQLPPSFARQLKDIEQTVGLPVTLTCRLNGSAPIQVCWYRDGVLLRDDENLQMSFVDNVATLKILQTDLSHSGQYSCSASNPLGTASSTARLTAREPKKSPFFDIKPVSIDVIAGESADFECHVTGAQPMRVTWSKDNKEIRPGGNYTITCVGNTPHLRILKVGKGDSGQYTCQATNDVGKDMCSAQLSVKEPPKFIKKLDASKVAKQGESIQLECKISGSPEIKVVWFRNDSELHESWKYNMSFVNSVALLTINEASAEDTGDYICEAHNGVGDASCSTALKVKAPPVFTQKPPPVGALKGSDVILQCEISGTPPFEVVWVKDRKQVRSSKKFKITSKNFDTSLHIFNLEAPDIGEYHCKATNEVGSDTCACTVKFKEPPRFVKKLSDASTLIGDPVELQAVVEGFQPISVVWLKDKGEVIRESENVRISFVDNIATLQLGSPEASQSGKYVCQIKNDAGMRECSAVLTVLEPATIVEKPEPMTVTTGNPFTLECVVAGTPELSAKWFKDGRELSSGSRHHITFVRNLASLKIPSAEMNDKGLYTFEVENRVGKSSCTVSVHVSDRVVPPSFVRRLKDTSATLGASVVLECRVSGSAPISVGWFLDGNEIISSPKCQSSFADNVCTLTLSSLEPSDTGAYTCVAANVAGQDESSAVLTVQEPPSFEQTPDSVEVLPGMSLTFTSVIRGTPPFKVKWFKGSRELVSGEACTISLEDFVTELELLEVEPGQSGDYSCLVTNDAGSASCTTHLFVKEPATFVKRLADTSVETGSPIVLEATYSGTPPISVSWMKNEYPLSQSPNCGITTTEKSSILEILESTIEDYAQYACLIENEAGQDICEALVSVLEPPYFIEPLEHVEAAIGEPITLQCKVDGTPEIRISWYKEHTKLRSAPAYKMQFKNNVASLVINKVDHSDVGEYTCKAENSVGAVASSAVLVIKERKLPPSFARKLKDVHETLGFPVAFECRINGSEPLQVSWYKDGELLKDDANLQMSFVHHVATLQILQTDQSHVGQYNCSASNPLGTASSSAKLILSEHEVPPFFDLKPVSVDLALGESGSFKCHVTGTAPIKITWAKDNREIRPGGNYKMTLVENTATLTVLKVAKGDAGQYTCYASNVAGKDSCSAQLGVQEPPRFIKKLDQSRIVKQDEYTRYECKIGGSPEIKVLWYKDEVEIQESSKFRMSFEDSVAILEMHSLSVEDSGDYTCEARNAAGSASSSTSLKVKEPPVFRKKPFPVETLKGADVHLECELQGTPPFQVSWHKDKRELRSGKKYKIMSENLLTSIHILNVDTADIGEYQCKATNDVGSDTCVGSVTMKAPPQFVKKLTDISTIIGKEVQLQTTIEGAEPISVAWFKDKGEIVRESDNIWISYSENIATLQFSRAEPANAGKYTCQIKNDAGMQECYATLSVLEPAAIVEKPESIKVTTGDTCTLECTVSGTPELSTKWFKDGKELTSDNKYKISFFNKVSGLKIINVVPGDSGVYSFEVQNPVGKDSCKVSIQVSDRIIPPSFTRKLKETNGLSGSSVVMECKVYGSPPISVLWFHDGNEISSGRKYQTTLTDNTCALTVNMLEEADAGDYTCIATNVAGSDECSAPLTVREPPSFVQKPDPMDVLTGSNVTFTSIVKGSPPFTVSWFKGSTELVPGARCNVSLQDSVGELELFDVDTSQSGEYTCIVSNEAGRASCTTRLFVKAPAIFVKRLNDYSIEKGKPLILEGTFSGTPPISVTWKKNGINVIASQRCNITTTEKSAILEILSSTVEDSGQYNCYIENASGKDSCSAQILILEPPYFVKQLEPVKVTVGDSASLQCQLAGTPEIGVSWYKGDTKLRPTATCKMHFKNNVATLVFTQVDSSDSGEYICRAENSVGEVSSSTFLTVQEQKLPPSFSRQLRDVQETVGLPVVFECAVSGSEPISVSWYKDGKPLKDSPNIQTSFLDNIATLNIFKTDRSLSGQYSCTATNPIGSASSGAKLILTEGKNPPFFDIPLAPMDAVVGESADLECHVTGTQPIKVTWAKDNREIRSGGNYQISYLENSAHLTIVKVDKGDSGQYTCYAVNEVGKDSCTAQLNIKERLIPPSFTKKLSETVEETEGNSFKLEGRVAGSQPITVAWYKNNVEIHPTSNCEIMFKNNALLLQVKRASMADAGLYTCKATNDAGSALCTSSIVIKEPKKPPVFDQHLAPVTASEGDSVQLSCHVQGSEPIRIQWLKAGREVKPSDRCSFSFASGTAMLELKETAKADSGDYVCKASNVAGSDTSKCKVTIKEKPAAAPAAKKAAVDGKLFFVSEPQSIRVVEKTTATFIAKVGGDPIPNVKWTKGKWRQLNQGGRILIHQKGDEAKLEIRDTTKTDSGLYRCVAFNKHGEIESNVNLQVDERKKQEKIEGDLRAMLKKTPALKKGSGEEEEIDIMELLKNVDPKEYEKYARMYGITDFRGLLQAFELLKQSQEEETHRLEIEELEKSERDEKEFEELVAFIQQRLTQTEPVTLIKDIENQTVLKDNDAIFEIDIKINYPEIKLSWYKGTEKLEPSNKYEISIDGDRHTLRVKNCQPKDQGNYRLVCGPHIASAKLTVIEPAWERHLQDVTLKEGQTCTMTCQFSVPNVKSEWFRNGRVLKPQGRVKTEVEHKVHKLTIADVRAEDQGQYTCKHEDLETSAELRIEAEPIQFTKRIQNIVVSEHQSATFECEVSFDDAIVTWYKGPTELTESQKYNFRNDGRCHYMTIHNVTPDDEGVYSVIARLEPRGEARSTAELYLTTKEIKLEMKPPDIPDSRVPIPTMPIRAVPPEEIPPAVAPSIPLLLPLPEEKKPPAKRIEVTKKGVKKDTKKVVTKPKEEAPPPPVAKKPPPPTPMIPAKASEIIDVSSKAEEVKITTITRKKEVHKEKEAVYEREEAVYEKKVHIEPWEEPYEELETEPYTEPYEEPYYEEPDEDYEEIKVEAKKQVHEEWEEDFEEGQEYYEREEGYDEGEEEWEEIYHEREIIQVQKEVHEELHEKKIPAKVPEKKVPPPKVVKKPVVEKVEKTTRRMEEEKVQVIKVPEVSKKIVPQKPSRTPVQEEIIEVKVPAVHTKKMVISEEKMFFASHTEEEVSVSVPEVQKKTVTEEKIHVAVSKKIEPPPKVPEPPKKPVPEEVVPVPIPKKVEPPAAKVPEAPKKPVPEEKKPVPIPKKKEPAAPPQVPEAPKKPAPEEKIPVPVTKKKEAPPAKVPEVQKKVVTEEKIAIITQREESPPPAVPEIPKKKVPEEKRPVPRKEEVPPPKVPVPPKKAVPEAVVPAPIPKKAPPRAEVSKKTVVEEKRFAAEEKLSVAVPQRVELMRHEEEEWTYSEEEERVSVSVYREEERDEEEAEITEYEVLEEPEEYVVEEKMHFISKKVEVEPAKVPEKKIIPKPKVPAKIEEPPPTKVPEPPKKIVPEKKVPAPAPKKVPPAKAPEESKRPVPEKRAPAEEVGIEEPPPTKVAERHMKITQEEKVLVAVTKKEAPPRARVPEEPKKVAPEERFPKLKPRREEEPPAKVTEVRKRAVKEEKVSIEVPKREPRPTKEVTVTEEKKWSYTREEETVSEHREEEYEDYEDYEEYKEFEEYEPTEEYDQYDEYAEREVEHYEEHEEYVTEPKKPVPVKPAQEPVPAKPKAPPPKVLKKAVPEEKAPLPIQKKLKPLPPKAPEEPKKVVEEKIQISITKREKQQVTEPVAKVPMKPKRVVPEAKIPAPTKEVAVPVRVPGVPKKRELEEVVVFKEEVEAHEEYIVEEEEEYVHEEEYVHKEEYVHEEEYVHKEEYIHEEEEHLHEEEETIAEEEVVPVAPVKVPVVPKKPVPEEKKPVPVPKKKEAPPAKVPEIPKKPEEKVPVPIPKKEKAPPAKVPEVPKKPVPEEKPPVPVPKKVEPPPAKVPEVPKKPVPEKKVPAPTPKKVEAPPAKVPEVPKKPIPEEKKPTALLKKMEAPPPKAPKKREVVPVPVALPREEEEEEVPFEEVPEEEILPEEEVPSEEEAPPEEVPPEEEEVLPEEEEVLPEEEEVLPEEEEVQPEEEALPEIKPKVPKPAPVPKKTVPEKKVPVPVPKKVEPPPPPKVPEIKKKVPEKKVVVPKKEEAPPTKVPEVSKKVEERRIIPPKEEEVPPAEVYEEAEEPTPEEIPEEPPSIEEEEIVEEEEEEEEVLPPRAPEVVKKAVPEAPTPVPKKAEAPPAKVPKKIPEEKVPVPVQKKEAPPAKVPEKKKIPEKKVPVPKKEAVPPAKGKAVFEEKISVAYQQEELVQERIELELVEAKVEEAFEEEEFHEVQEYFEEEEFHEVEEFIRVEERRFQEEHKVEEVHRVIEFLEAEEVEVYEKPKIPPKKGPEVSEKVIPPKKPPTKVIPRKEPPAKVPEVTKKTVVEEKIRAPEEPKVPAPKAPEVPKKITPEEKVREAVPKKPEVPPPKVPEVPKKIIQEEKLPVVLPEDTEIYMYEASEETVIEEEHVTLPQKARLKVAKVPAPPQTVVTEEKTYVTIRKTRETLALKESETTREAFPELKSYKAVPEIPEPPSPEDLEIIEDVLPEKRPPASKRRKTQLPTAPEAPREMPPEMNTFEEISVEPEMLPTQVLDTYQEATVEKKTLRISRKKPELPSDEEVPEAPREVVAKKKVLPPQVPEVVPVKVPGAPKEVVSERKSLEEPPKKPAVRPVTVPEEPKEVIPEKKVSLVPPKKPAAPPVTVPEAPEEVFSEDEETLAPPQEPEAPPAKVPEAPKEVVPEKKVSVVPPKKPEAPPAKVPEAPKEAAPEKKVPVAPKKKPEAPPVKVPEAPKKVVPEKKLPVAAPKKPEAPAAEVPEVPKTAVPQKKIPEAIPPKPESPPLEVPEVPPKEVTPEKKVPAAPPTKPEIPPPKVPEAPQAAVVEEKTPEALPKKAEAAPVPVPQVQETVPEKTRPVGPPKKPEATTVPVPKVQKTIPEKTRPEAPPKRPEARTVPETVPEKTRPMAPPKKPEATTLPVPEVQETVPEKTRPVGPPKKPEATTVPVPEVQETIPEKTRPPKKPEATPVPVPEVQETVPEKTRPVGPPKKPEATTVSVPEVQETIPEKTRPAAPPKKPEATAVPETIPEKTRPEAPPKRPEATTVPVPEADQAVVPEKKVPRVPPKKVEAPPITVPEEPKEVIPEKKVSLVPPKKPAAPPVTVPEAPEEVFSEDEETLAPPQEPEAPPAKVPEAPKEVVPEKKVSVVPPKKPEAPPAKVPEAPKEAAPEKKVPVAPKKKPEAPPVKVPEAPKKVVPEKKLPVAAPKKPEAPAAEVPEVPKAAVPQKKIPEAIPPKPESPPPEVYEEPEEEIVPEEPPEEAVEEPVPAPPPKVTEPPKKPVPEKKAPPAVVKKPEPPPAKVPEVPKEAPPEKKVPPKKPEAPPAKVPEVPKEVVTEKKVAVPKKPEVPPAKVPEVPKKPVIEEKPAIPVVEKVASPPAEVYEEPEEVTAEEEEPAPAVEEEEYEAPPPPAPVPEEPKKVVPEKKFPVIKKPEAPPPKVPEVPKKAVPVKKVPVVKKPEPPEAEVPEVPKKLVPVKKEPVPVTKKTEVLPEKVPEAPKKITPEKKESVPVPEEPEAPPASVEETPEETIYEEKATITIGRKETPPVEEREIEKFIQPEEPELEPEPEEIPVQEPEPEKKVIEKPKLKPRPPARPPSPPKEDVKEKMFQLKAVSKKKVPEKPEVVEKVEPAPLKVPTAEKKVRKLLPEPKPQPKEEVVLKSVLRKKPEEEEPKVEPKKVEKAKKPEEPQPPPKAVEVEAPPEPTPKERKVPEPAKVPEIKPAIPLPGPEPKPKPEPEVKTMKAPPIEPAPTPIAAPVTAPVVGKKAEAKPKDEAAKPKGPIKGVAKKTPSPIEAERKKLRPGSGGEKPPDEAPFTYQLKAVPLKFVKEIKDIVLTEAESVGSSAIFECLVSPSTAITTWMKDGSNIRESPKHRFIADGKDRKLHIIDVQLSDAGEYTCVLRLGNKEKTSTAKLIVEELPVRFVKTLEEEVTVVKGQPLYLSCELNKERDVVWRKDGKIVVEKPGRIVPGVIGLMRALTINDADDTDAGTYTVTVENANNLECSSCVKVVEIIREWLVKPIRDQHVKPKGTAVFTCDIAKDTPNIKWFKGYDEIPLEPNDKTEILKEGNHLFLKVKNAMPEDIDEYAVEIEGKRYPAKLTLGEREVELLKPIEDVTIYEKESASFDAEISEEDIPGEWKLKGELLRPSPTCEIKAEGGKRFLTLHKVKLDQAGEVLYQACNAITTAILTVKEIELDFAVPLKDVTVPEKRQARFECVLTREANVIWSKGPDIIKASDKFDIIADGKKHILVINDSQFDDEGVYTAEVEGKKTSAQLFVTGIRLKFISPLEDQTVKEGQTATFVCELSHEKMHVVWFKNDVKLHTTRTVLMSSEGKTYKLEIRETTLDDISQIKAQVKNLSSTANLKVLEADPYFTVKLHDKTGVEKDEIILKCEVSKDVPVKWFKDGEEIVPSPKHSVKTDGLRRILKIKKAELKDKGEYVCDCGTDTTKANVTVEARLIKVEKPLYGVEVFVGETARFEIELSEPDVHGQWKLKGEPLTASPDCEIIEDGKKHVLVLYNCQLDMTGEISFQAANAKSAANLKVKELPLIFITPLSDVKVFEKDEAKFECEVSREPKTFRWLKGTQEITGDDRFELIKDGTRHSLVIKSAAFEDEAKYMFEAEDKRTSGKLIIEGIRLKFLTPLKDVTAKERENAVFTVELSHDNIPVSWFKNDQRLHTSKRVSMHDEGKTHSITFKDLSIDDTSQIRVEAMGISSEAKLTVLEGDPYFTGKLQDYTGVEKDEVILQCEISKADAPVKWFKDGKEIKPSKNVVIKADGKKRMLILKKALKSDIGQYTCDCGTDQTSGKLDIEDREIKLVRPLYSVEVMETETARFETEISEDDIHANWKLKGEALLQTPECEIKEEGKIHVLILHNCRLDQTGGVDFQAANVKSSAHLRVKPRVIGLLRPLKDVTVTAGETATFDCELSYEDIPVEWYLKGKKLEPNDKVVTRSEGRVHTLTLRDVKLEDAGEVQLTAKDFKTQANLFVKEPPVEFTKPLEDQTVEEEATAVLECEVSRENAKVKWFKNGTEILKSKKYEIVADGRVRKLIIHGCTPEDIKTYTCDAKDFKTSCNLNVVPPHVEFLRPLTDLQVKEKETARFECEISKENEKVQWFKDGAEIKKGKKYDIISKGAVRILVINKCLLNDEAEYSCEVRTARTSGMLTVLEEEAVFTKNLANLEVSEGDTIKLVCEVSKPGAEVIWYKGDEEIIETGRFEILTDGRKRILIIQNAQLEDAGSYNCRLPSSRTDSKVKVHELAAEFISKPQNLEILEGEKAEFVCTISKESFEVQWKRDDQTLESGDKYDIIADGKKRVLVVKDATLQDMGTYVVMVGAARAAAHLTVIEKLRIIVPLKDTKVKEQQEVVFNCEVNTEGAKAKWFRNEEAIFDSSKYIILQKDLVYTLRIRDARLDDQANFNVSLTNHRGENVKSAANLIVEEEDLRIVEPLKDIETMEKKSVTFWCKVNRLNVTLKWTKNGEEVAFDNRISYRIDKYKHSLIIKDCGFPDEGEYVVTAGQDKSVAELLIIEAPTEFVEHLEDQTVTEFDDAVFSCQLSREKANVKWYRNGREIKEGKKYKFEKDGSIHRLIIKDCRLEDECEYACGVEDRKSRARLFVEEIPVEIIRPPQDILEAPGADVIFLAELNKDKVEVQWLRNNMIVVQGDKHQMMSEGKIHRLQICDIKPRDQGEYRFIAKDKEARAKLELAAAPKIKTADQDLVVDAGQPLTMVVPYDAYPKAEAEWFKENEPLSTKTVDTTAEQTSFRISEAKKDDKGRYKIVLQNKHGKAEGFINLQVIDVPGPVRNLEVTETFDGEVSLAWEEPLTDGGSKIIGYVVERRDIKRKTWVLVTDRADSCEFTVTGLQKGGVEYLFRVSARNRVGTGEPVETDSPVEARSKYDVPGPPLNVTITDVNRFGVSLTWEPPEYDGGAEITNYVIELRDKTSIRWDTAMTVRAEDLSATVTDVVEGQEYSFRVRAQNRIGVGKPSAATPFVKVADPIERPSPPVNLNASEQTQSSVQLTWEPPLKDGGSPILGYIIERREEGKDNWIRCNMKPVPELTYKVTGLQKGNKYLYRVSAENAAGVSDPSEILGPLTADDAFVEPTMDLSAFKDGLEVIVPNPIKILVPSTGYPRPKATWTFGDQVLEEGDRVKMKTISAYAELVISPSERTDKGIYTLTLENPVKSISGEINVNVIAPPSAPKELKFSDITKDSVHLTWEPPDDDGGSPLTGYVVEKRDMSRKTWTKVMDFVTDLEFTVPDLVQGKEYLFKVCARNKCGPGEPAYTDEPVNMSAPATVPDPPENVKWRDRTANSIFLTWDPPKNDGGSRIKGYIVEKCPRGSDKWVACGEPVPDTKMEVTGLEEGKWYAYRVKALNRQGASKPSKPTEEIQAVDTQEAPEIFLDVKLLAGITVKAGTKIELPATVTGKPEPKITWTKADTLLKPDQRITIENVPKKSTVTITDSKRSDTGTYIIEAVNVCGRATAVVEVNVLDKPGPPAAFDITDVTNESCLLTWNPPRDDGGSKITNYVVERKATDSDVWHKLSSTVKDTNFKATKLTPNKEYIFRVAAENMYGVGEPVQAAPIIAKYQFDPPGPPTRLEPSDITKDAVTLTWCEPDDDGGSPITGYWVERLDPDTDKWVRCNKMPVKDTTYRVKGLTNKKKYRFRVLAENLAGPGKPSRSTEPILIKDPIDPPWPPGKPTVKDIGKTSLVLNWTKPEHDGGAKIESYVIEMLKTGTDEWVRVAEGVPTTEHLLTGLMEGQEYSFRVRAVNKAGESEPSEPSDPVLCREKLYPPSPPRWLEVINITKNTADLKWTVPEKDGGSPITNYIVEKRDVRRKGWQTVDTTVKDTKCTVTPLTEGSLYVFRVAAENAIGQSDYTEIGDSVLAKDTFTTPGPPYALTVVDVTKRHVDLKWEPPKNDGGRPIQRYIIEKKEKLGTRWVKAGKTSGPDCNFRVTDVIEGTEVQFQVRAENEAGVGHPSEPTEILSIEDPTSPPSPPLDLHVTDAGRKHIAIAWKPPEKNGGSPIIGYHVEMCPVGTEKWMRVNSRPIKDLKFKVEEGIVPDKEYVLRVRAVNAVGVSEPSEISENVVAKDPDCKPTIDLETHDIVVIEGEKLNIPVPFRAVPVPTVSWHKDGKEVKASDRLTMKNDHISAHLEVPKSVHADAGVYTITLENKLGSATASINVKVIGLPGPCKDIKASDITKSSCKLTWEPPEFDGGSPILHYVLERREAGRRTYIPVMSGENKLSWTVKDLIPNGEYFFRVKAVNKIGGGEYIELKNPVIAQDPKQPPDPPVDVEVHNPTAKAMTITWKPPLYDGGSKIMGYIIEKITKGEDRWKRCNEHLVPVLTYTAKGLEEGKEYQFRVRAENAAGIGEPSRATPPTKAVDPIDAPKVILRTSLEVKRGDEIALDATISGSPYPTITWIKDENVIVPEEIKKRAAPPVRRKKGEAEEEEPFSLPLTERLSINNSKQGESQLRIRDSLRPDHGQYMIKVENDHGVAKAPCSVSVLDTPGPPINFVFEDIRKDSVLCKWEPPLDDGGSEIINYTLEKKDKTKPDSDWIVITSTLRNCKYSVTKLIEGKEYLFRVRAENRFGPGPPCVSKPLLAKDPFEPPDAPDKPIVEDVTSNSMLVKWNEPKDNGSPILGYWLEKREVNSTHWSRVNKTLLSSLKTKVDGLLEGLTYVFRVCAENAAGPGKFSPPSDPKTARDPISPPGPPVPRVADTSSTTIELEWEPPAFNGGGEIMGYFVDKQLVGTNEWSRCTEKMIKVRQFTVKEIREGADYKLRVSAVNAAGEGPPGETEPVTVAEPQEPPTVELDVSVKGGIQIMAGKTLRIPAEVTGRPVPTKVWTIEEGELDKERVIIENVGTKSELIIKNALRKDHGRYVITATNSCGSKFAAVRVEVFDVPGPVLDLKPVVTNRKMCLLNWSDPADDGGSDITGFIIERKDAKMHTWRQPIETERSKCDITGLIEGQEYKFRVIAKNKFGCGPPVEIGPILAVDPLGPPTSPERLTYTERTKSTITLDWKEPRSDGGSPIQGYIIEKRRHDKPDFERVNKRLCPTTSFLVENLDEHQMYEFRVKAVNDVGESEPSLPLNVVIQDDEVPPTIKLRLAVRGDTIKVKAGEPVNIPADVTGLPMPKIEWSKNEKVIDKPTDTLNITKEEVSRSEAKTELSIPKAAREDKGTYTITASNRLGSVFRNVHVEVYDRPSPPRNLAVTDIKAESCYLTWDAPLDNGGSEITHYIIDKRDASRKKSEWEEVTNTAVERRYGIWKLIPNGQYEFRVRAVNKYGISDECKSDKVVIQDPYRLPGPPGKPKVLERTKGSMLVSWTPPLDNGGSPITGYWLEKREEGGTYWSRVSRAPITKVGLKGVEFNVPRLIEGVKYQFRAMAINAAGIGPPSEPSDPAVAGDPIYPPGPPSCPEVKDKTKSSISLAWKPPAKDGGSPIKGYIVEMQEEGTTDWKPVNEPDKLLTACECVVPNLKELRKYRFRVKAVNEAGESEPSDTTGEIPATDIQEVPEVFIDIGAQDCLVCKAGSQVKIPAVIKGRPTPKSSWEFDGKAKKAMKDGVHDIPEDAQLETAENSSVIIIPECTRAHSGKYSITAKNKAGQKTANCRVKVMDAPGPPKDLKVSDITRGSCRLSWKMPDDDGGDRIKGYVIEKKTIDGKAWTKVNPNCGSTTFVVPDLISEQQYFFRVRAENRFGIGPPAETIQRTTARDPIYPPDPPIKLKIGLITKNTVHLSWKPPKNDGGSPVTHYIVECLAWDPTGKKKEAWRQCNRRDVEELEFTVEDLIEGGEYEFRVKAVNEAGVSKPSATVGPVIVKDQTCPPAIELKEFMEVEEGTDVNIVAKIKGVPFPTLTWFKAPPKKPDSKEPVVYDTHVNKQVVDDTCTLVIPQSRRSDTGLYSITAVNNLGTASKEMRLNVLGRPGPPVGPIKFESISADQMTLSWLPPKDDGGSKITNYVIEKREANRKTWVRVSSEPKECMYTIPKLLEGHEYVFRIMAQNKYGIGEPLDSEPETARNLFSVPGAPDKPTVSSVTRNSMTVNWEEPEYDGGSPVTGYWLEMKDTTSKRWKRVNRDPIKAMTLGVSYKVTGLIEGSDYQFRVYAINAAGVGPASLPSDPVTARDPVAPPGPPFPKVTDWTKSSVDLEWSPPLKDGGSKITGYIVEYKEEGKEEWEKGKDKEVRGTKLVVTGLKEGAFYKFRVRAVNVAGVGEPGEVTDVIEMKDRIVSPDLQLDASVRDRIVVHAGGVIRIIAYVSGKPPPTVTWSMNERALPQEAAIETTAISSSMVIKNCQRSHQGVYSLLAKNEGGERKKTIIVDVLDVPGPVGIPFLSDNLTNDSCKLTWFSPEDDGGSPITNYVIQKREADRRAWTPVTYTVTRQNATVQGLIQGKSYFFRIAAENSIGMGPFVETPNALVIRDPITVPERPEDLEVKEVTKNTVSLTWNPPKYDGGSEIINYVLESRLIGTEKFHKVTNDNLLSRKYTVKGLKEGDTYEYRVSAVNIVGQGKPSFCTKPITCKDELAPPTLDLDFRDKLTVRVGESFALTGRYSGKPKPKIDWFKDEADVLEDDRTHIKTTPTTLALEKTKAKRSDSGKYCVVVENSTGSRKGFCQVNVVDRPGPPVGPVIFDEVTKEYMVISWKPPLDDGGSEITNYIIEKKELGKDIWMPVTSASAKTTCKVPKLLEGKDYIFRIHAENLYGISDPLVSDSMKAKDRFRVPDAPEQPVVTEVTKDSALVTWNKPNDGGKPITNYILEKRETMSKRWVRVTKEPIHPYTKYRVPDLLEGCQYEFRVSAENEIGIGDPSPPSKPVFARDPIAKPSPPINPEAIDTTCNSVELTWQPPRHDGGSKILGYIVEYQKVGDEEWRRANHTPESCPETKYKVTGLRDGQSYKFRVLAVNEAGESDPAHVPEPVLVKDRLEPPELILDANMAREQHIRVGDTLRLSAIIKGVPFPKVTWKKEDREAPTKAQIDVTPVGSKLEIRNAAHEDGGIYSLTVENPAGTKTVSVKVLVLDKPGPPRDLEVSEIRKDSCYLTWKEPLDDGGSVVTNYVVERKDVATAQWSPLSTTSKKKSHMAKHLTEGNQYLFRVAAENQYGRGPFVETPKPIKALDPLHPPGPPKDLHHVDVDKTEVSLVWNKPDRDGGSPITGYLVEYQEEGDKDWIKFKTVKNLDCVVTGLQQGKTYRFRVKAENIIGLGLPDTTIPIECQEKLVPPSVELDVKLIEGLVVKAGTTVRFPAIIRGVPVPTAKWTTDGTEIKTDDHYTVETDSFSSVLTIKNCLRKDTGEYQLTVSNAAGTKTVAVHLTVLDVPGPPTGPINILDVTPEYMTISWQPPKDDGGSPVINYIVEKQDTRKGTWGVVSAGSSKLKLKVPHLQKGCEYVFRVKAENKMGVGPPLDSIPTVAKHKFSPPSPPGKPVVTDITENAATVSWTLPKSDGGSPITGYYVERREITGKWVRVNKTPIADLKFRVTGLYEGNTYEFRVFAENLAGLSNPSPSSDPIKACRPIKPPGPPINPKLKDKSKESADLVWTKPLSDGGSPILGYVVEYQKPGTAQWDRINKDELIRQCAFRVPGLIEGNEYRFRIRAANIVGEGEPRELAESVIAKDILHPPEVELDVTCRDVITVRVGQTIRILARVKGRPEPDITWSKEGKVLVKDKRVDLIHDLPRVELQIKEAVRADHGKYIISAKNSSGHAQGSAIVNVLDRPGPCQNLKVSNVTKENCTISWENPLDNGGSEITNFIVEYRKPNQKGWSIVASDVTKRLVKANLLANNEYYFRVCAENKVGVGPTIETKTPILAINPIDRPGEPENLHIADKGKTFVYLKWRRPDYDGGSPNLSYHVERRLKGSADWERVHKGSIKETHYMVDKCVENQIYEFRVQTKNEGGESDWVRTEEVVVKEDLQKPVLDLKLSGVLTVKAGDTIRLEAGVRGKPFPEVAWTKDKDATDLTRSPRVKIDTSAESSKFSLTKAKRSDGGKYVITATNPAGSFVAYATVNVLDKPGPVRNLKITDVSSDRCTIRWDPPEDDGGCEIQNYILEKCESKRMVWSTYSANVLTPSATVTRLIEGNEYIFRVRAENKIGTGPPTESKPVIAKTKYDRPGRPDPPEVTKVSKEEMTVVWNAPEYDGGKSITGYYLEKKEKHAVRWVPVNKSAIPERRLKVQNLLPGHEYQFRVKAENEVGIGEPSLPSRPVVAKDPIEPPGPPTNFKVVDTTKSSITLAWGKPVYDGGAPIIGYVVEMRPKIADASPDEGWKRCNAAAQLIRMEFTVTSLDENQEYEFRVCAQNQVGIGRPAELKEAIKPKEILEPPEIDLDASMRKLVVVRAGCPIRLFAIVRGRPAPKVTWRKVGIDNVVRKGQVDLVDTMAFLVIPNSTRDDSGKYSLTLVNPAGEKAVFVNVKVLDTPGPVADLKVSDVTKTSCHVSWAPPENDGGSQVTHYIVEKREAERKTWSTVTPEVKKTSFNVTNLVPGNEYFFRVTAVNEYGPGVPTDIPKPVLASDPLSEPDPPRKLEVTEMTKNSATLAWLPPLRDGGAKIDGYIISYREEDQPADRWTEYSVVKDLSLIVTGLKEGKKYKFRVAARNAVGVSMPREAEGVYEAKEQLLPPKILMPEQITIKAGKKLRVEAHVYGKPNPICKWKKGDDEVVTSSHLAIHKADGSSVLIIKDVTRKDSGYYSLTAENSSGSDTQKIKVTVMDAPGPPQPPFDISEIDADACSLSWHIPLEDGGSNITNYIVEKCDVSRGDWVTALASVTKTSCRVGKLIPGQEYIFRVRAENRFGISEPLTSPKMLAKFPFDVPSEPKNARVTKVNKDCIFVAWDRPDSDGGSPITGYLIERKERNSLLWVKANDTIVRSTEYPCAGLVEGLEYSFRIYALNKAGSSPPSKPTEYVTARMPVDPPGKPEVVDVTKNSASLIWARPKHDGGSRIIGYFVEACKLPGDKWVRCNTTPHQIPQEEYTATGLEENAQYQFRAIAKTAVNISQPSEPSDPVTILAENVPPRIELSVEMKSLLTVKAGTNVCLDATVFGKPMPTVSWKKDTTPIKQAEGIKMAMKRNLCTLELFSVNRKDSGDYTITAENSSGSKSATIKLKVLDKPGPPASVKINKMYADRAMLSWEPPLEDGGSEITNYIIDKRETSRPNWAQVSATVPITSCTVEKLIEGHEYQFRICAENKYGVGDPILTEPAIAKNPYDPPGRCDPPVISNITKDHMTVSWKAPADDGGSPITGYLVEKRETQAVNWTKVNRKPVIERTLKATGLQEGTEYEFRVTAINKAGPGKPSDASKAVYAQDPLYPPGPPAFPKVYDTTRSSVSLSWGKPAYDGGSPIIGYLVEVKRADSDHWVRCNLPEKLQKTRFEVTGLMENTEYQFRVYAVNKIGYSDPSDVPDKHCPKDILIPPEGELDAELRKTLILRAGVTMRLYVPVKGRPPPKITWSKPNVNLRERIGLDIKSTDFDTFLRCENVNKYDAGKYILTLENSCGKKEYTIVVKVLDTPGPPVNVTVKEVSKDSAYVTWDPPIIDGGSPIINYVVEKRDAERKSWSTVTTECSKTSFRVSNLEEGKSYFFRVFAENEYGIGDPGETRDAVKASETPGPVVDLKALAITKSSCTIGWKKPRSDGGSRITGYVVDFLTEENKWQRVMKSLSLQYSTKDLKEGKEYTFRVSAENENGEGTPSEIVVVAKDDVVAPDLDLKDLPDLCYLAKENSNFRLKIPIKGKPAPSVSWKKGEDPLATDTRVSVESTAVNTTLVVYDCQKSDAGKYTITLKNVAGTKEGTLSIKVVGKPGIPTGPIKFDEVTAEAMTLKWGPPKDDGGSEITNYVLEKRDSVNNKWVTCASAVQKTTFRVTRLHEGIEYTFRVSAENKYGVGEGLKSEPIVAKHPFDVPDAPPPPNIVDVRHDSVSLTWTDPKKTGGSPITGYHIEFKERNSLLWKRANKTPIRMKDFKVTGLTEGLEYEFRVMAINLAGVGKPSLPSEPVVALDPIDPPGKPEVISVTRNSVTLIWTEPKYDGGHKLTGYIVEKRDLPSKSWMKANHVNVPDCAFTVTDLVEGGKYEFRIRAKNTAGAISAPSESTGTIICKDEYEAPTIVLDPTIKDGLTVKAGDSIVLSAISILGKPLPKSSWSRAGKDIRPSDIAQITSTPTSSMLTVKYATRKDAGEYTITATNPFGTKEEHVKVSVLDVPGPPGPIEISNVSAEKATLTWTPPLEDGGSPIKAYVLEKRETSRLLWTVVSEDIQACRHVVTKLIQGNEYLFRVSAVNHYGKGEPVQSEPVKMVDRFGPPGPPGKPEISNVTKNTATVSWKRPTDDGGSEITGYHVERREKKGLRWVRATKTPVSDLRCKVTGLQEGNTYEFRVSAENRAGIGPPSDASNPVLMKDVAYPPGPPSNAHVTDTTKKSASLAWGKPHYDGGLEITGYVVEHQKVGDDAWIKDTTGTALRITQFVVPDLQTKEKYNFRISAINDAGVGEPAVIPNVEIVEKEVAPDFELDAELRRTLVVRAGLSIRIFVPIKGRPAPEVTWTKDNINLKHRANIENTESFTLLIIPECNRYDTGKFVMTIENPAGKKSGFVNVRVLDTPGPVLNLRPTDITKDSVTLHWDLPLIDGGSRITNYIVEKREATRKSYSTVTTKCHKCTYKVTGLTEGCEYFFRVMAENEYGVGEPTETTEPVRASEAPLPPDSLNIMDITKNTVSLAWPKPRHDGGSKITGYVIEAQRKGSDQWTHISTVKGLECVVRNLTEGEEYTFQVMAVNSAGRSAPRESRPVIVKEQTMLPELDLRGIYQKLVIARAGDNIKVEIPVLGRPKPTVTWKKGDQILKQTQRVNVENTATSTILNINECVRSDSGPYPLTAKNTVGEVGDVITIQVHDIPGPPTGPIKFDEVSSDFVTFSWEPPENDGGVPISNYVVEMRQTDSTTWVELATTVIRTTYKATRLTTGVEYQFRVRAQNRYGVGPGITSASVVANYPFKVPGPPGTPQVTAVTKDSMTISWHEPLSDGGSPILGYHIERKERNGILWQTVSKALVPGNIFKSTGLTDGIAYEFRVIAENMAGKSKPSKPSEPMFALDPIDPPGKPVPLNITRHTVALKWAKPEYTGGFKITSYVVEKRDLPNGRWLKANFSNILENEFTVSGLTEDAAYEFRVIAKNAAGAISPPSEPSDAITCRDDLEAPRIMVDVRFKDTITLKAGEAFKLEADVSGRPPPTMEWTKDGKELEGTGKLEIKIADFSTHLINKDSSRTDSGAYILTATNPGGFAKHIFNVKVLDRPGPPEGPLAVSDVTSEKCVLSWLPPLDDGGAKIDHYIVQKRETSRLAWTNVATEVQVTKLKVTKLLKGNEYIFRVMAVNKYGVGEPLESEPVLAVDPYGPPDPPKNPEVTTITKDSMVVCWGHPDSDGGSEIINYIVERRDKAGQRWVKCNKKALTDLRFKVSGLTEGHEYEFRIMAENAAGISAPSATSPFYKACDTVFKPGPPGNPRVLDTSRSSISIAWNKPIYDGGSEITGYMVEIALPEEDEWQVVTPPAGLKATSYTITSLIENQEYKIRIYAMNSEGLGEPALVPGTPKAEERMLPPEIELDADLRKVVTIRACCTLRLFVPIKGRPAPEVKWAREHGESLDKASIESTSSYTLLVVGNVNRFDSGKYILTVENSSGSKSAFVNVRVLDTPGPPQNLKIKEVTKTSVTLTWEPPLLDGGSKIKNYIVEKRESTRKAYSTVATNCHKTSWKVDQLQEGCSYYFRVLAENEYGIGLPAETAESVKASERPLPPGKITLTDVTRNSVSLSWEKPEHDGGSRILGYIVEMQSKGSDRWATCATVKVTEATITGLIQGEEYSFRVSAQNEKGISDPRQLSVPVIAKDLVIPPAFKLLFNTFTVLAGEDLKIDVPFIGRPPPAVTWHKDDIPLKQTTRVNAESTENNSLLTIKEACREDVGHYTVKLTNSAGEATETLNVIVLDKPGPPTGPVKMDEVTADSVTLSWEPPKYDGGSSINNYIVEKRDTSTTAWQIVSATVARTTIKACRLKTGCEYQFRIAAENRYGKSTYLNSEPVVAQYPFKVPGPPGTPFVTLASKDSMEVQWHEPVSDGGSKVIGYHLERKERNSILWVKLNKTPIPQTKFKTTGLEEGIEYEFRVSAENIVGIGKPSKPSECYAAHDPCDPPGRPEAIIVTRNSVTLQWKKPTYDGGSKITGYIVEKKELPDGRWMKASFTNIIDTQFEVTGLLEDHRYEFRVIARNAAGVFSEPSESTGAITARDEVEPPRISMDPKYRDTVVVQAGESFKIDADIYGKPIPTTQWVKGDQELSSTARLEIKSTDFATSLSVKDAVRVDSGNYILKAKNVAGEKSVTINVKVLDRPGPPEGPVAISGVTAEKCTLAWKPPLQDGGSDITNYIVERRETSRLVWTLVDANVQTLSCKVLKLLEGNEYIFRIMAVNKYGVGEPLESESLIAKNPFVVPDAPKAPEVTAVTKDSMIVVWERPASDGGSEILGYVLEKRDKEGIRWTRCHKRLIGELRLRVTGLLENHNYEFRVSAENAAGLSEPSPPSAYQKACDPIYKPGPPNNPKVMDVTRSSVFLSWTKPIYDGGCEIQGYIVEKCDVSVGEWTMCTPPTGINKTNLEVEKLLEKHEYNFRICAINKAGVGEHADVPGPVMVEEKLEAPDIDLDLELRKVINIRAGGSLRLFVPIKGRPTPEVKWGKVDGDIRDAAIIDVTSSFTSLVLDNVNRYDSGKYTLTLENSSGTKSAFVTVRVLDTPSPPVNLKVTEITKDSVSITWEPPLLDGGSKIKNYIVEKREATRKSYAAVVTNCHKNSWKIDQLQEGCSYYFRVTAENEYGIGLPARTADPIKVAEVPQPPGKITVDDVTRNSVSLSWTKPEHDGGSKIIQYIVEMQAKNTDKWSECARVKSLDAVITNLTQGEEYLFRVIAVNEKGRSDPRSLAVPIIAKDLVIEPDVRPAFSSYSVQVGQDLKIEVPISGRPKPSISWTKDGMPLKQTTRINVTDSLDLTTLSIKETHKDDGGQYGITVSNVVGQKTAAIEIITLDKPDPPKGPVKFDEISAESITLSWNPPLYTGGCQITNYIVQKRDTTTTVWDVVSATVARTTLKVTKLKTGTEYQFRIFAENRYGQSFALESEPVVAQYPYKEPGPPGTPFVTAISKESMVVQWHEPINNGGSPVIGYHLERKERNSILWTKVNKTIIHDTQFKALNLEEGIEYEFRVYAENIVGVGKASKNSECYVARDPCDPPGTPEAIIVKRNEITLQWTKPVYDGGSMITGYIVEKRDLPEGRWMKASFTNVIETQFTVSGLTEDQRYEFRVIAKNAAGAISKPSDSTGPITAKDEVELPRISMDPKFRDTIVVNAGETFRLEADVHGKPLPTIEWLRGDKEIEESARCEIKNTDFKALLIVKDAIRIDGGQYILRASNVAGSKSFPVNVKVLDRPGPPEGPVQVTGVTAEKCTLAWSPPLQDGGSDISHYVVEKRETSRLAWTVVASEVVTNSLKVTKLLEGNKYIFRIMAVNKYGVGEPLESAPVLMKNPFVLPGPPKSLEVTNIAKDSMTVCWNRPDSDGGSEIIGYIVEKRDRSGIRWIKCNKRRITDLRLRVTGLTEDHEYEFRVSAENAAGVGEPSPATVYYKACDPVFKPGPPTNAHVVDTTKNSITLAWSKPIYDGGSEILGYVVEICKADEEEWQIVTPQTGLRVTRFEIAKLIEHQEYKIRVCALNKVGLGEAASVPGTVKPEDKLEAPELDLDSELRKGIVVRAGGSARIHIPFKGRPTPEITWSKEEGEFTDKVQIEKGINFTQLSIDNCDRNDAGKYILKLENSSGSKSAFVTVKVLDTPGPPQNLAVKEVRKDSVLLVWEPPIIDGGAKVKNYVIDKRESTRKAYANVSSKCNKTSFRVENLTEGAIYYFRVMAENEFGVGVPTETSDAVKASEPPSPPGKVTLTDVSQTSASLMWEKPEHDGGSRILGYVVEMQPKGTEKWSVVAESKVCNAVVSGLSSGQEYQFRVKAYNEKGKSDPRVLGIPVIAKDLTIQPSFKLPFNTYSVQAGEDLKIEIPVIGRPRPKISWVKDGEPLKQTTRVNVEETATSTILHIKESSKDDFGKYSVTATNSAGTATENLSVIVLEKPGPPVGPVKFDEVSADFVVISWEPPAYTGGCQISNYIVEKRDTTTTNWQMVSATVARTTIKISKLKTGTEYQFRIFAENRYGKSTPLDSKPVVVQYPFKEPGPPGTPFVTSISKDQMLVQWHEPVNDGGSKVTGYHLEQKEKNSILWVKLNKIPIQDTKFKTTGLDEGLEYEFRVSAENIVGIGKPSKVSECYVARDPCDPPGRPEAIVITRNSVTLKWKKPVYDGGSKITGYIVEKKDLPDGRWMKASFTNVVETEFTVTGLVEDQRYEFRVIARNAADNFSEPSESSGAITARDEIDAPNASLDPKYRDVIIVHAGETFVLEADIRGKPIPDIIWSKDGNELEETAARMEIKSTLQKTTLIVKDCIRTDGGQYTLKLSNVGGTKTIPITVKVLDRPGPPEGPLKVTGVTAEKCYLAWNPPLQDGGASISHYIIEKRETSRLSWTQVSNEVQALNYKVTKLLPGNEYIFRVMAVNKYGIGEALESEPVIACNPYKRPGPPSTPEASAITKDSMVLTWTRPVDDGGAEIEGYILEKRDKEGIRWTKCNKKTLTDLRFRVTGLTEGHSYEFRVAAENAAGVGEPSEPSVFYRACDALYPPGPPSNPKVTDTSRSSVSLAWNKPIYDGGAPVRGYVIELKKAAADEWTTCTPPSGLQGKQFTVTKLKENTEYNFRICAFNTEGVGEPATIPGSVVAQERMEAPEIELDADLRKVVTLRASATLRLFVTIKGRPEPEVKWEKAEGILTERAQIEVTSSYTMLVIDNVTRFDSGRYNLTLENNSGSKTAFVNVRVLDSPSAPVNLTIREVKKDSVTLSWEPPLIDGGAKITNYIVEKRETTRKAYATITNNCTKNTFKIENLQEGCSYYFRVLASNEYGIGLPAETAEPVKVSEPPLPPGRVTLVDVTRNTATIKWEKPESDGGSKITGYVVEMQTKGSEKWSACTQVKTLETTISGLTAGEEYVFRVAAVNEKGRSDPRQLGVPVIAKDIEIKPSVELPFNTFNVKANDQLKIDIPFKGRPQATVAWKKDGQVLRETTRVNVASSKTVTTLSIKEASREDVGTYELCVSNTAGSITVPITVIVLDRPGPPGPIRIDEVSCDNVSISWNPPEYDGGCQISNYIVEKRETTSTTWQVVSQAVARTSIKIVRLTTGSEYQFRVCAENRYGKSSYSESSAVVAEYPFSPPGPPGTPKVVHATKSTMVVSWQVPVNDGGSQVIGYHLEYKERSSILWSKANKVLIADTQMKVSGLDEGLMYEYRVYAENIAGIGKCSKACEPVPARDPCDPPGQPEVTNITRKSVSLKWSKPRYDGGAKITGYIVERRELPDGRWLKCNFTNVQETYFEVTELTEDQRYEFRVFARNAADSVSEPSESTGPITVKDDVEAPRIMMDVKFRDVIIVKAGEVLKINADIAGRPLPVISWAKDGVEIEERAKTEIVSTDYTTTLTVKDCVRRDTGQYVLTLKNVAGTRTMAVNCKVLDKPGPPAGPLEINGLTAEKCSLSWGRPQEDGGADIDYYIVEKRETSRLAWTICEAELRTTSCKVTKLLKGNEYIFRVTGVNKYGVGEPLESMAVKALDPFTTPSPPTSLEITSVTKDSMTLCWSRPETDGGSDISGYIIERREKNSLRWMRVNKKPVYDLRVKSTGLREGCEYEYRVFAENAAGLSLPSETSPLVRAEDPVFLPSPPSKPKIVDSGKTTITIGWVKPLFDGGAPITGYTVEYKKSEETDWKVAIQSFRGTEYTMSGLTTGDEYVFRVRSLNKMGASDPSDSSDPQVAKEREEEPVFDVDSEMRKTLIVKAGSSFTMTVPFRGRPIPNVSWSKPDTDLRTRAYIDSTDSRTLLTIENANRNDSGKYTLTIQNVLSAASMTFVVKVLDSPGPPANITVREVTKETAMLSWDVPENDGGAPVKNYHIEKREASKKAWVSVTNNCNRLSYKVTNLQEGAIYYFRVSGENEFGVGVPAETKEGVKITEKPSPPEKLGVTSVSKDSVSLSWLKPEHDGGSRIIHYVVEALEKGQKTWVKCAVVKTTHHVVSGLRESHEYFFRVFAENQAGLSDPRELLLPVLIKDQLEPPEIDMKNFPSHTVYVRAGSNLKVDIPISGKPLPKVTLSRDGVPLKATMRFNTEITAENLTINLKESVTTDAGRYEITAANSSGTTKTFINIIVLDRPGPPTGPVAISDITEESVTLKWEPPKYDGGSHVTNYIVLKRETSTAVWSEVSATVARTMIKVMKLTTGEEYQFRIKAENRFGISDHIDSVCVVVKLPYTTPGPPSTPWVSNVTRESITVGWHEPVSNGGSAVTGYHLEMKDRNSILWQKANKMIIRTTHFKVTTISAGLIYEFRVYAENAAGIGKPSHPSEPVLAIDACEPPRNVRITDISKNSVNLSWQQPAFDGGSKITGYIVERRDLPDGRWTKASFTNVIETQFTVSGLTQNSQYEFRVFARNAVGSVSNPSEVVGPITCIDSYGGPVIDLPLEYTEVVKYRAGTSVKLRAGISGKPEPTIEWYKDDKELQTNALVCVENSTDLASILIKDANRLNSGSYELKLRNAMGSASATIRVQILDKPGPPGGPIEFKTVTAEKITLLWRPPADDGGAKITHYIVEKRETSRVVWSMVAENLEECIVTTTKIIKGNEYVFRVRAVNKYGIGEPLESEPVVAKNAFVTPGPPSIPEVTKITKNSMTVVWDRPTVDGGSEINGYFLERRDKKSLAWLKVLKETIRDTRQKVTGLTENSDYQYRVCAVNAAGVGPFSEPSDFYKAADPIDPPGPPAKIRIADSTKSSITLGWSKPVYDGGSDVTGYVVEMKQGDEEEWTIVSTRGEVRTTEYVVSNLKPGVNYYFQVSAVNCAGQGEPITMTEPAQAKDVLEEPEIDLDVALRTSVIAKAGEDVQLLIPFKGRPPPTVTWRKDEKNLGSDTRYSIQNTDSSSLLVIPQVTRNDTGKYILTIENGVGQPKSSTVSVKVLDTPAACQKLQVKHVSLGTVTLLWDPPLIDGGSPIINYVIEKRDATKRTWSVVSHKCSGTSFKVTDLSEKTPFFFRVLAENEIGIGEPCETTEPVKAAEVPAPIRDLSMKDSTKTSVVLSWTKPDFDGGSIITDYLVERKGKGEQAWSHAGISKTCEIEIGQLKEQSVLEFRVSARNEKGQSDPVTIGPLTVKELVITPEVDLSEIPGAQISVRIGHNVHLELPYKGKPKPSISWLKDGLPLKESEYVRFSKTENKITLSIKNSKKEHGGKYTVILDNAVCRNSFPITIITLGPPSKPKGPIRFDEIKADSAIMSWDIPEDDGGGEITCYSIEKREASQTNWKMVCSSVARTTFKVSNLVKDSEYQFRVRAENRYGVSEPLASNIIVAKHQFRIPGPPGKPVIYNVTSDGMSLTWDAPVYDGGSEVTGFHVEKKERNSILWQRVNTSPISGREYRATGLIEGLDYQFRVYAENSAGLSSPSDPSKFTLAVSPVDPPGTPDYIDVTRETITLKWNPPLRDGGSKIVAYSIEKRQGSDRWVRCNFTDVSECQYTVTGLSPGDRYEFRIIARNAVGTISPPSQSSGLIMTRDENVPPTVEFGPEYFDGLVIKSGDSLRIKALVQGRPVPRVTWFKDGVEIERRMNMEITDVLGSTSLFVRDATRDHRGVYTVEAKNVSGSTKAEVTVKVQDTPGKVVGPIRFTNITGEKMTLWWEAPLNDGCAPVTHYIIEKRETSRLAWALIEDNCEALSYTAIKLITGNEYQFRISAVNKFGVGRPLESDPVVAQIQYTIPDAPGVPEPSNVTGNSITLTWTRPESDGGSEIQHYILERREKKSTRWVKVISKRPISETRFKVTGLVEGNEYEFHVMAENAAGIGPASGISRLIKCREPVNPPSAPSVVKVTDTSKTTVSLEWARPVFDGGMEIIGYIIEMCKADLGDWHKVNTEPCVKTRYTVTDLQAGEEYKFRVSAVNGAGKGDSCEVTGTIKAVDRLSAPELDIDANFKQTHIVRAGVSIRLFIAYQGRPTPTAVWSKPDSNLSIRADIHTTDSFSTLTVENCNRNDAGKYTLTVENNSGKKSITFTVKVLDSPGPPGPITFKDVTRGSATLMWDAPLLDGGARIHHYVIEKREASRRSWQVVSEKCTRQILKVSELTEGVPYYFRVSAENEYGVGEPYEMPEPIVATEQPAPPRRLDVVDTSKSSAVLAWLKPDHDGGSRITSYLLEMRQKGSDFWVEAGHTKQLTFTVERLVENTEYEFRVKAKNDAGYSEPREAFSSVIIKEPQIEPTADLTGITNQLITCKAGSTFTIDVPISGRPAPKVTWKLEEMRLKETDRMSIATTKDRTTLTVKDSMRGDSGRYFLTLENTAGVKTFTITVVVIGRPGPVTGPIEVSSVSAESCVLSWTEPKDDGGTEITNYIVEKRESGTTAWQLINSSVKRTQIKVTHLTKYKEYCFRVSSENRFGVSKPLESVPIVAEHPFVPPSAPTRPEVYYVSANAMSIRWEEPYHDGGSKIVGYWVEKKERNTILWVKENKVPCLECNYKVTGLVEGLEYQFRTYALNAAGVSKASEASRPIMAQNPVDPPGRPEVTDVTRSTVSLIWSAPVYDGGSKVVGYIIERKPVSEVGDGRWLKCNYTIVSDNFFTVTALSEGDTYEFRVLAKNAAGVISKGSESTGPVTCRDEYAPPKAELDARLQGDLVTIRAGSDLVLDAAVGGKPEPKIIWTKGDKELDLCEKISLQYTGKRATAVIKYCDRSDSGKYTLTVKNASGTKSVSVMVKVLDSPGPCGKLTVSRVTEEKCTLAWSLPQEDGGAEITHYIVERRETSRLNWVIVEGECLTASYVVTRLIKNNEYTFRVRAVNKYGLGVPVESEPIVARNSFTIPSQPGIPEEVGAGKEHIIIQWTKPESDGGNEISNYLVDKREKKSLRWTRVNKDYVVYDTRLKVTSLMEGCDYQFRVTAVNAAGNSEPSEASNFISCREPSYTPGPPSAPRVVDTTKRSISLAWTKPMYDGGTDIIGYVLEMQEKDTDQWCRVHTNATIRNNEFTVPDLKMGQKYSFRVAAVNAKGMSDYSETTAEIEPVERLEIPDLELADDLKKTVIVRAGASLRLMVSVSGRPSPVITWSKKGIDLANRAIIDNTESYSLLIVDKVNRYDAGKYTIEAENQSGKKSATVLVKVYDTPGPCPSVSVKEVSRDSVTITWEIPTIDGGAPVNNYIIEKREAAMRAFKTVTTKCSKTLYRISGLVEGTMYYFRVLPENIYGIGEPCETSDAVLVSEVPLVPTKLEVVDVTKSTVTLAWEKPLYDGGSRLTGYVLEACKAGTERWMKVVTLKPTVLEHTVISLNEGEQYLFRVRAQNEKGVSEPREIVTPVTVQDLRVLPTIDLSTMPQKTIHVPAGRPIELVIPITGRPPPTASWFFAGSKLRESERVTVETHTKVTKLTIRETTIRDTGEYTLELKNVTGTTSETIKVIILDKPGPPTGPIKIDEIDATSVTISWEPPELDGGAPLSGYVVEQRDAHRPGWLPVSESVTRPTFKFTRLTEGNEYVFRVAATNRFGIGSYLQSEVIECRSSISIPGPPETLQIFDVSRDGMTLTWYPPEDDGGSQVTGYIVERKEVRADRWVRVNKVPVTMTRYRSTGLIEGLEYEHRVTAINARGTGKPSRPSKPTVAMDPIAPPGKPQNPRVTDTTRTSVSLAWSVPEDEGGSKVTGYLIEMQKVDQREWTKCNTTPTKIREYTLTHLPQGAEYRFRVLACNAGGPGEPAEVPGTVKVTEMLEYPDYELDERYQEGVFVRQGGVIRLTIPIKGKPFPVCKWTKEGQDISKRAMIATSETHTELVIKEADRNDSGTYDLVLENKCGKKTVYIKVKVIGSPNTPEGPLEYDDIQARSVRVSWRPPADDGGADILGYILERREVPKAAWYTIDSRVRGTSLVVKGLKENVEYHFRVSAENQFGISKPLKSEEPVIPKTPLNPPEPPSNPPEVLDVTKSSVSLSWSRPKDDGGSRVTGYYIERKETSTDKWVRHNKTQITTTMYTVTGLVPDAEYQFRIIAQNDVGLSETSPASEPVVCKDPFDKPSQPGELEILSISKDSVTLQWEKPECDGGKEILGYWVEYRQSGDSAWKKSNKERIKDRQFTIGGLLEATEYEFRVFAENETGLSRPRRTAMSVKTKLTSGEAPGVRKEMADVTTKLGEAAQLSCQIVGRPLPDIKWYRFGKELIQSRKYKMSSDGRTHTLTVMTDEQEDEGVYTCVATNEVGEVESSSKLLLQAAPQFHPGYPLKEKYYGAVGSTLRLHVMYIGRPVPAMTWFHGQKLLQNSEKITIENTEHYTHLVMKNVQRKTHAGKYKVQLSNAFGTVDATLDVEIQDKPDKPTGPIVIEALLKNSVVISWKPPADDGGSWITNYVVEKCEAKEGAEWQLVSSAISVTTCRIVNLTENAGYYFRVSAQNTFGISEPLEVASIVIIKSPFEKPGVPGKPTITAVTKDSCVVAWKPPASDGGAKIRNYYLERREKKQNKWIAVTTEEIRETVFSVQNLIEGLEYEFRVKCENLGGESEWSEISEPVTPKSDVPIQAPHFKEELRNLNVRYQSNATLVCKVTGHPKPIVKWYRQGKEIIADGLKYRIQEFKGGYHQLIIASVTDDDATVYQVRATNQGGSVSGTASLEVEVPAKIHLPKTLEGMGAVHALRGEVVSIKIPFSGKPDPVITWQKGQDLIDNNGHYQVIVTRSFTSLVFSNGVERKDAGFYVVCAKNRFGIDQKTVELDVADVPDPPRGVKVSDVSRDSVNLTWTEPASDGGSKVTNYIVEKCATTAERWLRVGQARETRYTVINLFGKTSYQFRVIAENKFGLSKPSEPSEPTVTKEDKTRAMNYDDEVDETREVTTTKASHSKTKELYEKYMIAEDLGRGEFGIVHRCVETSSKRTFMAKFVKVKGTDQVLVKKEISILNIARHRNILYLHESFESMEELVMIFEFISGLDIFERINTSAFELNEREIVSYVRQVCEALEFLHSQNIGHFDIRPENIIYQTRKNSTIKIIEFGQARQLKPGDNFRLLFTAPEYYAPEVHQHDVVSTATDMWSLGTLVYVLLSGINPFLAETNQQMIENIMNAEYTFDEEAFKEISLEAMDFVDRLLVKERKSRMTASEALQHPWLKQRIDRVSTKVIRTLKHRRYYHTLIKKDLNMVVSAARISCGGAIRSQRGVSVAKVKVASIEIGPVSGQIMHAIGEEGGYVKYVCKIENYDQSTQVTWYFGVRQLENSEKYEITYEDGVATMYVKDITKFDDGTYRCKVVNDYGEDSSYAELFVKGVREVYDYYCRRTKKVKRRTDAMRLLERPPEFTLPLYNKTAYVGENVRFGVTITVHPEPRVTWYKSGQKIKPGDDEKKYTFESDKGLYQLTINSVTTDDDAEYTVVARNKHGEDSCKAKLTVTLHPPPTETTLRPMFKRLLANAECHEGQSVCFEIRVSGIPAPTLKWEKDGQPLSLGPHIEIVHEGLDYYALHIRDTLPEDTGYYRVTATNTAGSTSCQAHLQVERLRYVKQEFQSKEERERHVQKQIDKTLRMAEILSGTETVPLTPVAQEALREAAILYKPAVSTKTVKGEYRLQTEEKKEERKLRMPYEVPEPRRFKQATVEEDQRIKQFVPMSDMKWYKKIRDQYEMPGKLDRVVQKRPKRIRLSRWEQFYVMPLPRITDQYRPKWRIPKLTQDDLEMVRPARRRTPSPDYDLYYYRRRRRSLGDMSDEELLLPIDDYLAMKRTEEERLRLEEELELGFSASPPSRSPPRFELSSLRYSSPPAHVKVEDRRRDFRYSTYHVPTKEETSTSYAELRERHAQASYRQPKLRQRIMAEKEEEELLRPVTTTQRLSEYKSELDYMSKEEKSKKKSKRQRQVTEITEIEEEYEISRRAQRESSSSVSRLLRRRRSLSPTYIELMRPVSELIRSHPRPAEEYEDDAERRSPTPERTRPRSPSPVSSERSLSRFERSARFDIFSRYESMKAALKTQKTSERKYEVLSQQPFTLDHAPRITLRMRSHRVPCGQNTRFILNVQSKPTAEVKWYHNGVELQESSKIHYTNTSGVLTLEILDCQTEDGGTYRAVCTNYKGEASDYATLDVTGGAYTTYASQRRDEEVPKSVFPELTKTEAYAVSSFKRTSELEAASSVREVKSQMTETRESLSTYEHYASAEMKSATSEEKSLEEKATVRKIKTTLAARILTKPRSITVHEGESARFSCDTDGEPVPTVTWLREGQVVSTSARHQVTTTKYKSTFEISSVQASDEGNYSVVVENSDGKQEAQFTLTVQKARVIEKAVTSPPRVKSPEPRVKSPETVKSPKRVKSPEPVTSHPKAVSPTETKPTEKGQHLPVSAPPKITQSLKAEASKDIAKLTCAVESSALCAKEVAWYKDGKKLKENGHFQFHYSADGTYELKIHNLSESDCGEYVCEVSGEGGTSKTSFQFTGQSFKSIHEQVSSISETTKSVQKTAESPEAKKQEPIAPESISSKPVIVTGLRDTTVSSDSVAKFTIKVTGEPQPTITWTKDGKAIAQGSKYKLSSNKEEFILEILKTETSDGGLYACTVTNSAGSVSSSCKLTIKAVKDTEAQKVSTQKTSEVTSQKKASAQEEISQKALTSEEIKMSEVKSHETLAIKEEASKVLIAEEVKRSAAASLEKSIVHEEVTKTSQASEEVKTHAEIKTLSTQMNITKGQRATLKANIAGATDVKWVLNGTELPNSEEYRYGVSGSDQTLTIKQASHREEGILSCIGKTSQGVVKCQFDLTLSEELSDAPSFITQPRSQNINEGQNVLFSCEVSGEPSPEIEWFKNNLPISISSNISVSRSRNVYTLEIRNAAVSDSGKYTIKAKNFHGQCSATASLTVLPLVEEPPREVVLKTSSDVSLHGSVSSQSVQMSASKQEASFSSFSSSSASSMTEMKFASMSAQSMSSMQESFVEMSSSSFMGKSSMTQLESSTSRMLKAGGRGIPPKIEALPSDISIDEGKVLTVACAFTGEPTPEITWSCGGRKIQNQEQQGRFHIENTDDLTTLIIMDVQKQDGGLYTLSLGNEFGSDSATVNINIRSM</sequence>
<keyword id="KW-0002">3D-structure</keyword>
<keyword id="KW-0025">Alternative splicing</keyword>
<keyword id="KW-0067">ATP-binding</keyword>
<keyword id="KW-0106">Calcium</keyword>
<keyword id="KW-0112">Calmodulin-binding</keyword>
<keyword id="KW-0175">Coiled coil</keyword>
<keyword id="KW-0963">Cytoplasm</keyword>
<keyword id="KW-0903">Direct protein sequencing</keyword>
<keyword id="KW-1015">Disulfide bond</keyword>
<keyword id="KW-0393">Immunoglobulin domain</keyword>
<keyword id="KW-0880">Kelch repeat</keyword>
<keyword id="KW-0418">Kinase</keyword>
<keyword id="KW-0460">Magnesium</keyword>
<keyword id="KW-0479">Metal-binding</keyword>
<keyword id="KW-0488">Methylation</keyword>
<keyword id="KW-0547">Nucleotide-binding</keyword>
<keyword id="KW-0539">Nucleus</keyword>
<keyword id="KW-0597">Phosphoprotein</keyword>
<keyword id="KW-1185">Reference proteome</keyword>
<keyword id="KW-0677">Repeat</keyword>
<keyword id="KW-0723">Serine/threonine-protein kinase</keyword>
<keyword id="KW-0802">TPR repeat</keyword>
<keyword id="KW-0808">Transferase</keyword>
<keyword id="KW-0853">WD repeat</keyword>
<gene>
    <name evidence="14" type="primary">Ttn</name>
</gene>
<comment type="function">
    <text evidence="3 9 10">Key component in the assembly and functioning of vertebrate striated muscles. By providing connections at the level of individual microfilaments, it contributes to the fine balance of forces between the two halves of the sarcomere. The size and extensibility of the cross-links are the main determinants of sarcomere extensibility properties of muscle. In non-muscle cells, seems to play a role in chromosome condensation and chromosome segregation during mitosis. Might link the lamina network to chromatin or nuclear actin, or both during interphase.</text>
</comment>
<comment type="catalytic activity">
    <reaction evidence="3">
        <text>L-seryl-[protein] + ATP = O-phospho-L-seryl-[protein] + ADP + H(+)</text>
        <dbReference type="Rhea" id="RHEA:17989"/>
        <dbReference type="Rhea" id="RHEA-COMP:9863"/>
        <dbReference type="Rhea" id="RHEA-COMP:11604"/>
        <dbReference type="ChEBI" id="CHEBI:15378"/>
        <dbReference type="ChEBI" id="CHEBI:29999"/>
        <dbReference type="ChEBI" id="CHEBI:30616"/>
        <dbReference type="ChEBI" id="CHEBI:83421"/>
        <dbReference type="ChEBI" id="CHEBI:456216"/>
        <dbReference type="EC" id="2.7.11.1"/>
    </reaction>
</comment>
<comment type="catalytic activity">
    <reaction evidence="3">
        <text>L-threonyl-[protein] + ATP = O-phospho-L-threonyl-[protein] + ADP + H(+)</text>
        <dbReference type="Rhea" id="RHEA:46608"/>
        <dbReference type="Rhea" id="RHEA-COMP:11060"/>
        <dbReference type="Rhea" id="RHEA-COMP:11605"/>
        <dbReference type="ChEBI" id="CHEBI:15378"/>
        <dbReference type="ChEBI" id="CHEBI:30013"/>
        <dbReference type="ChEBI" id="CHEBI:30616"/>
        <dbReference type="ChEBI" id="CHEBI:61977"/>
        <dbReference type="ChEBI" id="CHEBI:456216"/>
        <dbReference type="EC" id="2.7.11.1"/>
    </reaction>
</comment>
<comment type="cofactor">
    <cofactor evidence="3">
        <name>Mg(2+)</name>
        <dbReference type="ChEBI" id="CHEBI:18420"/>
    </cofactor>
</comment>
<comment type="activity regulation">
    <text evidence="3">Full activation of the protein kinase domain requires both phosphorylation of Tyr-33203, preventing it from blocking the catalytic aspartate residue, and binding of Ca/CALM to the C-terminal regulatory tail of the molecule which results in ATP binding to the kinase.</text>
</comment>
<comment type="subunit">
    <text evidence="1">Interacts with MYOM1, MYOM2, tropomyosin and myosin. Interacts with actin, primarily via the PEVK domains and with MYPN. Interacts with FHL2, NEB, CRYAB, LMNA/lamin-A and LMNB/lamin-B. Interacts with TCAP/telethonin and/or ANK1 isoform Mu17/ank1.5, via the first two N-terminal immunoglobulin domains. Interacts with TRIM63, TRIM55, ANKRD1, ANKRD2, ANKRD23, and CAPN3 through several Ig domains. Interacts with NBR1 through the protein kinase domain (By similarity). Interacts with CMYA5 (By similarity).</text>
</comment>
<comment type="interaction">
    <interactant intactId="EBI-9672947">
        <id>A2ASS6</id>
    </interactant>
    <interactant intactId="EBI-9989763">
        <id>Q70IV5</id>
        <label>Synm</label>
    </interactant>
    <organismsDiffer>false</organismsDiffer>
    <experiments>3</experiments>
</comment>
<comment type="subcellular location">
    <subcellularLocation>
        <location evidence="12">Cytoplasm</location>
    </subcellularLocation>
    <subcellularLocation>
        <location evidence="3">Nucleus</location>
    </subcellularLocation>
</comment>
<comment type="alternative products">
    <event type="alternative splicing"/>
    <isoform>
        <id>A2ASS6-1</id>
        <name>1</name>
        <sequence type="displayed"/>
    </isoform>
    <isoform>
        <id>A2ASS6-2</id>
        <name>2</name>
        <sequence type="described" ref="VSP_052606 VSP_052608"/>
    </isoform>
    <isoform>
        <id>A2ASS6-3</id>
        <name>3</name>
        <sequence type="described" ref="VSP_052606 VSP_052607 VSP_052609"/>
    </isoform>
</comment>
<comment type="developmental stage">
    <text evidence="11">Expressed in cardiac muscle from 8 dpc and in skeletal muscle from 9 dpc.</text>
</comment>
<comment type="domain">
    <text evidence="3">ZIS1 and ZIS5 regions contain multiple SPXR consensus sites for ERK- and CDK-like protein kinases as well as multiple SP motifs. ZIS1 could adopt a closed conformation which would block the TCAP-binding site (By similarity).</text>
</comment>
<comment type="domain">
    <text evidence="3">The PEVK region may serve as an entropic spring of a chain of structural folds and may also be an interaction site to other myofilament proteins to form interfilament connectivity in the sarcomere.</text>
</comment>
<comment type="PTM">
    <text>Autophosphorylated.</text>
</comment>
<comment type="similarity">
    <text evidence="12">Belongs to the protein kinase superfamily. CAMK Ser/Thr protein kinase family.</text>
</comment>
<organism>
    <name type="scientific">Mus musculus</name>
    <name type="common">Mouse</name>
    <dbReference type="NCBI Taxonomy" id="10090"/>
    <lineage>
        <taxon>Eukaryota</taxon>
        <taxon>Metazoa</taxon>
        <taxon>Chordata</taxon>
        <taxon>Craniata</taxon>
        <taxon>Vertebrata</taxon>
        <taxon>Euteleostomi</taxon>
        <taxon>Mammalia</taxon>
        <taxon>Eutheria</taxon>
        <taxon>Euarchontoglires</taxon>
        <taxon>Glires</taxon>
        <taxon>Rodentia</taxon>
        <taxon>Myomorpha</taxon>
        <taxon>Muroidea</taxon>
        <taxon>Muridae</taxon>
        <taxon>Murinae</taxon>
        <taxon>Mus</taxon>
        <taxon>Mus</taxon>
    </lineage>
</organism>
<protein>
    <recommendedName>
        <fullName>Titin</fullName>
        <ecNumber>2.7.11.1</ecNumber>
    </recommendedName>
    <alternativeName>
        <fullName>Connectin</fullName>
    </alternativeName>
</protein>
<proteinExistence type="evidence at protein level"/>
<reference key="1">
    <citation type="journal article" date="2009" name="PLoS Biol.">
        <title>Lineage-specific biology revealed by a finished genome assembly of the mouse.</title>
        <authorList>
            <person name="Church D.M."/>
            <person name="Goodstadt L."/>
            <person name="Hillier L.W."/>
            <person name="Zody M.C."/>
            <person name="Goldstein S."/>
            <person name="She X."/>
            <person name="Bult C.J."/>
            <person name="Agarwala R."/>
            <person name="Cherry J.L."/>
            <person name="DiCuccio M."/>
            <person name="Hlavina W."/>
            <person name="Kapustin Y."/>
            <person name="Meric P."/>
            <person name="Maglott D."/>
            <person name="Birtle Z."/>
            <person name="Marques A.C."/>
            <person name="Graves T."/>
            <person name="Zhou S."/>
            <person name="Teague B."/>
            <person name="Potamousis K."/>
            <person name="Churas C."/>
            <person name="Place M."/>
            <person name="Herschleb J."/>
            <person name="Runnheim R."/>
            <person name="Forrest D."/>
            <person name="Amos-Landgraf J."/>
            <person name="Schwartz D.C."/>
            <person name="Cheng Z."/>
            <person name="Lindblad-Toh K."/>
            <person name="Eichler E.E."/>
            <person name="Ponting C.P."/>
        </authorList>
    </citation>
    <scope>NUCLEOTIDE SEQUENCE [LARGE SCALE GENOMIC DNA]</scope>
    <source>
        <strain>C57BL/6J</strain>
    </source>
</reference>
<reference evidence="13" key="2">
    <citation type="submission" date="2009-01" db="UniProtKB">
        <authorList>
            <person name="Lubec G."/>
            <person name="Sunyer B."/>
            <person name="Chen W.-Q."/>
        </authorList>
    </citation>
    <scope>PROTEIN SEQUENCE OF 28297-28311 AND 34728-34734</scope>
    <scope>IDENTIFICATION BY MASS SPECTROMETRY</scope>
    <source>
        <strain>OF1</strain>
        <tissue>Hippocampus</tissue>
    </source>
</reference>
<reference evidence="12" key="3">
    <citation type="journal article" date="1998" name="Circ. Res.">
        <title>Isoform transitions of the myosin binding protein C family in developing human and mouse muscles: lack of isoform transcomplementation in cardiac muscle.</title>
        <authorList>
            <person name="Gautel M."/>
            <person name="Fuerst D.O."/>
            <person name="Cocco A."/>
            <person name="Schiaffino S."/>
        </authorList>
    </citation>
    <scope>DEVELOPMENTAL STAGE</scope>
</reference>
<reference evidence="12" key="4">
    <citation type="journal article" date="2006" name="J. Cell Biol.">
        <title>M line-deficient titin causes cardiac lethality through impaired maturation of the sarcomere.</title>
        <authorList>
            <person name="Weinert S."/>
            <person name="Bergmann N."/>
            <person name="Luo X."/>
            <person name="Erdmann B."/>
            <person name="Gotthardt M."/>
        </authorList>
    </citation>
    <scope>FUNCTION</scope>
</reference>
<reference key="5">
    <citation type="journal article" date="2007" name="Circulation">
        <title>Cardiac hypertrophy and reduced contractility in hearts deficient in the titin kinase region.</title>
        <authorList>
            <person name="Peng J."/>
            <person name="Raddatz K."/>
            <person name="Molkentin J.D."/>
            <person name="Wu Y."/>
            <person name="Labeit S."/>
            <person name="Granzier H."/>
            <person name="Gotthardt M."/>
        </authorList>
    </citation>
    <scope>FUNCTION</scope>
</reference>
<reference key="6">
    <citation type="journal article" date="2007" name="Proc. Natl. Acad. Sci. U.S.A.">
        <title>Large-scale phosphorylation analysis of mouse liver.</title>
        <authorList>
            <person name="Villen J."/>
            <person name="Beausoleil S.A."/>
            <person name="Gerber S.A."/>
            <person name="Gygi S.P."/>
        </authorList>
    </citation>
    <scope>PHOSPHORYLATION [LARGE SCALE ANALYSIS] AT SER-9144</scope>
    <scope>IDENTIFICATION BY MASS SPECTROMETRY [LARGE SCALE ANALYSIS]</scope>
    <source>
        <tissue>Liver</tissue>
    </source>
</reference>
<reference key="7">
    <citation type="journal article" date="2010" name="Cell">
        <title>A tissue-specific atlas of mouse protein phosphorylation and expression.</title>
        <authorList>
            <person name="Huttlin E.L."/>
            <person name="Jedrychowski M.P."/>
            <person name="Elias J.E."/>
            <person name="Goswami T."/>
            <person name="Rad R."/>
            <person name="Beausoleil S.A."/>
            <person name="Villen J."/>
            <person name="Haas W."/>
            <person name="Sowa M.E."/>
            <person name="Gygi S.P."/>
        </authorList>
    </citation>
    <scope>PHOSPHORYLATION [LARGE SCALE ANALYSIS] AT SER-264; THR-266; THR-299; SER-301; SER-307; SER-322; SER-756; SER-1251; SER-1415; SER-1420; SER-1424; SER-1429; SER-1434; SER-2078; SER-2080; SER-3516; SER-3784; THR-8387; SER-9144; SER-9459; SER-10281; THR-12869; SER-12884; SER-12972; SER-13904; SER-21152; SER-21895; SER-21980; SER-22390; SER-25920; SER-32870; THR-33859; SER-33861; SER-33875; SER-33880; SER-33915; SER-34009; SER-34292; SER-34464; THR-34467; SER-34470; SER-34476; THR-34481 AND SER-34756</scope>
    <scope>PHOSPHORYLATION [LARGE SCALE ANALYSIS] AT SER-3432; SER-3636; SER-3678; SER-3763; SER-3827; THR-3836; SER-4672 AND SER-4720 (ISOFORM 3)</scope>
    <scope>IDENTIFICATION BY MASS SPECTROMETRY [LARGE SCALE ANALYSIS]</scope>
    <source>
        <tissue>Brown adipose tissue</tissue>
        <tissue>Heart</tissue>
        <tissue>Kidney</tissue>
        <tissue>Lung</tissue>
    </source>
</reference>
<reference key="8">
    <citation type="journal article" date="2014" name="Mol. Cell. Proteomics">
        <title>Immunoaffinity enrichment and mass spectrometry analysis of protein methylation.</title>
        <authorList>
            <person name="Guo A."/>
            <person name="Gu H."/>
            <person name="Zhou J."/>
            <person name="Mulhern D."/>
            <person name="Wang Y."/>
            <person name="Lee K.A."/>
            <person name="Yang V."/>
            <person name="Aguiar M."/>
            <person name="Kornhauser J."/>
            <person name="Jia X."/>
            <person name="Ren J."/>
            <person name="Beausoleil S.A."/>
            <person name="Silva J.C."/>
            <person name="Vemulapalli V."/>
            <person name="Bedford M.T."/>
            <person name="Comb M.J."/>
        </authorList>
    </citation>
    <scope>METHYLATION [LARGE SCALE ANALYSIS] AT ARG-263; ARG-278; ARG-286; ARG-296 AND ARG-304</scope>
    <scope>IDENTIFICATION BY MASS SPECTROMETRY [LARGE SCALE ANALYSIS]</scope>
    <source>
        <tissue>Brain</tissue>
    </source>
</reference>
<feature type="chain" id="PRO_0000311696" description="Titin">
    <location>
        <begin position="1"/>
        <end position="35213"/>
    </location>
</feature>
<feature type="domain" description="Ig-like 1" evidence="4">
    <location>
        <begin position="6"/>
        <end position="98"/>
    </location>
</feature>
<feature type="domain" description="Ig-like 2" evidence="4">
    <location>
        <begin position="104"/>
        <end position="192"/>
    </location>
</feature>
<feature type="repeat" description="Z-repeat 1" evidence="4">
    <location>
        <begin position="412"/>
        <end position="454"/>
    </location>
</feature>
<feature type="repeat" description="Z-repeat 2" evidence="4">
    <location>
        <begin position="463"/>
        <end position="504"/>
    </location>
</feature>
<feature type="repeat" description="Z-repeat 3" evidence="4">
    <location>
        <begin position="509"/>
        <end position="548"/>
    </location>
</feature>
<feature type="repeat" description="Z-repeat 4" evidence="4">
    <location>
        <begin position="553"/>
        <end position="594"/>
    </location>
</feature>
<feature type="repeat" description="Z-repeat 5" evidence="4">
    <location>
        <begin position="599"/>
        <end position="640"/>
    </location>
</feature>
<feature type="repeat" description="Z-repeat 6" evidence="4">
    <location>
        <begin position="645"/>
        <end position="686"/>
    </location>
</feature>
<feature type="domain" description="Ig-like 3" evidence="4">
    <location>
        <begin position="946"/>
        <end position="1034"/>
    </location>
</feature>
<feature type="domain" description="Ig-like 4" evidence="4">
    <location>
        <begin position="1084"/>
        <end position="1174"/>
    </location>
</feature>
<feature type="domain" description="Ig-like 5" evidence="4">
    <location>
        <begin position="1293"/>
        <end position="1384"/>
    </location>
</feature>
<feature type="domain" description="Ig-like 6" evidence="4">
    <location>
        <begin position="1463"/>
        <end position="1552"/>
    </location>
</feature>
<feature type="domain" description="Ig-like 7" evidence="4">
    <location>
        <begin position="1562"/>
        <end position="1652"/>
    </location>
</feature>
<feature type="domain" description="Ig-like 8" evidence="4">
    <location>
        <begin position="1709"/>
        <end position="1799"/>
    </location>
</feature>
<feature type="domain" description="Ig-like 9" evidence="4">
    <location>
        <begin position="1847"/>
        <end position="1934"/>
    </location>
</feature>
<feature type="domain" description="Ig-like 10" evidence="4">
    <location>
        <begin position="2084"/>
        <end position="2173"/>
    </location>
</feature>
<feature type="repeat" description="TPR 1" evidence="4">
    <location>
        <begin position="2095"/>
        <end position="2128"/>
    </location>
</feature>
<feature type="domain" description="Ig-like 11" evidence="4">
    <location>
        <begin position="2177"/>
        <end position="2268"/>
    </location>
</feature>
<feature type="domain" description="Ig-like 12" evidence="4">
    <location>
        <begin position="2270"/>
        <end position="2356"/>
    </location>
</feature>
<feature type="domain" description="Ig-like 13" evidence="4">
    <location>
        <begin position="2359"/>
        <end position="2449"/>
    </location>
</feature>
<feature type="domain" description="Ig-like 14" evidence="4">
    <location>
        <begin position="2436"/>
        <end position="2535"/>
    </location>
</feature>
<feature type="domain" description="Ig-like 15" evidence="4">
    <location>
        <begin position="2626"/>
        <end position="2709"/>
    </location>
</feature>
<feature type="repeat" description="TPR 2" evidence="4">
    <location>
        <begin position="2810"/>
        <end position="2844"/>
    </location>
</feature>
<feature type="domain" description="Ig-like 16" evidence="4">
    <location>
        <begin position="2886"/>
        <end position="2971"/>
    </location>
</feature>
<feature type="repeat" description="WD 1" evidence="4">
    <location>
        <begin position="3028"/>
        <end position="3068"/>
    </location>
</feature>
<feature type="domain" description="Ig-like 17" evidence="4">
    <location>
        <begin position="3064"/>
        <end position="3147"/>
    </location>
</feature>
<feature type="repeat" description="WD 2" evidence="4">
    <location>
        <begin position="3208"/>
        <end position="3248"/>
    </location>
</feature>
<feature type="domain" description="Ig-like 18" evidence="4">
    <location>
        <begin position="3245"/>
        <end position="3333"/>
    </location>
</feature>
<feature type="domain" description="Ig-like 19" evidence="4">
    <location>
        <begin position="3350"/>
        <end position="3438"/>
    </location>
</feature>
<feature type="domain" description="Ig-like 20" evidence="4">
    <location>
        <begin position="3509"/>
        <end position="3599"/>
    </location>
</feature>
<feature type="domain" description="Ig-like 21" evidence="4">
    <location>
        <begin position="3625"/>
        <end position="3716"/>
    </location>
</feature>
<feature type="domain" description="Ig-like 22" evidence="4">
    <location>
        <begin position="4251"/>
        <end position="4337"/>
    </location>
</feature>
<feature type="domain" description="Ig-like 23" evidence="4">
    <location>
        <begin position="4344"/>
        <end position="4432"/>
    </location>
</feature>
<feature type="domain" description="Ig-like 24" evidence="4">
    <location>
        <begin position="4439"/>
        <end position="4527"/>
    </location>
</feature>
<feature type="domain" description="Ig-like 25" evidence="4">
    <location>
        <begin position="4532"/>
        <end position="4620"/>
    </location>
</feature>
<feature type="domain" description="Ig-like 26" evidence="4">
    <location>
        <begin position="4625"/>
        <end position="4716"/>
    </location>
</feature>
<feature type="domain" description="Ig-like 27" evidence="4">
    <location>
        <begin position="4719"/>
        <end position="4807"/>
    </location>
</feature>
<feature type="domain" description="Ig-like 28" evidence="4">
    <location>
        <begin position="4812"/>
        <end position="4897"/>
    </location>
</feature>
<feature type="domain" description="Ig-like 29" evidence="4">
    <location>
        <begin position="4904"/>
        <end position="4993"/>
    </location>
</feature>
<feature type="domain" description="Ig-like 30" evidence="4">
    <location>
        <begin position="5001"/>
        <end position="5089"/>
    </location>
</feature>
<feature type="domain" description="Ig-like 31" evidence="4">
    <location>
        <begin position="5094"/>
        <end position="5182"/>
    </location>
</feature>
<feature type="repeat" description="TPR 3" evidence="4">
    <location>
        <begin position="5131"/>
        <end position="5164"/>
    </location>
</feature>
<feature type="domain" description="Ig-like 32" evidence="4">
    <location>
        <begin position="5186"/>
        <end position="5276"/>
    </location>
</feature>
<feature type="domain" description="Ig-like 33" evidence="4">
    <location>
        <begin position="5281"/>
        <end position="5369"/>
    </location>
</feature>
<feature type="domain" description="Ig-like 34" evidence="4">
    <location>
        <begin position="5374"/>
        <end position="5462"/>
    </location>
</feature>
<feature type="domain" description="Ig-like 35" evidence="4">
    <location>
        <begin position="5466"/>
        <end position="5555"/>
    </location>
</feature>
<feature type="domain" description="Ig-like 36" evidence="4">
    <location>
        <begin position="5563"/>
        <end position="5651"/>
    </location>
</feature>
<feature type="domain" description="Ig-like 37" evidence="4">
    <location>
        <begin position="5656"/>
        <end position="5744"/>
    </location>
</feature>
<feature type="domain" description="Ig-like 38" evidence="4">
    <location>
        <begin position="5749"/>
        <end position="5838"/>
    </location>
</feature>
<feature type="domain" description="Ig-like 39" evidence="4">
    <location>
        <begin position="5842"/>
        <end position="5931"/>
    </location>
</feature>
<feature type="domain" description="Ig-like 40" evidence="4">
    <location>
        <begin position="5936"/>
        <end position="6024"/>
    </location>
</feature>
<feature type="domain" description="Ig-like 41" evidence="4">
    <location>
        <begin position="6028"/>
        <end position="6117"/>
    </location>
</feature>
<feature type="domain" description="Ig-like 42" evidence="4">
    <location>
        <begin position="6125"/>
        <end position="6213"/>
    </location>
</feature>
<feature type="domain" description="Ig-like 43" evidence="4">
    <location>
        <begin position="6218"/>
        <end position="6308"/>
    </location>
</feature>
<feature type="domain" description="Ig-like 44" evidence="4">
    <location>
        <begin position="6311"/>
        <end position="6401"/>
    </location>
</feature>
<feature type="domain" description="Ig-like 45" evidence="4">
    <location>
        <begin position="6405"/>
        <end position="6493"/>
    </location>
</feature>
<feature type="repeat" description="TPR 4" evidence="4">
    <location>
        <begin position="6435"/>
        <end position="6468"/>
    </location>
</feature>
<feature type="domain" description="Ig-like 46" evidence="4">
    <location>
        <begin position="6498"/>
        <end position="6587"/>
    </location>
</feature>
<feature type="domain" description="Ig-like 47" evidence="4">
    <location>
        <begin position="6591"/>
        <end position="6682"/>
    </location>
</feature>
<feature type="repeat" description="WD 3" evidence="4">
    <location>
        <begin position="6615"/>
        <end position="6653"/>
    </location>
</feature>
<feature type="domain" description="Ig-like 48" evidence="4">
    <location>
        <begin position="6688"/>
        <end position="6776"/>
    </location>
</feature>
<feature type="domain" description="Ig-like 49" evidence="4">
    <location>
        <begin position="6781"/>
        <end position="6869"/>
    </location>
</feature>
<feature type="domain" description="Ig-like 50" evidence="4">
    <location>
        <begin position="6873"/>
        <end position="6962"/>
    </location>
</feature>
<feature type="domain" description="Ig-like 51" evidence="4">
    <location>
        <begin position="6966"/>
        <end position="7054"/>
    </location>
</feature>
<feature type="domain" description="Ig-like 52" evidence="4">
    <location>
        <begin position="7063"/>
        <end position="7151"/>
    </location>
</feature>
<feature type="domain" description="Ig-like 53" evidence="4">
    <location>
        <begin position="7159"/>
        <end position="7247"/>
    </location>
</feature>
<feature type="domain" description="Ig-like 54" evidence="4">
    <location>
        <begin position="7252"/>
        <end position="7343"/>
    </location>
</feature>
<feature type="domain" description="Ig-like 55" evidence="4">
    <location>
        <begin position="7346"/>
        <end position="7434"/>
    </location>
</feature>
<feature type="domain" description="Ig-like 56" evidence="4">
    <location>
        <begin position="7439"/>
        <end position="7528"/>
    </location>
</feature>
<feature type="domain" description="Ig-like 57" evidence="4">
    <location>
        <begin position="7532"/>
        <end position="7623"/>
    </location>
</feature>
<feature type="domain" description="Ig-like 58" evidence="4">
    <location>
        <begin position="7629"/>
        <end position="7717"/>
    </location>
</feature>
<feature type="domain" description="Ig-like 59" evidence="4">
    <location>
        <begin position="7722"/>
        <end position="7810"/>
    </location>
</feature>
<feature type="domain" description="Ig-like 60" evidence="4">
    <location>
        <begin position="7814"/>
        <end position="7903"/>
    </location>
</feature>
<feature type="domain" description="Ig-like 61" evidence="4">
    <location>
        <begin position="7907"/>
        <end position="7996"/>
    </location>
</feature>
<feature type="domain" description="Ig-like 62" evidence="4">
    <location>
        <begin position="8004"/>
        <end position="8094"/>
    </location>
</feature>
<feature type="domain" description="Ig-like 63" evidence="4">
    <location>
        <begin position="8099"/>
        <end position="8190"/>
    </location>
</feature>
<feature type="domain" description="Ig-like 64" evidence="4">
    <location>
        <begin position="8193"/>
        <end position="8282"/>
    </location>
</feature>
<feature type="domain" description="Ig-like 65" evidence="4">
    <location>
        <begin position="8287"/>
        <end position="8375"/>
    </location>
</feature>
<feature type="domain" description="Ig-like 66" evidence="4">
    <location>
        <begin position="8380"/>
        <end position="8469"/>
    </location>
</feature>
<feature type="domain" description="Ig-like 67" evidence="4">
    <location>
        <begin position="8473"/>
        <end position="8564"/>
    </location>
</feature>
<feature type="domain" description="Ig-like 68" evidence="4">
    <location>
        <begin position="8570"/>
        <end position="8658"/>
    </location>
</feature>
<feature type="domain" description="Ig-like 69" evidence="4">
    <location>
        <begin position="8663"/>
        <end position="8751"/>
    </location>
</feature>
<feature type="domain" description="Ig-like 70" evidence="4">
    <location>
        <begin position="8755"/>
        <end position="8844"/>
    </location>
</feature>
<feature type="domain" description="Ig-like 71" evidence="4">
    <location>
        <begin position="8849"/>
        <end position="8937"/>
    </location>
</feature>
<feature type="domain" description="Ig-like 72" evidence="4">
    <location>
        <begin position="8945"/>
        <end position="9035"/>
    </location>
</feature>
<feature type="domain" description="Ig-like 73" evidence="4">
    <location>
        <begin position="9040"/>
        <end position="9129"/>
    </location>
</feature>
<feature type="domain" description="Ig-like 74" evidence="4">
    <location>
        <begin position="9137"/>
        <end position="9226"/>
    </location>
</feature>
<feature type="repeat" description="TPR 5" evidence="4">
    <location>
        <begin position="9145"/>
        <end position="9182"/>
    </location>
</feature>
<feature type="domain" description="Ig-like 75" evidence="4">
    <location>
        <begin position="9233"/>
        <end position="9322"/>
    </location>
</feature>
<feature type="domain" description="Ig-like 76" evidence="4">
    <location>
        <begin position="9331"/>
        <end position="9431"/>
    </location>
</feature>
<feature type="domain" description="Ig-like 77" evidence="4">
    <location>
        <begin position="9621"/>
        <end position="9716"/>
    </location>
</feature>
<feature type="repeat" description="TPR 6" evidence="4">
    <location>
        <begin position="9662"/>
        <end position="9695"/>
    </location>
</feature>
<feature type="domain" description="Ig-like 78" evidence="4">
    <location>
        <begin position="9721"/>
        <end position="9812"/>
    </location>
</feature>
<feature type="repeat" description="PEVK 1" evidence="4">
    <location>
        <begin position="9865"/>
        <end position="9892"/>
    </location>
</feature>
<feature type="repeat" description="PEVK 2" evidence="4">
    <location>
        <begin position="9940"/>
        <end position="9963"/>
    </location>
</feature>
<feature type="repeat" description="TPR 7" evidence="4">
    <location>
        <begin position="9991"/>
        <end position="10024"/>
    </location>
</feature>
<feature type="repeat" description="Kelch 1" evidence="4">
    <location>
        <begin position="10001"/>
        <end position="10050"/>
    </location>
</feature>
<feature type="repeat" description="PEVK 3" evidence="4">
    <location>
        <begin position="10062"/>
        <end position="10085"/>
    </location>
</feature>
<feature type="repeat" description="PEVK 4" evidence="4">
    <location>
        <begin position="10091"/>
        <end position="10115"/>
    </location>
</feature>
<feature type="repeat" description="PEVK 5" evidence="4">
    <location>
        <begin position="10145"/>
        <end position="10169"/>
    </location>
</feature>
<feature type="repeat" description="PEVK 6" evidence="4">
    <location>
        <begin position="10170"/>
        <end position="10197"/>
    </location>
</feature>
<feature type="repeat" description="PEVK 7" evidence="4">
    <location>
        <begin position="10198"/>
        <end position="10225"/>
    </location>
</feature>
<feature type="repeat" description="PEVK 8" evidence="4">
    <location>
        <begin position="10227"/>
        <end position="10254"/>
    </location>
</feature>
<feature type="repeat" description="PEVK 9" evidence="4">
    <location>
        <begin position="10255"/>
        <end position="10281"/>
    </location>
</feature>
<feature type="repeat" description="PEVK 10" evidence="4">
    <location>
        <begin position="10282"/>
        <end position="10307"/>
    </location>
</feature>
<feature type="repeat" description="PEVK 11" evidence="4">
    <location>
        <begin position="10308"/>
        <end position="10332"/>
    </location>
</feature>
<feature type="repeat" description="PEVK 12" evidence="4">
    <location>
        <begin position="10333"/>
        <end position="10359"/>
    </location>
</feature>
<feature type="repeat" description="TPR 8" evidence="4">
    <location>
        <begin position="10397"/>
        <end position="10431"/>
    </location>
</feature>
<feature type="repeat" description="PEVK 13" evidence="4">
    <location>
        <begin position="10404"/>
        <end position="10427"/>
    </location>
</feature>
<feature type="repeat" description="PEVK 14" evidence="4">
    <location>
        <begin position="10451"/>
        <end position="10476"/>
    </location>
</feature>
<feature type="repeat" description="PEVK 15" evidence="4">
    <location>
        <begin position="10477"/>
        <end position="10504"/>
    </location>
</feature>
<feature type="repeat" description="PEVK 16" evidence="4">
    <location>
        <begin position="10505"/>
        <end position="10532"/>
    </location>
</feature>
<feature type="repeat" description="PEVK 17" evidence="4">
    <location>
        <begin position="10533"/>
        <end position="10560"/>
    </location>
</feature>
<feature type="repeat" description="PEVK 18" evidence="4">
    <location>
        <begin position="10561"/>
        <end position="10588"/>
    </location>
</feature>
<feature type="repeat" description="PEVK 19" evidence="4">
    <location>
        <begin position="10683"/>
        <end position="10707"/>
    </location>
</feature>
<feature type="repeat" description="PEVK 20" evidence="4">
    <location>
        <begin position="10709"/>
        <end position="10734"/>
    </location>
</feature>
<feature type="repeat" description="PEVK 21" evidence="4">
    <location>
        <begin position="10739"/>
        <end position="10764"/>
    </location>
</feature>
<feature type="repeat" description="PEVK 22" evidence="4">
    <location>
        <begin position="10765"/>
        <end position="10790"/>
    </location>
</feature>
<feature type="repeat" description="PEVK 23" evidence="4">
    <location>
        <begin position="10850"/>
        <end position="10877"/>
    </location>
</feature>
<feature type="repeat" description="PEVK 24" evidence="4">
    <location>
        <begin position="10878"/>
        <end position="10903"/>
    </location>
</feature>
<feature type="repeat" description="PEVK 25" evidence="4">
    <location>
        <begin position="10904"/>
        <end position="10931"/>
    </location>
</feature>
<feature type="repeat" description="PEVK 26" evidence="4">
    <location>
        <begin position="10932"/>
        <end position="10959"/>
    </location>
</feature>
<feature type="repeat" description="PEVK 27" evidence="4">
    <location>
        <begin position="10960"/>
        <end position="10987"/>
    </location>
</feature>
<feature type="repeat" description="PEVK 28" evidence="4">
    <location>
        <begin position="10988"/>
        <end position="11011"/>
    </location>
</feature>
<feature type="repeat" description="PEVK 29" evidence="4">
    <location>
        <begin position="11084"/>
        <end position="11109"/>
    </location>
</feature>
<feature type="repeat" description="PEVK 30" evidence="4">
    <location>
        <begin position="11111"/>
        <end position="11135"/>
    </location>
</feature>
<feature type="repeat" description="PEVK 31" evidence="4">
    <location>
        <begin position="11136"/>
        <end position="11160"/>
    </location>
</feature>
<feature type="repeat" description="PEVK 32" evidence="4">
    <location>
        <begin position="11161"/>
        <end position="11188"/>
    </location>
</feature>
<feature type="repeat" description="PEVK 33" evidence="4">
    <location>
        <begin position="11201"/>
        <end position="11225"/>
    </location>
</feature>
<feature type="repeat" description="PEVK 34" evidence="4">
    <location>
        <begin position="11226"/>
        <end position="11248"/>
    </location>
</feature>
<feature type="repeat" description="PEVK 35" evidence="4">
    <location>
        <begin position="11249"/>
        <end position="11272"/>
    </location>
</feature>
<feature type="repeat" description="PEVK 36" evidence="4">
    <location>
        <begin position="11273"/>
        <end position="11295"/>
    </location>
</feature>
<feature type="repeat" description="PEVK 37" evidence="4">
    <location>
        <begin position="11373"/>
        <end position="11400"/>
    </location>
</feature>
<feature type="repeat" description="PEVK 38" evidence="4">
    <location>
        <begin position="11401"/>
        <end position="11425"/>
    </location>
</feature>
<feature type="repeat" description="PEVK 39" evidence="4">
    <location>
        <begin position="11426"/>
        <end position="11453"/>
    </location>
</feature>
<feature type="repeat" description="PEVK 40" evidence="4">
    <location>
        <begin position="11454"/>
        <end position="11481"/>
    </location>
</feature>
<feature type="repeat" description="PEVK 41" evidence="4">
    <location>
        <begin position="11508"/>
        <end position="11533"/>
    </location>
</feature>
<feature type="repeat" description="PEVK 42" evidence="4">
    <location>
        <begin position="11562"/>
        <end position="11587"/>
    </location>
</feature>
<feature type="repeat" description="PEVK 43" evidence="4">
    <location>
        <begin position="11671"/>
        <end position="11698"/>
    </location>
</feature>
<feature type="repeat" description="PEVK 44" evidence="4">
    <location>
        <begin position="11700"/>
        <end position="11726"/>
    </location>
</feature>
<feature type="repeat" description="PEVK 45" evidence="4">
    <location>
        <begin position="11727"/>
        <end position="11754"/>
    </location>
</feature>
<feature type="repeat" description="PEVK 46" evidence="4">
    <location>
        <begin position="11755"/>
        <end position="11782"/>
    </location>
</feature>
<feature type="repeat" description="PEVK 47" evidence="4">
    <location>
        <begin position="11783"/>
        <end position="11810"/>
    </location>
</feature>
<feature type="repeat" description="PEVK 48" evidence="4">
    <location>
        <begin position="11811"/>
        <end position="11838"/>
    </location>
</feature>
<feature type="repeat" description="PEVK 49" evidence="4">
    <location>
        <begin position="11839"/>
        <end position="11866"/>
    </location>
</feature>
<feature type="repeat" description="PEVK 50" evidence="4">
    <location>
        <begin position="11867"/>
        <end position="11895"/>
    </location>
</feature>
<feature type="repeat" description="PEVK 51" evidence="4">
    <location>
        <begin position="11896"/>
        <end position="11923"/>
    </location>
</feature>
<feature type="repeat" description="PEVK 52" evidence="4">
    <location>
        <begin position="11924"/>
        <end position="11950"/>
    </location>
</feature>
<feature type="repeat" description="PEVK 53" evidence="4">
    <location>
        <begin position="11954"/>
        <end position="11977"/>
    </location>
</feature>
<feature type="repeat" description="PEVK 54" evidence="4">
    <location>
        <begin position="11979"/>
        <end position="11999"/>
    </location>
</feature>
<feature type="repeat" description="PEVK 55" evidence="4">
    <location>
        <begin position="12004"/>
        <end position="12026"/>
    </location>
</feature>
<feature type="repeat" description="PEVK 56" evidence="4">
    <location>
        <begin position="12051"/>
        <end position="12077"/>
    </location>
</feature>
<feature type="repeat" description="PEVK 57" evidence="4">
    <location>
        <begin position="12080"/>
        <end position="12104"/>
    </location>
</feature>
<feature type="repeat" description="PEVK 58" evidence="4">
    <location>
        <begin position="12105"/>
        <end position="12126"/>
    </location>
</feature>
<feature type="repeat" description="PEVK 59" evidence="4">
    <location>
        <begin position="12129"/>
        <end position="12154"/>
    </location>
</feature>
<feature type="repeat" description="PEVK 60" evidence="4">
    <location>
        <begin position="12155"/>
        <end position="12182"/>
    </location>
</feature>
<feature type="repeat" description="PEVK 61" evidence="4">
    <location>
        <begin position="12183"/>
        <end position="12210"/>
    </location>
</feature>
<feature type="repeat" description="PEVK 62" evidence="4">
    <location>
        <begin position="12211"/>
        <end position="12238"/>
    </location>
</feature>
<feature type="repeat" description="PEVK 63" evidence="4">
    <location>
        <begin position="12239"/>
        <end position="12266"/>
    </location>
</feature>
<feature type="repeat" description="PEVK 64" evidence="4">
    <location>
        <begin position="12267"/>
        <end position="12294"/>
    </location>
</feature>
<feature type="repeat" description="PEVK 65" evidence="4">
    <location>
        <begin position="12295"/>
        <end position="12322"/>
    </location>
</feature>
<feature type="repeat" description="PEVK 66" evidence="4">
    <location>
        <begin position="12323"/>
        <end position="12351"/>
    </location>
</feature>
<feature type="repeat" description="PEVK 67" evidence="4">
    <location>
        <begin position="12352"/>
        <end position="12379"/>
    </location>
</feature>
<feature type="repeat" description="PEVK 68" evidence="4">
    <location>
        <begin position="12380"/>
        <end position="12404"/>
    </location>
</feature>
<feature type="repeat" description="PEVK 69" evidence="4">
    <location>
        <begin position="12405"/>
        <end position="12430"/>
    </location>
</feature>
<feature type="repeat" description="PEVK 70" evidence="4">
    <location>
        <begin position="12431"/>
        <end position="12458"/>
    </location>
</feature>
<feature type="repeat" description="PEVK 71" evidence="4">
    <location>
        <begin position="12459"/>
        <end position="12486"/>
    </location>
</feature>
<feature type="repeat" description="PEVK 72" evidence="4">
    <location>
        <begin position="12491"/>
        <end position="12516"/>
    </location>
</feature>
<feature type="repeat" description="PEVK 73" evidence="4">
    <location>
        <begin position="12517"/>
        <end position="12542"/>
    </location>
</feature>
<feature type="repeat" description="PEVK 74" evidence="4">
    <location>
        <begin position="12543"/>
        <end position="12570"/>
    </location>
</feature>
<feature type="repeat" description="PEVK 75" evidence="4">
    <location>
        <begin position="12572"/>
        <end position="12598"/>
    </location>
</feature>
<feature type="repeat" description="PEVK 76" evidence="4">
    <location>
        <begin position="12599"/>
        <end position="12626"/>
    </location>
</feature>
<feature type="domain" description="Ig-like 79" evidence="4">
    <location>
        <begin position="12903"/>
        <end position="12995"/>
    </location>
</feature>
<feature type="domain" description="Ig-like 80" evidence="4">
    <location>
        <begin position="13000"/>
        <end position="13084"/>
    </location>
</feature>
<feature type="domain" description="Ig-like 81" evidence="4">
    <location>
        <begin position="13361"/>
        <end position="13446"/>
    </location>
</feature>
<feature type="domain" description="Ig-like 82" evidence="4">
    <location>
        <begin position="13452"/>
        <end position="13534"/>
    </location>
</feature>
<feature type="domain" description="Ig-like 83" evidence="4">
    <location>
        <begin position="13628"/>
        <end position="13712"/>
    </location>
</feature>
<feature type="domain" description="Ig-like 84" evidence="4">
    <location>
        <begin position="13807"/>
        <end position="13894"/>
    </location>
</feature>
<feature type="repeat" description="TPR 9" evidence="4">
    <location>
        <begin position="13817"/>
        <end position="13850"/>
    </location>
</feature>
<feature type="domain" description="Ig-like 85" evidence="4">
    <location>
        <begin position="13982"/>
        <end position="14068"/>
    </location>
</feature>
<feature type="domain" description="Ig-like 86" evidence="4">
    <location>
        <begin position="14072"/>
        <end position="14157"/>
    </location>
</feature>
<feature type="domain" description="Ig-like 87" evidence="4">
    <location>
        <begin position="14161"/>
        <end position="14246"/>
    </location>
</feature>
<feature type="domain" description="Ig-like 88" evidence="4">
    <location>
        <begin position="14250"/>
        <end position="14335"/>
    </location>
</feature>
<feature type="domain" description="Ig-like 89" evidence="4">
    <location>
        <begin position="14341"/>
        <end position="14424"/>
    </location>
</feature>
<feature type="domain" description="Ig-like 90" evidence="4">
    <location>
        <begin position="14427"/>
        <end position="14517"/>
    </location>
</feature>
<feature type="domain" description="Ig-like 91" evidence="4">
    <location>
        <begin position="14521"/>
        <end position="14610"/>
    </location>
</feature>
<feature type="repeat" description="WD 4" evidence="4">
    <location>
        <begin position="14576"/>
        <end position="14615"/>
    </location>
</feature>
<feature type="domain" description="Ig-like 92" evidence="4">
    <location>
        <begin position="14611"/>
        <end position="14695"/>
    </location>
</feature>
<feature type="domain" description="Ig-like 93" evidence="4">
    <location>
        <begin position="14789"/>
        <end position="14874"/>
    </location>
</feature>
<feature type="domain" description="Fibronectin type-III 1" evidence="7">
    <location>
        <begin position="14881"/>
        <end position="14976"/>
    </location>
</feature>
<feature type="repeat" description="RCC1 1" evidence="4">
    <location>
        <begin position="14946"/>
        <end position="14998"/>
    </location>
</feature>
<feature type="domain" description="Fibronectin type-III 2" evidence="7">
    <location>
        <begin position="14982"/>
        <end position="15077"/>
    </location>
</feature>
<feature type="repeat" description="RCC1 2" evidence="4">
    <location>
        <begin position="15047"/>
        <end position="15100"/>
    </location>
</feature>
<feature type="domain" description="Fibronectin type-III 3" evidence="7">
    <location>
        <begin position="15083"/>
        <end position="15178"/>
    </location>
</feature>
<feature type="domain" description="Fibronectin type-III 4" evidence="7">
    <location>
        <begin position="15279"/>
        <end position="15374"/>
    </location>
</feature>
<feature type="domain" description="Fibronectin type-III 5" evidence="7">
    <location>
        <begin position="15379"/>
        <end position="15476"/>
    </location>
</feature>
<feature type="domain" description="Ig-like 94" evidence="4">
    <location>
        <begin position="15477"/>
        <end position="15570"/>
    </location>
</feature>
<feature type="domain" description="Fibronectin type-III 6" evidence="7">
    <location>
        <begin position="15575"/>
        <end position="15668"/>
    </location>
</feature>
<feature type="domain" description="Fibronectin type-III 7" evidence="7">
    <location>
        <begin position="15674"/>
        <end position="15769"/>
    </location>
</feature>
<feature type="repeat" description="Kelch 2" evidence="4">
    <location>
        <begin position="15690"/>
        <end position="15738"/>
    </location>
</feature>
<feature type="domain" description="Fibronectin type-III 8" evidence="7">
    <location>
        <begin position="15775"/>
        <end position="15869"/>
    </location>
</feature>
<feature type="repeat" description="Kelch 3" evidence="4">
    <location>
        <begin position="15794"/>
        <end position="15839"/>
    </location>
</feature>
<feature type="repeat" description="Kelch 4" evidence="4">
    <location>
        <begin position="15848"/>
        <end position="15898"/>
    </location>
</feature>
<feature type="domain" description="Fibronectin type-III 9" evidence="7">
    <location>
        <begin position="15872"/>
        <end position="15969"/>
    </location>
</feature>
<feature type="domain" description="Fibronectin type-III 10" evidence="7">
    <location>
        <begin position="15975"/>
        <end position="16069"/>
    </location>
</feature>
<feature type="domain" description="Fibronectin type-III 11" evidence="7">
    <location>
        <begin position="16076"/>
        <end position="16172"/>
    </location>
</feature>
<feature type="domain" description="Ig-like 95" evidence="4">
    <location>
        <begin position="16176"/>
        <end position="16264"/>
    </location>
</feature>
<feature type="domain" description="Fibronectin type-III 12" evidence="7">
    <location>
        <begin position="16271"/>
        <end position="16365"/>
    </location>
</feature>
<feature type="domain" description="Fibronectin type-III 13" evidence="7">
    <location>
        <begin position="16371"/>
        <end position="16466"/>
    </location>
</feature>
<feature type="repeat" description="RCC1 3" evidence="4">
    <location>
        <begin position="16436"/>
        <end position="16492"/>
    </location>
</feature>
<feature type="domain" description="Ig-like 96" evidence="4">
    <location>
        <begin position="16470"/>
        <end position="16586"/>
    </location>
</feature>
<feature type="domain" description="Fibronectin type-III 14" evidence="7">
    <location>
        <begin position="16593"/>
        <end position="16688"/>
    </location>
</feature>
<feature type="domain" description="Fibronectin type-III 15" evidence="7">
    <location>
        <begin position="16694"/>
        <end position="16793"/>
    </location>
</feature>
<feature type="domain" description="Fibronectin type-III 16" evidence="7">
    <location>
        <begin position="16794"/>
        <end position="16887"/>
    </location>
</feature>
<feature type="domain" description="Fibronectin type-III 17" evidence="7">
    <location>
        <begin position="16988"/>
        <end position="17080"/>
    </location>
</feature>
<feature type="repeat" description="WD 5" evidence="4">
    <location>
        <begin position="16996"/>
        <end position="17042"/>
    </location>
</feature>
<feature type="domain" description="Fibronectin type-III 18" evidence="7">
    <location>
        <begin position="17086"/>
        <end position="17180"/>
    </location>
</feature>
<feature type="domain" description="Ig-like 97" evidence="4">
    <location>
        <begin position="17184"/>
        <end position="17282"/>
    </location>
</feature>
<feature type="domain" description="Fibronectin type-III 19" evidence="7">
    <location>
        <begin position="17289"/>
        <end position="17384"/>
    </location>
</feature>
<feature type="repeat" description="Kelch 5" evidence="4">
    <location>
        <begin position="17309"/>
        <end position="17355"/>
    </location>
</feature>
<feature type="domain" description="Fibronectin type-III 20" evidence="7">
    <location>
        <begin position="17390"/>
        <end position="17490"/>
    </location>
</feature>
<feature type="domain" description="Fibronectin type-III 21" evidence="7">
    <location>
        <begin position="17496"/>
        <end position="17596"/>
    </location>
</feature>
<feature type="domain" description="Ig-like 98" evidence="4">
    <location>
        <begin position="17589"/>
        <end position="17696"/>
    </location>
</feature>
<feature type="domain" description="Fibronectin type-III 22" evidence="7">
    <location>
        <begin position="17703"/>
        <end position="17796"/>
    </location>
</feature>
<feature type="domain" description="Fibronectin type-III 23" evidence="7">
    <location>
        <begin position="17803"/>
        <end position="17903"/>
    </location>
</feature>
<feature type="domain" description="Ig-like 99" evidence="4">
    <location>
        <begin position="17906"/>
        <end position="18001"/>
    </location>
</feature>
<feature type="domain" description="Fibronectin type-III 24" evidence="7">
    <location>
        <begin position="18009"/>
        <end position="18102"/>
    </location>
</feature>
<feature type="domain" description="Fibronectin type-III 25" evidence="7">
    <location>
        <begin position="18108"/>
        <end position="18207"/>
    </location>
</feature>
<feature type="domain" description="Fibronectin type-III 26" evidence="7">
    <location>
        <begin position="18210"/>
        <end position="18307"/>
    </location>
</feature>
<feature type="domain" description="Ig-like 100" evidence="4">
    <location>
        <begin position="18311"/>
        <end position="18398"/>
    </location>
</feature>
<feature type="domain" description="Fibronectin type-III 27" evidence="7">
    <location>
        <begin position="18407"/>
        <end position="18502"/>
    </location>
</feature>
<feature type="domain" description="Fibronectin type-III 28" evidence="7">
    <location>
        <begin position="18508"/>
        <end position="18603"/>
    </location>
</feature>
<feature type="repeat" description="RCC1 4" evidence="4">
    <location>
        <begin position="18573"/>
        <end position="18631"/>
    </location>
</feature>
<feature type="domain" description="Ig-like 101" evidence="4">
    <location>
        <begin position="18607"/>
        <end position="18696"/>
    </location>
</feature>
<feature type="domain" description="Fibronectin type-III 29" evidence="7">
    <location>
        <begin position="18703"/>
        <end position="18797"/>
    </location>
</feature>
<feature type="repeat" description="WD 6" evidence="4">
    <location>
        <begin position="18792"/>
        <end position="18831"/>
    </location>
</feature>
<feature type="domain" description="Fibronectin type-III 30" evidence="7">
    <location>
        <begin position="18803"/>
        <end position="18898"/>
    </location>
</feature>
<feature type="repeat" description="RCC1 5" evidence="4">
    <location>
        <begin position="18868"/>
        <end position="18921"/>
    </location>
</feature>
<feature type="domain" description="Fibronectin type-III 31" evidence="7">
    <location>
        <begin position="18904"/>
        <end position="19001"/>
    </location>
</feature>
<feature type="domain" description="Ig-like 102" evidence="4">
    <location>
        <begin position="19005"/>
        <end position="19090"/>
    </location>
</feature>
<feature type="domain" description="Fibronectin type-III 32" evidence="7">
    <location>
        <begin position="19101"/>
        <end position="19195"/>
    </location>
</feature>
<feature type="repeat" description="Kelch 6" evidence="4">
    <location>
        <begin position="19120"/>
        <end position="19164"/>
    </location>
</feature>
<feature type="repeat" description="RCC1 6" evidence="4">
    <location>
        <begin position="19165"/>
        <end position="19220"/>
    </location>
</feature>
<feature type="domain" description="Fibronectin type-III 33" evidence="7">
    <location>
        <begin position="19201"/>
        <end position="19293"/>
    </location>
</feature>
<feature type="domain" description="Ig-like 103" evidence="4">
    <location>
        <begin position="19297"/>
        <end position="19388"/>
    </location>
</feature>
<feature type="repeat" description="TPR 10" evidence="4">
    <location>
        <begin position="19330"/>
        <end position="19363"/>
    </location>
</feature>
<feature type="domain" description="Fibronectin type-III 34" evidence="7">
    <location>
        <begin position="19395"/>
        <end position="19494"/>
    </location>
</feature>
<feature type="domain" description="Fibronectin type-III 35" evidence="7">
    <location>
        <begin position="19495"/>
        <end position="19589"/>
    </location>
</feature>
<feature type="domain" description="Fibronectin type-III 36" evidence="7">
    <location>
        <begin position="19595"/>
        <end position="19691"/>
    </location>
</feature>
<feature type="domain" description="Ig-like 104" evidence="4">
    <location>
        <begin position="19695"/>
        <end position="19786"/>
    </location>
</feature>
<feature type="domain" description="Fibronectin type-III 37" evidence="7">
    <location>
        <begin position="19793"/>
        <end position="19887"/>
    </location>
</feature>
<feature type="domain" description="Fibronectin type-III 38" evidence="7">
    <location>
        <begin position="19892"/>
        <end position="19986"/>
    </location>
</feature>
<feature type="domain" description="Ig-like 105" evidence="4">
    <location>
        <begin position="19990"/>
        <end position="20081"/>
    </location>
</feature>
<feature type="domain" description="Fibronectin type-III 39" evidence="7">
    <location>
        <begin position="20088"/>
        <end position="20183"/>
    </location>
</feature>
<feature type="repeat" description="RCC1 7" evidence="4">
    <location>
        <begin position="20152"/>
        <end position="20208"/>
    </location>
</feature>
<feature type="domain" description="Fibronectin type-III 40" evidence="7">
    <location>
        <begin position="20187"/>
        <end position="20282"/>
    </location>
</feature>
<feature type="repeat" description="RCC1 8" evidence="4">
    <location>
        <begin position="20252"/>
        <end position="20305"/>
    </location>
</feature>
<feature type="domain" description="Fibronectin type-III 41" evidence="7">
    <location>
        <begin position="20288"/>
        <end position="20389"/>
    </location>
</feature>
<feature type="domain" description="Ig-like 106" evidence="4">
    <location>
        <begin position="20393"/>
        <end position="20479"/>
    </location>
</feature>
<feature type="domain" description="Fibronectin type-III 42" evidence="7">
    <location>
        <begin position="20490"/>
        <end position="20584"/>
    </location>
</feature>
<feature type="repeat" description="Kelch 7" evidence="4">
    <location>
        <begin position="20509"/>
        <end position="20554"/>
    </location>
</feature>
<feature type="domain" description="Fibronectin type-III 43" evidence="7">
    <location>
        <begin position="20590"/>
        <end position="20685"/>
    </location>
</feature>
<feature type="domain" description="Ig-like 107" evidence="4">
    <location>
        <begin position="20688"/>
        <end position="20776"/>
    </location>
</feature>
<feature type="domain" description="Fibronectin type-III 44" evidence="7">
    <location>
        <begin position="20783"/>
        <end position="20877"/>
    </location>
</feature>
<feature type="domain" description="Fibronectin type-III 45" evidence="7">
    <location>
        <begin position="20880"/>
        <end position="20978"/>
    </location>
</feature>
<feature type="domain" description="Fibronectin type-III 46" evidence="7">
    <location>
        <begin position="20981"/>
        <end position="21079"/>
    </location>
</feature>
<feature type="domain" description="Ig-like 108" evidence="4">
    <location>
        <begin position="21082"/>
        <end position="21173"/>
    </location>
</feature>
<feature type="domain" description="Fibronectin type-III 47" evidence="7">
    <location>
        <begin position="21180"/>
        <end position="21273"/>
    </location>
</feature>
<feature type="domain" description="Fibronectin type-III 48" evidence="7">
    <location>
        <begin position="21279"/>
        <end position="21374"/>
    </location>
</feature>
<feature type="domain" description="Fibronectin type-III 49" evidence="7">
    <location>
        <begin position="21380"/>
        <end position="21475"/>
    </location>
</feature>
<feature type="domain" description="Fibronectin type-III 50" evidence="7">
    <location>
        <begin position="21578"/>
        <end position="21672"/>
    </location>
</feature>
<feature type="domain" description="Fibronectin type-III 51" evidence="7">
    <location>
        <begin position="21675"/>
        <end position="21770"/>
    </location>
</feature>
<feature type="domain" description="Fibronectin type-III 52" evidence="7">
    <location>
        <begin position="21868"/>
        <end position="21963"/>
    </location>
</feature>
<feature type="repeat" description="Kelch 8" evidence="4">
    <location>
        <begin position="21887"/>
        <end position="21932"/>
    </location>
</feature>
<feature type="domain" description="Fibronectin type-III 53" evidence="7">
    <location>
        <begin position="21967"/>
        <end position="22062"/>
    </location>
</feature>
<feature type="repeat" description="WD 7" evidence="4">
    <location>
        <begin position="22052"/>
        <end position="22093"/>
    </location>
</feature>
<feature type="domain" description="Fibronectin type-III 54" evidence="7">
    <location>
        <begin position="22065"/>
        <end position="22161"/>
    </location>
</feature>
<feature type="repeat" description="Kelch 9" evidence="4">
    <location>
        <begin position="22084"/>
        <end position="22129"/>
    </location>
</feature>
<feature type="domain" description="Ig-like 109" evidence="4">
    <location>
        <begin position="22165"/>
        <end position="22257"/>
    </location>
</feature>
<feature type="domain" description="Fibronectin type-III 55" evidence="7">
    <location>
        <begin position="22264"/>
        <end position="22357"/>
    </location>
</feature>
<feature type="domain" description="Fibronectin type-III 56" evidence="7">
    <location>
        <begin position="22363"/>
        <end position="22458"/>
    </location>
</feature>
<feature type="repeat" description="RCC1 9" evidence="4">
    <location>
        <begin position="22428"/>
        <end position="22482"/>
    </location>
</feature>
<feature type="domain" description="Fibronectin type-III 57" evidence="7">
    <location>
        <begin position="22464"/>
        <end position="22559"/>
    </location>
</feature>
<feature type="domain" description="Fibronectin type-III 58" evidence="7">
    <location>
        <begin position="22659"/>
        <end position="22753"/>
    </location>
</feature>
<feature type="domain" description="Fibronectin type-III 59" evidence="7">
    <location>
        <begin position="22756"/>
        <end position="22848"/>
    </location>
</feature>
<feature type="domain" description="Fibronectin type-III 60" evidence="7">
    <location>
        <begin position="22950"/>
        <end position="23044"/>
    </location>
</feature>
<feature type="domain" description="Fibronectin type-III 61" evidence="7">
    <location>
        <begin position="23050"/>
        <end position="23145"/>
    </location>
</feature>
<feature type="domain" description="Fibronectin type-III 62" evidence="7">
    <location>
        <begin position="23148"/>
        <end position="23244"/>
    </location>
</feature>
<feature type="repeat" description="Kelch 10" evidence="4">
    <location>
        <begin position="23168"/>
        <end position="23212"/>
    </location>
</feature>
<feature type="domain" description="Ig-like 110" evidence="4">
    <location>
        <begin position="23248"/>
        <end position="23339"/>
    </location>
</feature>
<feature type="domain" description="Fibronectin type-III 63" evidence="7">
    <location>
        <begin position="23346"/>
        <end position="23440"/>
    </location>
</feature>
<feature type="domain" description="Fibronectin type-III 64" evidence="7">
    <location>
        <begin position="23446"/>
        <end position="23541"/>
    </location>
</feature>
<feature type="domain" description="Fibronectin type-III 65" evidence="7">
    <location>
        <begin position="23547"/>
        <end position="23643"/>
    </location>
</feature>
<feature type="repeat" description="Kelch 11" evidence="4">
    <location>
        <begin position="23566"/>
        <end position="23612"/>
    </location>
</feature>
<feature type="domain" description="Ig-like 111" evidence="4">
    <location>
        <begin position="23647"/>
        <end position="23736"/>
    </location>
</feature>
<feature type="domain" description="Fibronectin type-III 66" evidence="7">
    <location>
        <begin position="23743"/>
        <end position="23838"/>
    </location>
</feature>
<feature type="domain" description="Fibronectin type-III 67" evidence="7">
    <location>
        <begin position="23840"/>
        <end position="23933"/>
    </location>
</feature>
<feature type="repeat" description="RCC1 10" evidence="4">
    <location>
        <begin position="23903"/>
        <end position="23953"/>
    </location>
</feature>
<feature type="domain" description="Ig-like 112" evidence="4">
    <location>
        <begin position="23937"/>
        <end position="24025"/>
    </location>
</feature>
<feature type="domain" description="Fibronectin type-III 68" evidence="7">
    <location>
        <begin position="24032"/>
        <end position="24126"/>
    </location>
</feature>
<feature type="repeat" description="WD 8" evidence="4">
    <location>
        <begin position="24041"/>
        <end position="24087"/>
    </location>
</feature>
<feature type="domain" description="Fibronectin type-III 69" evidence="7">
    <location>
        <begin position="24132"/>
        <end position="24227"/>
    </location>
</feature>
<feature type="domain" description="Fibronectin type-III 70" evidence="7">
    <location>
        <begin position="24230"/>
        <end position="24325"/>
    </location>
</feature>
<feature type="domain" description="Ig-like 113" evidence="4">
    <location>
        <begin position="24330"/>
        <end position="24417"/>
    </location>
</feature>
<feature type="domain" description="Fibronectin type-III 71" evidence="7">
    <location>
        <begin position="24428"/>
        <end position="24522"/>
    </location>
</feature>
<feature type="repeat" description="WD 9" evidence="4">
    <location>
        <begin position="24513"/>
        <end position="24556"/>
    </location>
</feature>
<feature type="domain" description="Fibronectin type-III 72" evidence="7">
    <location>
        <begin position="24528"/>
        <end position="24623"/>
    </location>
</feature>
<feature type="domain" description="Fibronectin type-III 73" evidence="7">
    <location>
        <begin position="24629"/>
        <end position="24725"/>
    </location>
</feature>
<feature type="domain" description="Ig-like 114" evidence="4">
    <location>
        <begin position="24729"/>
        <end position="24816"/>
    </location>
</feature>
<feature type="domain" description="Fibronectin type-III 74" evidence="7">
    <location>
        <begin position="24825"/>
        <end position="24919"/>
    </location>
</feature>
<feature type="domain" description="Fibronectin type-III 75" evidence="7">
    <location>
        <begin position="24922"/>
        <end position="25015"/>
    </location>
</feature>
<feature type="repeat" description="Kelch 12" evidence="4">
    <location>
        <begin position="24941"/>
        <end position="24986"/>
    </location>
</feature>
<feature type="domain" description="Ig-like 115" evidence="4">
    <location>
        <begin position="25019"/>
        <end position="25108"/>
    </location>
</feature>
<feature type="domain" description="Fibronectin type-III 76" evidence="7">
    <location>
        <begin position="25114"/>
        <end position="25208"/>
    </location>
</feature>
<feature type="repeat" description="WD 10" evidence="4">
    <location>
        <begin position="25123"/>
        <end position="25169"/>
    </location>
</feature>
<feature type="domain" description="Fibronectin type-III 77" evidence="7">
    <location>
        <begin position="25214"/>
        <end position="25308"/>
    </location>
</feature>
<feature type="domain" description="Fibronectin type-III 78" evidence="7">
    <location>
        <begin position="25312"/>
        <end position="25408"/>
    </location>
</feature>
<feature type="domain" description="Ig-like 116" evidence="4">
    <location>
        <begin position="25412"/>
        <end position="25503"/>
    </location>
</feature>
<feature type="domain" description="Fibronectin type-III 79" evidence="7">
    <location>
        <begin position="25510"/>
        <end position="25604"/>
    </location>
</feature>
<feature type="domain" description="Fibronectin type-III 80" evidence="7">
    <location>
        <begin position="25610"/>
        <end position="25705"/>
    </location>
</feature>
<feature type="domain" description="Fibronectin type-III 81" evidence="7">
    <location>
        <begin position="25711"/>
        <end position="25807"/>
    </location>
</feature>
<feature type="repeat" description="Kelch 13" evidence="4">
    <location>
        <begin position="25730"/>
        <end position="25778"/>
    </location>
</feature>
<feature type="repeat" description="WD 11" evidence="4">
    <location>
        <begin position="25891"/>
        <end position="25935"/>
    </location>
</feature>
<feature type="domain" description="Fibronectin type-III 82" evidence="7">
    <location>
        <begin position="25907"/>
        <end position="26002"/>
    </location>
</feature>
<feature type="domain" description="Fibronectin type-III 83" evidence="7">
    <location>
        <begin position="26004"/>
        <end position="26097"/>
    </location>
</feature>
<feature type="domain" description="Ig-like 117" evidence="4">
    <location>
        <begin position="26101"/>
        <end position="26187"/>
    </location>
</feature>
<feature type="domain" description="Fibronectin type-III 84" evidence="7">
    <location>
        <begin position="26197"/>
        <end position="26290"/>
    </location>
</feature>
<feature type="repeat" description="WD 12" evidence="4">
    <location>
        <begin position="26281"/>
        <end position="26324"/>
    </location>
</feature>
<feature type="domain" description="Fibronectin type-III 85" evidence="7">
    <location>
        <begin position="26296"/>
        <end position="26390"/>
    </location>
</feature>
<feature type="domain" description="Fibronectin type-III 86" evidence="7">
    <location>
        <begin position="26394"/>
        <end position="26489"/>
    </location>
</feature>
<feature type="domain" description="Ig-like 118" evidence="4">
    <location>
        <begin position="26494"/>
        <end position="26584"/>
    </location>
</feature>
<feature type="domain" description="Fibronectin type-III 87" evidence="7">
    <location>
        <begin position="26593"/>
        <end position="26687"/>
    </location>
</feature>
<feature type="domain" description="Fibronectin type-III 88" evidence="7">
    <location>
        <begin position="26693"/>
        <end position="26788"/>
    </location>
</feature>
<feature type="domain" description="Fibronectin type-III 89" evidence="7">
    <location>
        <begin position="26794"/>
        <end position="26890"/>
    </location>
</feature>
<feature type="domain" description="Ig-like 119" evidence="4">
    <location>
        <begin position="26894"/>
        <end position="26983"/>
    </location>
</feature>
<feature type="domain" description="Fibronectin type-III 90" evidence="7">
    <location>
        <begin position="26990"/>
        <end position="27084"/>
    </location>
</feature>
<feature type="domain" description="Fibronectin type-III 91" evidence="7">
    <location>
        <begin position="27087"/>
        <end position="27180"/>
    </location>
</feature>
<feature type="domain" description="Ig-like 120" evidence="4">
    <location>
        <begin position="27168"/>
        <end position="27272"/>
    </location>
</feature>
<feature type="domain" description="Fibronectin type-III 92" evidence="7">
    <location>
        <begin position="27279"/>
        <end position="27372"/>
    </location>
</feature>
<feature type="repeat" description="WD 13" evidence="4">
    <location>
        <begin position="27363"/>
        <end position="27406"/>
    </location>
</feature>
<feature type="domain" description="Fibronectin type-III 93" evidence="7">
    <location>
        <begin position="27378"/>
        <end position="27475"/>
    </location>
</feature>
<feature type="domain" description="Fibronectin type-III 94" evidence="7">
    <location>
        <begin position="27476"/>
        <end position="27572"/>
    </location>
</feature>
<feature type="domain" description="Ig-like 121" evidence="4">
    <location>
        <begin position="27576"/>
        <end position="27663"/>
    </location>
</feature>
<feature type="domain" description="Fibronectin type-III 95" evidence="7">
    <location>
        <begin position="27674"/>
        <end position="27768"/>
    </location>
</feature>
<feature type="domain" description="Fibronectin type-III 96" evidence="7">
    <location>
        <begin position="27774"/>
        <end position="27869"/>
    </location>
</feature>
<feature type="domain" description="Fibronectin type-III 97" evidence="7">
    <location>
        <begin position="27875"/>
        <end position="27969"/>
    </location>
</feature>
<feature type="repeat" description="RCC1 11" evidence="4">
    <location>
        <begin position="27939"/>
        <end position="27989"/>
    </location>
</feature>
<feature type="domain" description="Ig-like 122" evidence="4">
    <location>
        <begin position="27963"/>
        <end position="28058"/>
    </location>
</feature>
<feature type="domain" description="Fibronectin type-III 98" evidence="7">
    <location>
        <begin position="28069"/>
        <end position="28164"/>
    </location>
</feature>
<feature type="repeat" description="RCC1 12" evidence="4">
    <location>
        <begin position="28133"/>
        <end position="28182"/>
    </location>
</feature>
<feature type="domain" description="Fibronectin type-III 99" evidence="7">
    <location>
        <begin position="28166"/>
        <end position="28259"/>
    </location>
</feature>
<feature type="repeat" description="Kelch 14" evidence="4">
    <location>
        <begin position="28185"/>
        <end position="28230"/>
    </location>
</feature>
<feature type="domain" description="Fibronectin type-III 100" evidence="7">
    <location>
        <begin position="28361"/>
        <end position="28455"/>
    </location>
</feature>
<feature type="domain" description="Fibronectin type-III 101" evidence="7">
    <location>
        <begin position="28461"/>
        <end position="28556"/>
    </location>
</feature>
<feature type="domain" description="Fibronectin type-III 102" evidence="7">
    <location>
        <begin position="28559"/>
        <end position="28655"/>
    </location>
</feature>
<feature type="domain" description="Ig-like 123" evidence="4">
    <location>
        <begin position="28659"/>
        <end position="28750"/>
    </location>
</feature>
<feature type="repeat" description="TPR 11" evidence="4">
    <location>
        <begin position="28669"/>
        <end position="28706"/>
    </location>
</feature>
<feature type="domain" description="Fibronectin type-III 103" evidence="7">
    <location>
        <begin position="28757"/>
        <end position="28851"/>
    </location>
</feature>
<feature type="domain" description="Fibronectin type-III 104" evidence="7">
    <location>
        <begin position="28857"/>
        <end position="28952"/>
    </location>
</feature>
<feature type="repeat" description="TPR 12" evidence="4">
    <location>
        <begin position="28923"/>
        <end position="28957"/>
    </location>
</feature>
<feature type="domain" description="Fibronectin type-III 105" evidence="7">
    <location>
        <begin position="28958"/>
        <end position="29054"/>
    </location>
</feature>
<feature type="domain" description="Ig-like 124" evidence="4">
    <location>
        <begin position="29058"/>
        <end position="29148"/>
    </location>
</feature>
<feature type="domain" description="Fibronectin type-III 106" evidence="7">
    <location>
        <begin position="29157"/>
        <end position="29251"/>
    </location>
</feature>
<feature type="domain" description="Fibronectin type-III 107" evidence="7">
    <location>
        <begin position="29254"/>
        <end position="29346"/>
    </location>
</feature>
<feature type="domain" description="Ig-like 125" evidence="4">
    <location>
        <begin position="29350"/>
        <end position="29439"/>
    </location>
</feature>
<feature type="domain" description="Fibronectin type-III 108" evidence="7">
    <location>
        <begin position="29445"/>
        <end position="29542"/>
    </location>
</feature>
<feature type="repeat" description="Kelch 15" evidence="4">
    <location>
        <begin position="29468"/>
        <end position="29513"/>
    </location>
</feature>
<feature type="repeat" description="WD 14" evidence="4">
    <location>
        <begin position="29533"/>
        <end position="29576"/>
    </location>
</feature>
<feature type="domain" description="Fibronectin type-III 109" evidence="7">
    <location>
        <begin position="29548"/>
        <end position="29643"/>
    </location>
</feature>
<feature type="domain" description="Fibronectin type-III 110" evidence="7">
    <location>
        <begin position="29646"/>
        <end position="29741"/>
    </location>
</feature>
<feature type="domain" description="Ig-like 126" evidence="4">
    <location>
        <begin position="29745"/>
        <end position="29836"/>
    </location>
</feature>
<feature type="domain" description="Fibronectin type-III 111" evidence="7">
    <location>
        <begin position="29844"/>
        <end position="29937"/>
    </location>
</feature>
<feature type="domain" description="Fibronectin type-III 112" evidence="7">
    <location>
        <begin position="29943"/>
        <end position="30039"/>
    </location>
</feature>
<feature type="domain" description="Fibronectin type-III 113" evidence="7">
    <location>
        <begin position="30045"/>
        <end position="30140"/>
    </location>
</feature>
<feature type="domain" description="Ig-like 127" evidence="4">
    <location>
        <begin position="30144"/>
        <end position="30229"/>
    </location>
</feature>
<feature type="domain" description="Fibronectin type-III 114" evidence="7">
    <location>
        <begin position="30240"/>
        <end position="30335"/>
    </location>
</feature>
<feature type="domain" description="Fibronectin type-III 115" evidence="7">
    <location>
        <begin position="30337"/>
        <end position="30430"/>
    </location>
</feature>
<feature type="repeat" description="TPR 13" evidence="4">
    <location>
        <begin position="30399"/>
        <end position="30432"/>
    </location>
</feature>
<feature type="domain" description="Ig-like 128" evidence="4">
    <location>
        <begin position="30430"/>
        <end position="30523"/>
    </location>
</feature>
<feature type="domain" description="Fibronectin type-III 116" evidence="7">
    <location>
        <begin position="30532"/>
        <end position="30626"/>
    </location>
</feature>
<feature type="domain" description="Fibronectin type-III 117" evidence="7">
    <location>
        <begin position="30632"/>
        <end position="30727"/>
    </location>
</feature>
<feature type="domain" description="Fibronectin type-III 118" evidence="7">
    <location>
        <begin position="30730"/>
        <end position="30829"/>
    </location>
</feature>
<feature type="domain" description="Ig-like 129" evidence="4">
    <location>
        <begin position="30833"/>
        <end position="30921"/>
    </location>
</feature>
<feature type="domain" description="Fibronectin type-III 119" evidence="7">
    <location>
        <begin position="30932"/>
        <end position="31025"/>
    </location>
</feature>
<feature type="domain" description="Fibronectin type-III 120" evidence="7">
    <location>
        <begin position="31028"/>
        <end position="31127"/>
    </location>
</feature>
<feature type="domain" description="Fibronectin type-III 121" evidence="7">
    <location>
        <begin position="31133"/>
        <end position="31229"/>
    </location>
</feature>
<feature type="domain" description="Ig-like 130" evidence="4">
    <location>
        <begin position="31233"/>
        <end position="31322"/>
    </location>
</feature>
<feature type="domain" description="Fibronectin type-III 122" evidence="7">
    <location>
        <begin position="31329"/>
        <end position="31423"/>
    </location>
</feature>
<feature type="domain" description="Fibronectin type-III 123" evidence="7">
    <location>
        <begin position="31426"/>
        <end position="31521"/>
    </location>
</feature>
<feature type="domain" description="Ig-like 131" evidence="4">
    <location>
        <begin position="31525"/>
        <end position="31616"/>
    </location>
</feature>
<feature type="domain" description="Fibronectin type-III 124" evidence="7">
    <location>
        <begin position="31623"/>
        <end position="31717"/>
    </location>
</feature>
<feature type="domain" description="Fibronectin type-III 125" evidence="7">
    <location>
        <begin position="31723"/>
        <end position="31817"/>
    </location>
</feature>
<feature type="repeat" description="Kelch 16" evidence="4">
    <location>
        <begin position="31742"/>
        <end position="31787"/>
    </location>
</feature>
<feature type="domain" description="Fibronectin type-III 126" evidence="7">
    <location>
        <begin position="31824"/>
        <end position="31920"/>
    </location>
</feature>
<feature type="domain" description="Ig-like 132" evidence="4">
    <location>
        <begin position="31923"/>
        <end position="32012"/>
    </location>
</feature>
<feature type="domain" description="Fibronectin type-III 127" evidence="7">
    <location>
        <begin position="32020"/>
        <end position="32116"/>
    </location>
</feature>
<feature type="domain" description="Fibronectin type-III 128" evidence="7">
    <location>
        <begin position="32120"/>
        <end position="32216"/>
    </location>
</feature>
<feature type="domain" description="Fibronectin type-III 129" evidence="7">
    <location>
        <begin position="32222"/>
        <end position="32317"/>
    </location>
</feature>
<feature type="domain" description="Ig-like 133" evidence="4">
    <location>
        <begin position="32322"/>
        <end position="32410"/>
    </location>
</feature>
<feature type="domain" description="Fibronectin type-III 130" evidence="7">
    <location>
        <begin position="32515"/>
        <end position="32610"/>
    </location>
</feature>
<feature type="repeat" description="WD 15" evidence="4">
    <location>
        <begin position="32601"/>
        <end position="32644"/>
    </location>
</feature>
<feature type="domain" description="Fibronectin type-III 131" evidence="7">
    <location>
        <begin position="32616"/>
        <end position="32711"/>
    </location>
</feature>
<feature type="domain" description="Ig-like 134" evidence="4">
    <location>
        <begin position="32717"/>
        <end position="32807"/>
    </location>
</feature>
<feature type="repeat" description="WD 16" evidence="4">
    <location>
        <begin position="32754"/>
        <end position="32799"/>
    </location>
</feature>
<feature type="domain" description="Ig-like 135" evidence="4">
    <location>
        <begin position="32817"/>
        <end position="32908"/>
    </location>
</feature>
<feature type="domain" description="Fibronectin type-III 132" evidence="7">
    <location>
        <begin position="32913"/>
        <end position="33006"/>
    </location>
</feature>
<feature type="repeat" description="Kelch 17" evidence="4">
    <location>
        <begin position="32932"/>
        <end position="32977"/>
    </location>
</feature>
<feature type="domain" description="Protein kinase" evidence="6">
    <location>
        <begin position="33040"/>
        <end position="33294"/>
    </location>
</feature>
<feature type="repeat" description="WD 17" evidence="4">
    <location>
        <begin position="33152"/>
        <end position="33189"/>
    </location>
</feature>
<feature type="domain" description="Ig-like 136" evidence="4">
    <location>
        <begin position="33358"/>
        <end position="33446"/>
    </location>
</feature>
<feature type="repeat" description="Kelch 18" evidence="4">
    <location>
        <begin position="33366"/>
        <end position="33411"/>
    </location>
</feature>
<feature type="domain" description="Ig-like 137" evidence="4">
    <location>
        <begin position="33478"/>
        <end position="33571"/>
    </location>
</feature>
<feature type="domain" description="Ig-like 138" evidence="4">
    <location>
        <begin position="33583"/>
        <end position="33672"/>
    </location>
</feature>
<feature type="repeat" description="TPR 14" evidence="4">
    <location>
        <begin position="34097"/>
        <end position="34130"/>
    </location>
</feature>
<feature type="domain" description="Ig-like 139" evidence="4">
    <location>
        <begin position="34163"/>
        <end position="34253"/>
    </location>
</feature>
<feature type="domain" description="Ig-like 140" evidence="4">
    <location>
        <begin position="34350"/>
        <end position="34438"/>
    </location>
</feature>
<feature type="repeat" description="TPR 15" evidence="4">
    <location>
        <begin position="34380"/>
        <end position="34413"/>
    </location>
</feature>
<feature type="domain" description="Ig-like 141" evidence="4">
    <location>
        <begin position="34507"/>
        <end position="34596"/>
    </location>
</feature>
<feature type="domain" description="Ig-like 142" evidence="4">
    <location>
        <begin position="34641"/>
        <end position="34729"/>
    </location>
</feature>
<feature type="domain" description="Ig-like 143" evidence="4">
    <location>
        <begin position="34923"/>
        <end position="35011"/>
    </location>
</feature>
<feature type="domain" description="Ig-like 144" evidence="4">
    <location>
        <begin position="35118"/>
        <end position="35209"/>
    </location>
</feature>
<feature type="region of interest" description="Disordered" evidence="8">
    <location>
        <begin position="243"/>
        <end position="315"/>
    </location>
</feature>
<feature type="region of interest" description="ZIS1" evidence="3">
    <location>
        <begin position="252"/>
        <end position="340"/>
    </location>
</feature>
<feature type="region of interest" description="Disordered" evidence="8">
    <location>
        <begin position="854"/>
        <end position="889"/>
    </location>
</feature>
<feature type="region of interest" description="Disordered" evidence="8">
    <location>
        <begin position="1405"/>
        <end position="1449"/>
    </location>
</feature>
<feature type="region of interest" description="ZIS5" evidence="3">
    <location>
        <begin position="1412"/>
        <end position="1446"/>
    </location>
</feature>
<feature type="region of interest" description="Disordered" evidence="8">
    <location>
        <begin position="4205"/>
        <end position="4243"/>
    </location>
</feature>
<feature type="region of interest" description="Disordered" evidence="8">
    <location>
        <begin position="9873"/>
        <end position="9910"/>
    </location>
</feature>
<feature type="region of interest" description="Disordered" evidence="8">
    <location>
        <begin position="9962"/>
        <end position="9984"/>
    </location>
</feature>
<feature type="region of interest" description="Disordered" evidence="8">
    <location>
        <begin position="9999"/>
        <end position="10025"/>
    </location>
</feature>
<feature type="region of interest" description="Disordered" evidence="8">
    <location>
        <begin position="10163"/>
        <end position="10258"/>
    </location>
</feature>
<feature type="region of interest" description="Disordered" evidence="8">
    <location>
        <begin position="10275"/>
        <end position="10318"/>
    </location>
</feature>
<feature type="region of interest" description="Disordered" evidence="8">
    <location>
        <begin position="10371"/>
        <end position="10401"/>
    </location>
</feature>
<feature type="region of interest" description="Disordered" evidence="8">
    <location>
        <begin position="10436"/>
        <end position="10513"/>
    </location>
</feature>
<feature type="region of interest" description="Disordered" evidence="8">
    <location>
        <begin position="10525"/>
        <end position="10566"/>
    </location>
</feature>
<feature type="region of interest" description="Disordered" evidence="8">
    <location>
        <begin position="10585"/>
        <end position="10719"/>
    </location>
</feature>
<feature type="region of interest" description="Disordered" evidence="8">
    <location>
        <begin position="10859"/>
        <end position="11270"/>
    </location>
</feature>
<feature type="region of interest" description="Disordered" evidence="8">
    <location>
        <begin position="11370"/>
        <end position="11460"/>
    </location>
</feature>
<feature type="region of interest" description="Disordered" evidence="8">
    <location>
        <begin position="11572"/>
        <end position="11602"/>
    </location>
</feature>
<feature type="region of interest" description="Disordered" evidence="8">
    <location>
        <begin position="11630"/>
        <end position="11655"/>
    </location>
</feature>
<feature type="region of interest" description="Disordered" evidence="8">
    <location>
        <begin position="11671"/>
        <end position="12421"/>
    </location>
</feature>
<feature type="region of interest" description="Disordered" evidence="8">
    <location>
        <begin position="12454"/>
        <end position="12501"/>
    </location>
</feature>
<feature type="region of interest" description="Disordered" evidence="8">
    <location>
        <begin position="12561"/>
        <end position="12894"/>
    </location>
</feature>
<feature type="region of interest" description="Disordered" evidence="8">
    <location>
        <begin position="15753"/>
        <end position="15777"/>
    </location>
</feature>
<feature type="region of interest" description="Disordered" evidence="8">
    <location>
        <begin position="16772"/>
        <end position="16801"/>
    </location>
</feature>
<feature type="region of interest" description="Disordered" evidence="8">
    <location>
        <begin position="20167"/>
        <end position="20195"/>
    </location>
</feature>
<feature type="region of interest" description="Disordered" evidence="8">
    <location>
        <begin position="20268"/>
        <end position="20289"/>
    </location>
</feature>
<feature type="region of interest" description="Disordered" evidence="8">
    <location>
        <begin position="27952"/>
        <end position="27974"/>
    </location>
</feature>
<feature type="region of interest" description="Disordered" evidence="8">
    <location>
        <begin position="31800"/>
        <end position="31832"/>
    </location>
</feature>
<feature type="region of interest" description="Disordered" evidence="8">
    <location>
        <begin position="32102"/>
        <end position="32129"/>
    </location>
</feature>
<feature type="region of interest" description="Disordered" evidence="8">
    <location>
        <begin position="34010"/>
        <end position="34031"/>
    </location>
</feature>
<feature type="region of interest" description="Disordered" evidence="8">
    <location>
        <begin position="34080"/>
        <end position="34118"/>
    </location>
</feature>
<feature type="region of interest" description="Disordered" evidence="8">
    <location>
        <begin position="34449"/>
        <end position="34506"/>
    </location>
</feature>
<feature type="region of interest" description="Disordered" evidence="8">
    <location>
        <begin position="34611"/>
        <end position="34635"/>
    </location>
</feature>
<feature type="coiled-coil region" evidence="4">
    <location>
        <begin position="2031"/>
        <end position="2058"/>
    </location>
</feature>
<feature type="coiled-coil region" evidence="4">
    <location>
        <begin position="9495"/>
        <end position="9538"/>
    </location>
</feature>
<feature type="compositionally biased region" description="Pro residues" evidence="8">
    <location>
        <begin position="877"/>
        <end position="889"/>
    </location>
</feature>
<feature type="compositionally biased region" description="Low complexity" evidence="8">
    <location>
        <begin position="1405"/>
        <end position="1420"/>
    </location>
</feature>
<feature type="compositionally biased region" description="Polar residues" evidence="8">
    <location>
        <begin position="4228"/>
        <end position="4237"/>
    </location>
</feature>
<feature type="compositionally biased region" description="Basic and acidic residues" evidence="8">
    <location>
        <begin position="9873"/>
        <end position="9892"/>
    </location>
</feature>
<feature type="compositionally biased region" description="Pro residues" evidence="8">
    <location>
        <begin position="9893"/>
        <end position="9907"/>
    </location>
</feature>
<feature type="compositionally biased region" description="Acidic residues" evidence="8">
    <location>
        <begin position="10002"/>
        <end position="10012"/>
    </location>
</feature>
<feature type="compositionally biased region" description="Basic and acidic residues" evidence="8">
    <location>
        <begin position="10163"/>
        <end position="10183"/>
    </location>
</feature>
<feature type="compositionally biased region" description="Basic and acidic residues" evidence="8">
    <location>
        <begin position="10204"/>
        <end position="10225"/>
    </location>
</feature>
<feature type="compositionally biased region" description="Basic and acidic residues" evidence="8">
    <location>
        <begin position="10234"/>
        <end position="10258"/>
    </location>
</feature>
<feature type="compositionally biased region" description="Basic and acidic residues" evidence="8">
    <location>
        <begin position="10289"/>
        <end position="10308"/>
    </location>
</feature>
<feature type="compositionally biased region" description="Pro residues" evidence="8">
    <location>
        <begin position="10309"/>
        <end position="10318"/>
    </location>
</feature>
<feature type="compositionally biased region" description="Acidic residues" evidence="8">
    <location>
        <begin position="10372"/>
        <end position="10381"/>
    </location>
</feature>
<feature type="compositionally biased region" description="Acidic residues" evidence="8">
    <location>
        <begin position="10392"/>
        <end position="10401"/>
    </location>
</feature>
<feature type="compositionally biased region" description="Basic and acidic residues" evidence="8">
    <location>
        <begin position="10445"/>
        <end position="10468"/>
    </location>
</feature>
<feature type="compositionally biased region" description="Pro residues" evidence="8">
    <location>
        <begin position="10470"/>
        <end position="10480"/>
    </location>
</feature>
<feature type="compositionally biased region" description="Basic and acidic residues" evidence="8">
    <location>
        <begin position="10481"/>
        <end position="10496"/>
    </location>
</feature>
<feature type="compositionally biased region" description="Basic and acidic residues" evidence="8">
    <location>
        <begin position="10585"/>
        <end position="10616"/>
    </location>
</feature>
<feature type="compositionally biased region" description="Acidic residues" evidence="8">
    <location>
        <begin position="10617"/>
        <end position="10644"/>
    </location>
</feature>
<feature type="compositionally biased region" description="Basic and acidic residues" evidence="8">
    <location>
        <begin position="10645"/>
        <end position="10665"/>
    </location>
</feature>
<feature type="compositionally biased region" description="Pro residues" evidence="8">
    <location>
        <begin position="10677"/>
        <end position="10686"/>
    </location>
</feature>
<feature type="compositionally biased region" description="Basic and acidic residues" evidence="8">
    <location>
        <begin position="10861"/>
        <end position="10921"/>
    </location>
</feature>
<feature type="compositionally biased region" description="Basic and acidic residues" evidence="8">
    <location>
        <begin position="10938"/>
        <end position="10949"/>
    </location>
</feature>
<feature type="compositionally biased region" description="Basic and acidic residues" evidence="8">
    <location>
        <begin position="10966"/>
        <end position="10986"/>
    </location>
</feature>
<feature type="compositionally biased region" description="Acidic residues" evidence="8">
    <location>
        <begin position="11008"/>
        <end position="11076"/>
    </location>
</feature>
<feature type="compositionally biased region" description="Basic and acidic residues" evidence="8">
    <location>
        <begin position="11116"/>
        <end position="11159"/>
    </location>
</feature>
<feature type="compositionally biased region" description="Acidic residues" evidence="8">
    <location>
        <begin position="11165"/>
        <end position="11199"/>
    </location>
</feature>
<feature type="compositionally biased region" description="Basic and acidic residues" evidence="8">
    <location>
        <begin position="11233"/>
        <end position="11270"/>
    </location>
</feature>
<feature type="compositionally biased region" description="Basic and acidic residues" evidence="8">
    <location>
        <begin position="11370"/>
        <end position="11382"/>
    </location>
</feature>
<feature type="compositionally biased region" description="Basic and acidic residues" evidence="8">
    <location>
        <begin position="11396"/>
        <end position="11424"/>
    </location>
</feature>
<feature type="compositionally biased region" description="Basic and acidic residues" evidence="8">
    <location>
        <begin position="11432"/>
        <end position="11452"/>
    </location>
</feature>
<feature type="compositionally biased region" description="Basic and acidic residues" evidence="8">
    <location>
        <begin position="11630"/>
        <end position="11643"/>
    </location>
</feature>
<feature type="compositionally biased region" description="Low complexity" evidence="8">
    <location>
        <begin position="11671"/>
        <end position="11681"/>
    </location>
</feature>
<feature type="compositionally biased region" description="Basic and acidic residues" evidence="8">
    <location>
        <begin position="11682"/>
        <end position="11694"/>
    </location>
</feature>
<feature type="compositionally biased region" description="Basic and acidic residues" evidence="8">
    <location>
        <begin position="11705"/>
        <end position="11716"/>
    </location>
</feature>
<feature type="compositionally biased region" description="Pro residues" evidence="8">
    <location>
        <begin position="11721"/>
        <end position="11730"/>
    </location>
</feature>
<feature type="compositionally biased region" description="Acidic residues" evidence="8">
    <location>
        <begin position="11734"/>
        <end position="11745"/>
    </location>
</feature>
<feature type="compositionally biased region" description="Pro residues" evidence="8">
    <location>
        <begin position="11749"/>
        <end position="11758"/>
    </location>
</feature>
<feature type="compositionally biased region" description="Basic and acidic residues" evidence="8">
    <location>
        <begin position="11761"/>
        <end position="11772"/>
    </location>
</feature>
<feature type="compositionally biased region" description="Basic and acidic residues" evidence="8">
    <location>
        <begin position="11789"/>
        <end position="11800"/>
    </location>
</feature>
<feature type="compositionally biased region" description="Basic and acidic residues" evidence="8">
    <location>
        <begin position="11817"/>
        <end position="11828"/>
    </location>
</feature>
<feature type="compositionally biased region" description="Low complexity" evidence="8">
    <location>
        <begin position="11829"/>
        <end position="11854"/>
    </location>
</feature>
<feature type="compositionally biased region" description="Pro residues" evidence="8">
    <location>
        <begin position="11859"/>
        <end position="11874"/>
    </location>
</feature>
<feature type="compositionally biased region" description="Basic and acidic residues" evidence="8">
    <location>
        <begin position="11875"/>
        <end position="11885"/>
    </location>
</feature>
<feature type="compositionally biased region" description="Pro residues" evidence="8">
    <location>
        <begin position="11887"/>
        <end position="11901"/>
    </location>
</feature>
<feature type="compositionally biased region" description="Basic and acidic residues" evidence="8">
    <location>
        <begin position="11909"/>
        <end position="11922"/>
    </location>
</feature>
<feature type="compositionally biased region" description="Low complexity" evidence="8">
    <location>
        <begin position="11923"/>
        <end position="11934"/>
    </location>
</feature>
<feature type="compositionally biased region" description="Basic and acidic residues" evidence="8">
    <location>
        <begin position="11962"/>
        <end position="11989"/>
    </location>
</feature>
<feature type="compositionally biased region" description="Basic and acidic residues" evidence="8">
    <location>
        <begin position="12038"/>
        <end position="12049"/>
    </location>
</feature>
<feature type="compositionally biased region" description="Low complexity" evidence="8">
    <location>
        <begin position="12050"/>
        <end position="12061"/>
    </location>
</feature>
<feature type="compositionally biased region" description="Basic and acidic residues" evidence="8">
    <location>
        <begin position="12111"/>
        <end position="12125"/>
    </location>
</feature>
<feature type="compositionally biased region" description="Basic and acidic residues" evidence="8">
    <location>
        <begin position="12161"/>
        <end position="12172"/>
    </location>
</feature>
<feature type="compositionally biased region" description="Pro residues" evidence="8">
    <location>
        <begin position="12177"/>
        <end position="12186"/>
    </location>
</feature>
<feature type="compositionally biased region" description="Acidic residues" evidence="8">
    <location>
        <begin position="12190"/>
        <end position="12201"/>
    </location>
</feature>
<feature type="compositionally biased region" description="Pro residues" evidence="8">
    <location>
        <begin position="12205"/>
        <end position="12214"/>
    </location>
</feature>
<feature type="compositionally biased region" description="Basic and acidic residues" evidence="8">
    <location>
        <begin position="12217"/>
        <end position="12228"/>
    </location>
</feature>
<feature type="compositionally biased region" description="Basic and acidic residues" evidence="8">
    <location>
        <begin position="12245"/>
        <end position="12256"/>
    </location>
</feature>
<feature type="compositionally biased region" description="Basic and acidic residues" evidence="8">
    <location>
        <begin position="12273"/>
        <end position="12284"/>
    </location>
</feature>
<feature type="compositionally biased region" description="Low complexity" evidence="8">
    <location>
        <begin position="12285"/>
        <end position="12310"/>
    </location>
</feature>
<feature type="compositionally biased region" description="Pro residues" evidence="8">
    <location>
        <begin position="12315"/>
        <end position="12326"/>
    </location>
</feature>
<feature type="compositionally biased region" description="Acidic residues" evidence="8">
    <location>
        <begin position="12327"/>
        <end position="12346"/>
    </location>
</feature>
<feature type="compositionally biased region" description="Basic and acidic residues" evidence="8">
    <location>
        <begin position="12358"/>
        <end position="12369"/>
    </location>
</feature>
<feature type="compositionally biased region" description="Basic and acidic residues" evidence="8">
    <location>
        <begin position="12386"/>
        <end position="12403"/>
    </location>
</feature>
<feature type="compositionally biased region" description="Basic and acidic residues" evidence="8">
    <location>
        <begin position="12411"/>
        <end position="12421"/>
    </location>
</feature>
<feature type="compositionally biased region" description="Acidic residues" evidence="8">
    <location>
        <begin position="12463"/>
        <end position="12487"/>
    </location>
</feature>
<feature type="compositionally biased region" description="Basic and acidic residues" evidence="8">
    <location>
        <begin position="12561"/>
        <end position="12589"/>
    </location>
</feature>
<feature type="compositionally biased region" description="Basic and acidic residues" evidence="8">
    <location>
        <begin position="12612"/>
        <end position="12638"/>
    </location>
</feature>
<feature type="compositionally biased region" description="Acidic residues" evidence="8">
    <location>
        <begin position="12640"/>
        <end position="12652"/>
    </location>
</feature>
<feature type="compositionally biased region" description="Basic and acidic residues" evidence="8">
    <location>
        <begin position="12657"/>
        <end position="12667"/>
    </location>
</feature>
<feature type="compositionally biased region" description="Basic and acidic residues" evidence="8">
    <location>
        <begin position="12680"/>
        <end position="12689"/>
    </location>
</feature>
<feature type="compositionally biased region" description="Basic and acidic residues" evidence="8">
    <location>
        <begin position="12698"/>
        <end position="12710"/>
    </location>
</feature>
<feature type="compositionally biased region" description="Basic and acidic residues" evidence="8">
    <location>
        <begin position="12718"/>
        <end position="12739"/>
    </location>
</feature>
<feature type="compositionally biased region" description="Basic and acidic residues" evidence="8">
    <location>
        <begin position="12746"/>
        <end position="12768"/>
    </location>
</feature>
<feature type="compositionally biased region" description="Basic and acidic residues" evidence="8">
    <location>
        <begin position="12785"/>
        <end position="12799"/>
    </location>
</feature>
<feature type="compositionally biased region" description="Basic and acidic residues" evidence="8">
    <location>
        <begin position="12811"/>
        <end position="12821"/>
    </location>
</feature>
<feature type="compositionally biased region" description="Basic and acidic residues" evidence="8">
    <location>
        <begin position="12845"/>
        <end position="12857"/>
    </location>
</feature>
<feature type="compositionally biased region" description="Basic and acidic residues" evidence="8">
    <location>
        <begin position="20180"/>
        <end position="20195"/>
    </location>
</feature>
<feature type="compositionally biased region" description="Pro residues" evidence="8">
    <location>
        <begin position="32114"/>
        <end position="32124"/>
    </location>
</feature>
<feature type="compositionally biased region" description="Basic and acidic residues" evidence="8">
    <location>
        <begin position="34010"/>
        <end position="34020"/>
    </location>
</feature>
<feature type="compositionally biased region" description="Basic and acidic residues" evidence="8">
    <location>
        <begin position="34093"/>
        <end position="34104"/>
    </location>
</feature>
<feature type="compositionally biased region" description="Basic and acidic residues" evidence="8">
    <location>
        <begin position="34456"/>
        <end position="34466"/>
    </location>
</feature>
<feature type="compositionally biased region" description="Polar residues" evidence="8">
    <location>
        <begin position="34611"/>
        <end position="34621"/>
    </location>
</feature>
<feature type="active site" description="Proton acceptor" evidence="2 6">
    <location>
        <position position="33160"/>
    </location>
</feature>
<feature type="binding site" evidence="2 6">
    <location>
        <begin position="33046"/>
        <end position="33054"/>
    </location>
    <ligand>
        <name>ATP</name>
        <dbReference type="ChEBI" id="CHEBI:30616"/>
    </ligand>
</feature>
<feature type="binding site" evidence="2 6">
    <location>
        <position position="33069"/>
    </location>
    <ligand>
        <name>ATP</name>
        <dbReference type="ChEBI" id="CHEBI:30616"/>
    </ligand>
</feature>
<feature type="modified residue" description="Omega-N-methylarginine" evidence="17">
    <location>
        <position position="263"/>
    </location>
</feature>
<feature type="modified residue" description="Phosphoserine" evidence="16">
    <location>
        <position position="264"/>
    </location>
</feature>
<feature type="modified residue" description="Phosphothreonine" evidence="16">
    <location>
        <position position="266"/>
    </location>
</feature>
<feature type="modified residue" description="Omega-N-methylarginine" evidence="17">
    <location>
        <position position="278"/>
    </location>
</feature>
<feature type="modified residue" description="Omega-N-methylarginine" evidence="17">
    <location>
        <position position="286"/>
    </location>
</feature>
<feature type="modified residue" description="Asymmetric dimethylarginine; alternate" evidence="17">
    <location>
        <position position="296"/>
    </location>
</feature>
<feature type="modified residue" description="Omega-N-methylarginine; alternate" evidence="17">
    <location>
        <position position="296"/>
    </location>
</feature>
<feature type="modified residue" description="Phosphothreonine" evidence="16">
    <location>
        <position position="299"/>
    </location>
</feature>
<feature type="modified residue" description="Phosphoserine" evidence="16">
    <location>
        <position position="301"/>
    </location>
</feature>
<feature type="modified residue" description="Omega-N-methylarginine" evidence="17">
    <location>
        <position position="304"/>
    </location>
</feature>
<feature type="modified residue" description="Phosphoserine" evidence="16">
    <location>
        <position position="307"/>
    </location>
</feature>
<feature type="modified residue" description="Phosphoserine" evidence="16">
    <location>
        <position position="322"/>
    </location>
</feature>
<feature type="modified residue" description="Phosphoserine" evidence="16">
    <location>
        <position position="756"/>
    </location>
</feature>
<feature type="modified residue" description="Phosphoserine" evidence="16">
    <location>
        <position position="1251"/>
    </location>
</feature>
<feature type="modified residue" description="Phosphoserine" evidence="16">
    <location>
        <position position="1415"/>
    </location>
</feature>
<feature type="modified residue" description="Phosphoserine" evidence="16">
    <location>
        <position position="1420"/>
    </location>
</feature>
<feature type="modified residue" description="Phosphoserine" evidence="16">
    <location>
        <position position="1424"/>
    </location>
</feature>
<feature type="modified residue" description="Phosphoserine" evidence="16">
    <location>
        <position position="1429"/>
    </location>
</feature>
<feature type="modified residue" description="Phosphoserine" evidence="16">
    <location>
        <position position="1434"/>
    </location>
</feature>
<feature type="modified residue" description="Phosphoserine" evidence="16">
    <location>
        <position position="2078"/>
    </location>
</feature>
<feature type="modified residue" description="Phosphoserine" evidence="16">
    <location>
        <position position="2080"/>
    </location>
</feature>
<feature type="modified residue" description="Phosphoserine" evidence="16">
    <location>
        <position position="3516"/>
    </location>
</feature>
<feature type="modified residue" description="Phosphoserine" evidence="16">
    <location>
        <position position="3784"/>
    </location>
</feature>
<feature type="modified residue" description="Phosphothreonine" evidence="16">
    <location>
        <position position="8387"/>
    </location>
</feature>
<feature type="modified residue" description="Phosphoserine" evidence="15 16">
    <location>
        <position position="9144"/>
    </location>
</feature>
<feature type="modified residue" description="Phosphoserine" evidence="3">
    <location>
        <position position="9164"/>
    </location>
</feature>
<feature type="modified residue" description="Phosphothreonine" evidence="3">
    <location>
        <position position="9168"/>
    </location>
</feature>
<feature type="modified residue" description="Phosphoserine" evidence="16">
    <location>
        <position position="9459"/>
    </location>
</feature>
<feature type="modified residue" description="Phosphoserine" evidence="16">
    <location>
        <position position="10281"/>
    </location>
</feature>
<feature type="modified residue" description="Phosphothreonine" evidence="16">
    <location>
        <position position="12869"/>
    </location>
</feature>
<feature type="modified residue" description="Phosphoserine" evidence="16">
    <location>
        <position position="12884"/>
    </location>
</feature>
<feature type="modified residue" description="Phosphoserine" evidence="16">
    <location>
        <position position="12972"/>
    </location>
</feature>
<feature type="modified residue" description="Phosphoserine" evidence="16">
    <location>
        <position position="13904"/>
    </location>
</feature>
<feature type="modified residue" description="Phosphoserine" evidence="16">
    <location>
        <position position="21152"/>
    </location>
</feature>
<feature type="modified residue" description="Phosphoserine" evidence="16">
    <location>
        <position position="21895"/>
    </location>
</feature>
<feature type="modified residue" description="Phosphoserine" evidence="16">
    <location>
        <position position="21980"/>
    </location>
</feature>
<feature type="modified residue" description="Phosphoserine" evidence="16">
    <location>
        <position position="22390"/>
    </location>
</feature>
<feature type="modified residue" description="Phosphoserine" evidence="3">
    <location>
        <position position="23387"/>
    </location>
</feature>
<feature type="modified residue" description="Phosphothreonine" evidence="3">
    <location>
        <position position="23396"/>
    </location>
</feature>
<feature type="modified residue" description="Phosphoserine" evidence="16">
    <location>
        <position position="25920"/>
    </location>
</feature>
<feature type="modified residue" description="Phosphoserine" evidence="16">
    <location>
        <position position="32870"/>
    </location>
</feature>
<feature type="modified residue" description="Phosphotyrosine" evidence="3">
    <location>
        <position position="33203"/>
    </location>
</feature>
<feature type="modified residue" description="Phosphothreonine" evidence="16">
    <location>
        <position position="33859"/>
    </location>
</feature>
<feature type="modified residue" description="Phosphoserine" evidence="16">
    <location>
        <position position="33861"/>
    </location>
</feature>
<feature type="modified residue" description="Phosphoserine" evidence="16">
    <location>
        <position position="33875"/>
    </location>
</feature>
<feature type="modified residue" description="Phosphoserine" evidence="16">
    <location>
        <position position="33880"/>
    </location>
</feature>
<feature type="modified residue" description="Phosphoserine" evidence="16">
    <location>
        <position position="33915"/>
    </location>
</feature>
<feature type="modified residue" description="Phosphoserine" evidence="16">
    <location>
        <position position="34009"/>
    </location>
</feature>
<feature type="modified residue" description="Phosphoserine" evidence="16">
    <location>
        <position position="34292"/>
    </location>
</feature>
<feature type="modified residue" description="Phosphoserine" evidence="16">
    <location>
        <position position="34464"/>
    </location>
</feature>
<feature type="modified residue" description="Phosphothreonine" evidence="16">
    <location>
        <position position="34467"/>
    </location>
</feature>
<feature type="modified residue" description="Phosphoserine" evidence="16">
    <location>
        <position position="34470"/>
    </location>
</feature>
<feature type="modified residue" description="Phosphoserine" evidence="16">
    <location>
        <position position="34476"/>
    </location>
</feature>
<feature type="modified residue" description="Phosphothreonine" evidence="16">
    <location>
        <position position="34481"/>
    </location>
</feature>
<feature type="modified residue" description="Phosphoserine" evidence="16">
    <location>
        <position position="34756"/>
    </location>
</feature>
<feature type="disulfide bond" evidence="5">
    <location>
        <begin position="967"/>
        <end position="1018"/>
    </location>
</feature>
<feature type="disulfide bond" evidence="5">
    <location>
        <begin position="1730"/>
        <end position="1783"/>
    </location>
</feature>
<feature type="disulfide bond" evidence="5">
    <location>
        <begin position="2202"/>
        <end position="2252"/>
    </location>
</feature>
<feature type="disulfide bond" evidence="5">
    <location>
        <begin position="3265"/>
        <end position="3317"/>
    </location>
</feature>
<feature type="disulfide bond" evidence="5">
    <location>
        <begin position="4365"/>
        <end position="4416"/>
    </location>
</feature>
<feature type="disulfide bond" evidence="5">
    <location>
        <begin position="4460"/>
        <end position="4511"/>
    </location>
</feature>
<feature type="disulfide bond" evidence="5">
    <location>
        <begin position="4553"/>
        <end position="4604"/>
    </location>
</feature>
<feature type="disulfide bond" evidence="5">
    <location>
        <begin position="4647"/>
        <end position="4698"/>
    </location>
</feature>
<feature type="disulfide bond" evidence="5">
    <location>
        <begin position="4740"/>
        <end position="4791"/>
    </location>
</feature>
<feature type="disulfide bond" evidence="5">
    <location>
        <begin position="5022"/>
        <end position="5073"/>
    </location>
</feature>
<feature type="disulfide bond" evidence="5">
    <location>
        <begin position="5209"/>
        <end position="5260"/>
    </location>
</feature>
<feature type="disulfide bond" evidence="5">
    <location>
        <begin position="5584"/>
        <end position="5635"/>
    </location>
</feature>
<feature type="disulfide bond" evidence="5">
    <location>
        <begin position="5771"/>
        <end position="5822"/>
    </location>
</feature>
<feature type="disulfide bond" evidence="5">
    <location>
        <begin position="5864"/>
        <end position="5915"/>
    </location>
</feature>
<feature type="disulfide bond" evidence="5">
    <location>
        <begin position="6146"/>
        <end position="6197"/>
    </location>
</feature>
<feature type="disulfide bond" evidence="5">
    <location>
        <begin position="6333"/>
        <end position="6384"/>
    </location>
</feature>
<feature type="disulfide bond" evidence="5">
    <location>
        <begin position="6426"/>
        <end position="6477"/>
    </location>
</feature>
<feature type="disulfide bond" evidence="5">
    <location>
        <begin position="6709"/>
        <end position="6760"/>
    </location>
</feature>
<feature type="disulfide bond" evidence="5">
    <location>
        <begin position="6988"/>
        <end position="7039"/>
    </location>
</feature>
<feature type="disulfide bond" evidence="5">
    <location>
        <begin position="7084"/>
        <end position="7135"/>
    </location>
</feature>
<feature type="disulfide bond" evidence="5">
    <location>
        <begin position="7180"/>
        <end position="7231"/>
    </location>
</feature>
<feature type="disulfide bond" evidence="5">
    <location>
        <begin position="7274"/>
        <end position="7325"/>
    </location>
</feature>
<feature type="disulfide bond" evidence="5">
    <location>
        <begin position="7367"/>
        <end position="7418"/>
    </location>
</feature>
<feature type="disulfide bond" evidence="5">
    <location>
        <begin position="7650"/>
        <end position="7701"/>
    </location>
</feature>
<feature type="disulfide bond" evidence="5">
    <location>
        <begin position="7929"/>
        <end position="7980"/>
    </location>
</feature>
<feature type="disulfide bond" evidence="5">
    <location>
        <begin position="8025"/>
        <end position="8076"/>
    </location>
</feature>
<feature type="disulfide bond" evidence="5">
    <location>
        <begin position="8121"/>
        <end position="8172"/>
    </location>
</feature>
<feature type="disulfide bond" evidence="5">
    <location>
        <begin position="8215"/>
        <end position="8266"/>
    </location>
</feature>
<feature type="disulfide bond" evidence="5">
    <location>
        <begin position="8308"/>
        <end position="8359"/>
    </location>
</feature>
<feature type="disulfide bond" evidence="5">
    <location>
        <begin position="8591"/>
        <end position="8642"/>
    </location>
</feature>
<feature type="disulfide bond" evidence="5">
    <location>
        <begin position="8870"/>
        <end position="8921"/>
    </location>
</feature>
<feature type="disulfide bond" evidence="5">
    <location>
        <begin position="8966"/>
        <end position="9017"/>
    </location>
</feature>
<feature type="disulfide bond" evidence="5">
    <location>
        <begin position="9062"/>
        <end position="9113"/>
    </location>
</feature>
<feature type="disulfide bond" evidence="5">
    <location>
        <begin position="9255"/>
        <end position="9306"/>
    </location>
</feature>
<feature type="disulfide bond" evidence="5">
    <location>
        <begin position="9654"/>
        <end position="9704"/>
    </location>
</feature>
<feature type="disulfide bond" evidence="5">
    <location>
        <begin position="12929"/>
        <end position="12979"/>
    </location>
</feature>
<feature type="disulfide bond" evidence="5">
    <location>
        <begin position="13473"/>
        <end position="13522"/>
    </location>
</feature>
<feature type="disulfide bond" evidence="5">
    <location>
        <begin position="13828"/>
        <end position="13878"/>
    </location>
</feature>
<feature type="disulfide bond" evidence="5">
    <location>
        <begin position="14095"/>
        <end position="14145"/>
    </location>
</feature>
<feature type="disulfide bond" evidence="5">
    <location>
        <begin position="14184"/>
        <end position="14234"/>
    </location>
</feature>
<feature type="disulfide bond" evidence="5">
    <location>
        <begin position="14273"/>
        <end position="14323"/>
    </location>
</feature>
<feature type="disulfide bond" evidence="5">
    <location>
        <begin position="14633"/>
        <end position="14683"/>
    </location>
</feature>
<feature type="disulfide bond" evidence="5">
    <location>
        <begin position="32343"/>
        <end position="32394"/>
    </location>
</feature>
<feature type="disulfide bond" evidence="5">
    <location>
        <begin position="33378"/>
        <end position="33430"/>
    </location>
</feature>
<feature type="disulfide bond" evidence="5">
    <location>
        <begin position="34526"/>
        <end position="34580"/>
    </location>
</feature>
<feature type="splice variant" id="VSP_052606" description="In isoform 2 and isoform 3." evidence="12">
    <location>
        <begin position="556"/>
        <end position="601"/>
    </location>
</feature>
<feature type="splice variant" id="VSP_052607" description="In isoform 3." evidence="12">
    <original>IASLLSAEEDFQTYSSDLRLPNANETLELLSEPPARSTQFDSRQEGAAPVFIREISDVEISVEDVAKLSVTVTGCPKPKIQWFFNGMLLTPSADYKFVFDGDTHSLIILFTRFQDEGEYTCLASNEYGKAVCSAHLRISPRGERSTEMESGEKKALEKPKGPCPPYFFKELKPVHCGPGIPAVFEYSVHGEPAPTVLWFKEDMPLYTSVCYTIIHSPDGSGTFIVNDPQRGDSGLYLCKAQNLWGESTCAAELLVLPEDTDVPDASCKEESTLGVPGDFLETSARGPLVQGVDSRQEITAFAEGTISKAALIAEETLQLSYERSVDDSEVGTGVTIGAQKLPPVVLSTPQGTGELPSIDGAVHTQPGRGPPPTLNLQAVQAQTTLPKEATLQFEEPEGVFPGASSAAQVSPVTIKPLITLTAEPKGNYPQSSTAAPDHALLSSVAAETLQLGEKKIPEVDKAQRALLLSQSLAEGCVESLEVPDVAVSNMRSEPQVPFQHTCTEGKILMASADTLKSTGQDVALRTEEGKSLSFPLALEEKQVLLKEEQSEVVAVPTSQTSKSEKEPEAIKGVKEVREQELLSKETLFPSMPEEQRLHLKTQVRRALQAAVAREQANLFSEWLRNIDKVEVTAVNFTQEPKRILCTYLITSVSSLTEELTVTIEDIDPQMANLETGLKDALCSIVCEERNILMAEDPRIHEEDKIDVQGGRDHLSDAQKVETVIEAEADSKYLVSKEEVSWSKVESQLKDGDTNEVPQAETLKLAEESGTQKTSTEMSQEEAEGTLADLCPAVLKHLVDTISEEGDTVHLTSSISNAKEVHWYFKGNLVPSDGKFKCLKEQNAYTLVIEAVKTEDEGEYVCEASNDSGKAKTSAKLTVGERAAPVIKRRIEPLEVALGHLAKFTCEIQGAPNVRFQWFKAGREIYESDKCSIRSSNYVSSLEILRTQVVDCGEYTCKASNEYGSVSCTATLTVTEAYPPTFLSRPKALTTFVGKAAKFLCTVSGTPVIEIIWQKDGAALSPSPDCRVTDADNKHSLELSNLTVQDRGIYSCKASNKFGADICQAELTIIDKPHFIKELEAVQSAINKKIHLECQVDEDRKVTITWSKDGQKLPAGKDYKIYFEDKIASLEIPLAKLKDSGTYTCTASNEAGSSSSSAAVAVREPPSFVKKVDPSYLMLPGESARLHCKLKGSPVIQVTWFKNNKELSESNTVRMSFVNSEAILDITDVKVDDSGTYSCEATNDVGSDSCSTEVVIKEPPSFIKTLEPADIVRGANALLQCEIAGTGPFEVNWFKDKKQIRSSKKYRLFTQKTFVYLEISSFNSADVGDYECVVANEVGKCGCVATHLLKEPPTFVKKVDDFTALAGQTVTLQAAVRGSEPISVMWMKGQEVIKEDGKIKMSFSNGVAVLTIPDVQISLGGKYTCLAENEAGSQTSVGELIVKEPAKIIERAELIQVTAGDPATLEYTVSGTPELKPKWYKDGRPLVASKKYRISFKNNIAQLKFYSAELHDSGQYTFEISNEVGSSSCETTFTVLDRDIAPLFTKPLRNVDSVVGGACRLDCKIAGSLPMRVSWFKDGKELTASDRYQIAFVEGTASLEISRVDMNDAGNFTCRATNSVGSKDSSGALIVQEPPSFVTKPGSRDVLPGSAVCLKSAFQGSAPLTIKWFKGDKELVSGGSCYITKETSESSLELYAVKTSDSGTYTCKVSNVAGSVECSADLFVKEPATFIEKLEPSQLLKKGDGTQLACKVTGTPPIKITWFANDRELRESSKHKMSFAESTAVLRLTDVAIEDSGEYMCEAQNEAGSDHCTGIVIVKESPYFTKEFKSIEVLKEYDVMLLAEVAGTPPFEITWFKDNTTLRSGRKYKTFLQDQLVSLQVLKFVAADAGEYQCRVTNEVGSSTCSARVTLREPPSFIKKIEATSSLRGGTAAFQATLKGSLPITVTWLKDNDEITEDDNIRMTFENNVASLYLSGIEVKHDGKYVCQAKNDAGIQRCSALLSVKEPATIMEEAVSIDVTQGDPATLQVKFSGTKEISAK</original>
    <variation>ELFEGEADGSGDARGAFSDSEDIDHHSLMARRYANRTSSTSSWPEYFKPTFTQKLTFQYALEGEPIVFTCSLVAYPTPEMTWFHNNRPIPTGLRRVVRTETDLHQHSSSLEVKRVQGRDSGSYRFLAVNSEGSAESSASLHVIQKGQDERYLEFLKRAEQTWENTRGLGERREERIKVGLRFTGSPFNKKQDVEEKGMVRTIHFRSASPVRRADYVYNDEWSESKFDIRGCLSVGESFLDEETKMKLQRLREARKIFLEKKKLSLLEASSEVNSVTVRSEDIVGDAPLSREEGKRGFGREFAEDRHRVDNSAEGVIENPYSVPNQIHQNREPPSSVRATGDEDLQTENSPDQETFLEESLQKGYLCEHVLVGENLQAVEWFEESVTSTVIREPLPFTSNEEVHGYKSRGICESPDKVSQVLTPYPSESLDTFVDAKETEDVDSGGGTQRGWQEGQCHASTKVEEFKVEHEEKTRSFENYFQKHPQRCPPSFLQDIESQEVYEGDSCKFVCHFQGYPQPIVTWYNNEMPVPRSQGFTTHTFENYSTLTFPSVQPQHGGSVTCVLFNQYGTVKATSMLRVKAKPRYESQPHKVPVWPDYADEEEELALVFDQARRIHPSFSQERQEHLHMLKAHLPELPSADRELLSFPVEIQITAATPTPEQNKECRELFELEPEVTPRDQAIQSPKHKFIFSSDITNEPPKMLQEMPRSASCREGNSVMLECLISGEPQPVVMWFHNGVLVKPNQRFEMEEVNCSYRLYINDASSQDSGRYQCVAQNDSGIAESILDLTVEPITYREYSQLENESRIYAQYSKNQQTQVQGEPVRTHFYDHTVSPFAAQSNIKEYTIREYFQSLETVGELEKKNEVYCPTTVEKLSKSMQHASRPTDIEKPHRMEFLQCQDEEHIGERSQSLQAGATICPFVDDFSKANIRNKVSDDVGYHGPDWGNMKGHSQSDYVLNIHSKRTSNTVQDVEDSPVPTYEEALEEERYYPGKKVRHKVIAFEKLQRAERGVVEKRRTKKSFVTAPQKKWDNREFSLTQNEPGSSNMYRAEEVASHTEADSSNIIMDLKQLSSQAHEEFEIEERGRQEEILPLDQEKFELEAPVTFDLKQFHSQIESTGMNFQGLANGQQDKSSLKTQQPASEMANPEDVVFDLKQMYSHIEDPGEVFQGQETESKQETCHKEEISIYQSFQYAQEENTAILKPDHVPESFSEVIHGEARALFQTPSADVEEANVSETGASVENGDKTFISQLKRAASEEECLEDHEMEDGPTLKPAFGMTQGYEGTLENPRGAVHGAEVPHRRLSLSQDLPFLMTGEQQDLKEQLSESIEASGEETYHEVHVPSESSFSTMEGEKIEKSLLENLPRLEEAQTTKEGEYETSLTQYLLAEGRYEVPEVRDTKHKAQLVQSDSTTSMEVEEVTFNTVYEYYNQKQESVGRPYSPESDISIDVGSTSSEDLSELDQFYSPPSSVENLESPKSPDLYFKPSDRIEQPVANSRAEENGERYSTPSEGEIPERYSTPSGEALERYSTPPGEALERYSTPPGEALERYSTPPGEALERFSTPPGEALERFSTPPGEALERYSTPPGEALERFSTPPGEKLERGFIPTRGPNHARNVSRNLSELEREDSTANEHFHTPTDERSSPYETWRSDSFGTPNEAIEPKDNEMPPSFIEPLSRRKIYENTTLGFIIEVEGLPVPGVKWYRNKSLLEPDDRIKMERVGNVCSLEIANIQKGDGGEYLCHAVNIIGEAKSFAIVDVIPQEERAVALPPPVTHQHIMEFDVANSNSSRTPSPQEIVLEVELSEKDVKEFEKQVKIVTVPEFTPDHKSMIVSLDILPLSLVDPSAESQGQEGREFKIDLEAFEMPPRFITPICDFRIPENSSAVFKCSVIGIPPPEVRWYKEYMCIEPDDTKYVISEEKGSHSLRIQDVGPSDCATYRCRALNSAGEAICRGFLTMGDSQVSAVATRTSKVTLSSQKEELVLRSRYADSFFEFQVVDGPPRFIKGISDCHAPLGTAAYFQCLVRGSPRPTVSWYKDGKLVQGSRFSAEESGIGFHNLFITGLVKGDEGEYSCVATNNSGMARSSAILTLS</variation>
    <location>
        <begin position="3461"/>
        <end position="5499"/>
    </location>
</feature>
<feature type="splice variant" id="VSP_052608" description="In isoform 2." evidence="12">
    <location>
        <begin position="4435"/>
        <end position="12715"/>
    </location>
</feature>
<feature type="splice variant" id="VSP_052609" description="In isoform 3." evidence="12">
    <location>
        <begin position="5500"/>
        <end position="35213"/>
    </location>
</feature>
<feature type="strand" evidence="18">
    <location>
        <begin position="9724"/>
        <end position="9726"/>
    </location>
</feature>
<feature type="strand" evidence="18">
    <location>
        <begin position="9731"/>
        <end position="9746"/>
    </location>
</feature>
<feature type="strand" evidence="18">
    <location>
        <begin position="9751"/>
        <end position="9756"/>
    </location>
</feature>
<feature type="strand" evidence="18">
    <location>
        <begin position="9764"/>
        <end position="9772"/>
    </location>
</feature>
<feature type="strand" evidence="18">
    <location>
        <begin position="9775"/>
        <end position="9782"/>
    </location>
</feature>
<feature type="helix" evidence="18">
    <location>
        <begin position="9785"/>
        <end position="9787"/>
    </location>
</feature>
<feature type="strand" evidence="18">
    <location>
        <begin position="9789"/>
        <end position="9796"/>
    </location>
</feature>
<feature type="strand" evidence="18">
    <location>
        <begin position="9798"/>
        <end position="9800"/>
    </location>
</feature>
<feature type="strand" evidence="18">
    <location>
        <begin position="9803"/>
        <end position="9809"/>
    </location>
</feature>
<feature type="modified residue" description="Phosphoserine" evidence="16">
    <location sequence="A2ASS6-3">
        <position position="3432"/>
    </location>
</feature>
<feature type="modified residue" description="Phosphoserine" evidence="16">
    <location sequence="A2ASS6-3">
        <position position="3636"/>
    </location>
</feature>
<feature type="modified residue" description="Phosphoserine" evidence="16">
    <location sequence="A2ASS6-3">
        <position position="3678"/>
    </location>
</feature>
<feature type="modified residue" description="Phosphoserine" evidence="16">
    <location sequence="A2ASS6-3">
        <position position="3763"/>
    </location>
</feature>
<feature type="modified residue" description="Phosphoserine" evidence="16">
    <location sequence="A2ASS6-3">
        <position position="3827"/>
    </location>
</feature>
<feature type="modified residue" description="Phosphothreonine" evidence="16">
    <location sequence="A2ASS6-3">
        <position position="3836"/>
    </location>
</feature>
<feature type="modified residue" description="Phosphoserine" evidence="16">
    <location sequence="A2ASS6-3">
        <position position="4672"/>
    </location>
</feature>
<feature type="modified residue" description="Phosphoserine" evidence="16">
    <location sequence="A2ASS6-3">
        <position position="4720"/>
    </location>
</feature>
<evidence type="ECO:0000250" key="1"/>
<evidence type="ECO:0000250" key="2">
    <source>
        <dbReference type="UniProtKB" id="P28523"/>
    </source>
</evidence>
<evidence type="ECO:0000250" key="3">
    <source>
        <dbReference type="UniProtKB" id="Q8WZ42"/>
    </source>
</evidence>
<evidence type="ECO:0000255" key="4"/>
<evidence type="ECO:0000255" key="5">
    <source>
        <dbReference type="PROSITE-ProRule" id="PRU00114"/>
    </source>
</evidence>
<evidence type="ECO:0000255" key="6">
    <source>
        <dbReference type="PROSITE-ProRule" id="PRU00159"/>
    </source>
</evidence>
<evidence type="ECO:0000255" key="7">
    <source>
        <dbReference type="PROSITE-ProRule" id="PRU00316"/>
    </source>
</evidence>
<evidence type="ECO:0000256" key="8">
    <source>
        <dbReference type="SAM" id="MobiDB-lite"/>
    </source>
</evidence>
<evidence type="ECO:0000269" key="9">
    <source>
    </source>
</evidence>
<evidence type="ECO:0000269" key="10">
    <source>
    </source>
</evidence>
<evidence type="ECO:0000269" key="11">
    <source>
    </source>
</evidence>
<evidence type="ECO:0000305" key="12"/>
<evidence type="ECO:0000312" key="13">
    <source>
        <dbReference type="EMBL" id="CAM23449.1"/>
    </source>
</evidence>
<evidence type="ECO:0000312" key="14">
    <source>
        <dbReference type="EMBL" id="CAM27059.1"/>
    </source>
</evidence>
<evidence type="ECO:0007744" key="15">
    <source>
    </source>
</evidence>
<evidence type="ECO:0007744" key="16">
    <source>
    </source>
</evidence>
<evidence type="ECO:0007744" key="17">
    <source>
    </source>
</evidence>
<evidence type="ECO:0007829" key="18">
    <source>
        <dbReference type="PDB" id="6YJ0"/>
    </source>
</evidence>